<feature type="chain" id="PRO_0000048497" description="Sodium channel protein type 5 subunit alpha">
    <location>
        <begin position="1"/>
        <end position="2016"/>
    </location>
</feature>
<feature type="topological domain" description="Cytoplasmic" evidence="117">
    <location>
        <begin position="1"/>
        <end position="129"/>
    </location>
</feature>
<feature type="transmembrane region" description="Helical; Name=S1 of repeat I" evidence="2">
    <location>
        <begin position="130"/>
        <end position="149"/>
    </location>
</feature>
<feature type="topological domain" description="Extracellular" evidence="117">
    <location>
        <begin position="150"/>
        <end position="157"/>
    </location>
</feature>
<feature type="transmembrane region" description="Helical; Name=S2 of repeat I" evidence="2">
    <location>
        <begin position="158"/>
        <end position="179"/>
    </location>
</feature>
<feature type="topological domain" description="Cytoplasmic" evidence="117">
    <location>
        <begin position="180"/>
        <end position="188"/>
    </location>
</feature>
<feature type="transmembrane region" description="Helical; Name=S3 of repeat I" evidence="2">
    <location>
        <begin position="189"/>
        <end position="209"/>
    </location>
</feature>
<feature type="topological domain" description="Extracellular" evidence="117">
    <location>
        <begin position="210"/>
        <end position="216"/>
    </location>
</feature>
<feature type="transmembrane region" description="Helical; Name=S4 of repeat I" evidence="2">
    <location>
        <begin position="217"/>
        <end position="236"/>
    </location>
</feature>
<feature type="topological domain" description="Cytoplasmic" evidence="117">
    <location>
        <begin position="237"/>
        <end position="249"/>
    </location>
</feature>
<feature type="transmembrane region" description="Helical; Name=S5 of repeat I" evidence="2">
    <location>
        <begin position="250"/>
        <end position="272"/>
    </location>
</feature>
<feature type="topological domain" description="Extracellular" evidence="117">
    <location>
        <begin position="273"/>
        <end position="357"/>
    </location>
</feature>
<feature type="intramembrane region" description="Pore-forming" evidence="2">
    <location>
        <begin position="358"/>
        <end position="378"/>
    </location>
</feature>
<feature type="topological domain" description="Extracellular" evidence="117">
    <location>
        <begin position="379"/>
        <end position="386"/>
    </location>
</feature>
<feature type="transmembrane region" description="Helical; Name=S6 of repeat I" evidence="2">
    <location>
        <begin position="387"/>
        <end position="413"/>
    </location>
</feature>
<feature type="topological domain" description="Cytoplasmic" evidence="117">
    <location>
        <begin position="414"/>
        <end position="719"/>
    </location>
</feature>
<feature type="transmembrane region" description="Helical; Name=S1 of repeat II" evidence="2">
    <location>
        <begin position="720"/>
        <end position="737"/>
    </location>
</feature>
<feature type="topological domain" description="Extracellular" evidence="117">
    <location>
        <begin position="738"/>
        <end position="746"/>
    </location>
</feature>
<feature type="transmembrane region" description="Helical; Name=S2 of repeat II" evidence="1">
    <location>
        <begin position="747"/>
        <end position="769"/>
    </location>
</feature>
<feature type="topological domain" description="Cytoplasmic" evidence="117">
    <location>
        <begin position="770"/>
        <end position="775"/>
    </location>
</feature>
<feature type="transmembrane region" description="Helical; Name=S3 of repeat II" evidence="1">
    <location>
        <begin position="776"/>
        <end position="796"/>
    </location>
</feature>
<feature type="topological domain" description="Extracellular" evidence="117">
    <location>
        <begin position="797"/>
        <end position="806"/>
    </location>
</feature>
<feature type="transmembrane region" description="Helical; Name=S4 of repeat II" evidence="2">
    <location>
        <begin position="807"/>
        <end position="821"/>
    </location>
</feature>
<feature type="topological domain" description="Cytoplasmic" evidence="117">
    <location>
        <begin position="822"/>
        <end position="838"/>
    </location>
</feature>
<feature type="transmembrane region" description="Helical; Name=S5 of repeat II" evidence="1">
    <location>
        <begin position="839"/>
        <end position="860"/>
    </location>
</feature>
<feature type="topological domain" description="Extracellular" evidence="117">
    <location>
        <begin position="861"/>
        <end position="884"/>
    </location>
</feature>
<feature type="intramembrane region" description="Pore-forming" evidence="2">
    <location>
        <begin position="885"/>
        <end position="903"/>
    </location>
</feature>
<feature type="topological domain" description="Extracellular" evidence="117">
    <location>
        <begin position="904"/>
        <end position="912"/>
    </location>
</feature>
<feature type="transmembrane region" description="Helical; Name=S6 of repeat II" evidence="1">
    <location>
        <begin position="913"/>
        <end position="941"/>
    </location>
</feature>
<feature type="topological domain" description="Cytoplasmic" evidence="117">
    <location>
        <begin position="942"/>
        <end position="1203"/>
    </location>
</feature>
<feature type="transmembrane region" description="Helical; Name=S1 of repeat III" evidence="1">
    <location>
        <begin position="1204"/>
        <end position="1225"/>
    </location>
</feature>
<feature type="topological domain" description="Extracellular" evidence="117">
    <location>
        <begin position="1226"/>
        <end position="1236"/>
    </location>
</feature>
<feature type="transmembrane region" description="Helical; Name=S2 of repeat III" evidence="1">
    <location>
        <begin position="1237"/>
        <end position="1259"/>
    </location>
</feature>
<feature type="topological domain" description="Cytoplasmic" evidence="117">
    <location>
        <begin position="1260"/>
        <end position="1268"/>
    </location>
</feature>
<feature type="transmembrane region" description="Helical; Name=S3 of repeat III" evidence="1">
    <location>
        <begin position="1269"/>
        <end position="1291"/>
    </location>
</feature>
<feature type="topological domain" description="Extracellular" evidence="117">
    <location>
        <begin position="1292"/>
        <end position="1297"/>
    </location>
</feature>
<feature type="transmembrane region" description="Helical; Name=S4 of repeat III" evidence="1">
    <location>
        <begin position="1298"/>
        <end position="1317"/>
    </location>
</feature>
<feature type="topological domain" description="Cytoplasmic" evidence="117">
    <location>
        <begin position="1318"/>
        <end position="1330"/>
    </location>
</feature>
<feature type="transmembrane region" description="Helical; Name=S5 of repeat III" evidence="1">
    <location>
        <begin position="1331"/>
        <end position="1355"/>
    </location>
</feature>
<feature type="topological domain" description="Extracellular" evidence="117">
    <location>
        <begin position="1356"/>
        <end position="1400"/>
    </location>
</feature>
<feature type="intramembrane region" description="Pore-forming" evidence="2">
    <location>
        <begin position="1401"/>
        <end position="1422"/>
    </location>
</feature>
<feature type="topological domain" description="Extracellular" evidence="117">
    <location>
        <begin position="1423"/>
        <end position="1445"/>
    </location>
</feature>
<feature type="transmembrane region" description="Helical; Name=S6 of repeat III" evidence="1">
    <location>
        <begin position="1446"/>
        <end position="1470"/>
    </location>
</feature>
<feature type="topological domain" description="Cytoplasmic" evidence="117">
    <location>
        <begin position="1471"/>
        <end position="1528"/>
    </location>
</feature>
<feature type="transmembrane region" description="Helical; Name=S1 of repeat IV" evidence="1">
    <location>
        <begin position="1529"/>
        <end position="1547"/>
    </location>
</feature>
<feature type="topological domain" description="Extracellular" evidence="117">
    <location>
        <begin position="1548"/>
        <end position="1558"/>
    </location>
</feature>
<feature type="transmembrane region" description="Helical; Name=S2 of repeat IV" evidence="1">
    <location>
        <begin position="1559"/>
        <end position="1580"/>
    </location>
</feature>
<feature type="topological domain" description="Cytoplasmic" evidence="117">
    <location>
        <begin position="1581"/>
        <end position="1589"/>
    </location>
</feature>
<feature type="transmembrane region" description="Helical; Name=S3 of repeat IV" evidence="1">
    <location>
        <begin position="1590"/>
        <end position="1612"/>
    </location>
</feature>
<feature type="topological domain" description="Extracellular" evidence="117">
    <location>
        <begin position="1613"/>
        <end position="1619"/>
    </location>
</feature>
<feature type="transmembrane region" description="Helical; Name=S4 of repeat IV" evidence="2">
    <location>
        <begin position="1620"/>
        <end position="1640"/>
    </location>
</feature>
<feature type="topological domain" description="Cytoplasmic" evidence="117">
    <location>
        <begin position="1641"/>
        <end position="1650"/>
    </location>
</feature>
<feature type="transmembrane region" description="Helical; Name=S5 of repeat IV" evidence="2">
    <location>
        <begin position="1651"/>
        <end position="1679"/>
    </location>
</feature>
<feature type="topological domain" description="Extracellular" evidence="117">
    <location>
        <begin position="1680"/>
        <end position="1697"/>
    </location>
</feature>
<feature type="intramembrane region" description="Pore-forming" evidence="2">
    <location>
        <begin position="1698"/>
        <end position="1714"/>
    </location>
</feature>
<feature type="topological domain" description="Extracellular" evidence="117">
    <location>
        <begin position="1715"/>
        <end position="1745"/>
    </location>
</feature>
<feature type="transmembrane region" description="Helical; Name=S6 of repeat IV" evidence="2">
    <location>
        <begin position="1746"/>
        <end position="1771"/>
    </location>
</feature>
<feature type="topological domain" description="Cytoplasmic" evidence="117">
    <location>
        <begin position="1772"/>
        <end position="2016"/>
    </location>
</feature>
<feature type="repeat" description="I" evidence="117">
    <location>
        <begin position="113"/>
        <end position="420"/>
    </location>
</feature>
<feature type="repeat" description="II" evidence="117">
    <location>
        <begin position="699"/>
        <end position="969"/>
    </location>
</feature>
<feature type="repeat" description="III" evidence="117">
    <location>
        <begin position="1187"/>
        <end position="1501"/>
    </location>
</feature>
<feature type="repeat" description="IV" evidence="117">
    <location>
        <begin position="1510"/>
        <end position="1807"/>
    </location>
</feature>
<feature type="domain" description="IQ" evidence="5">
    <location>
        <begin position="1901"/>
        <end position="1930"/>
    </location>
</feature>
<feature type="region of interest" description="Disordered" evidence="6">
    <location>
        <begin position="28"/>
        <end position="56"/>
    </location>
</feature>
<feature type="region of interest" description="Disordered" evidence="6">
    <location>
        <begin position="461"/>
        <end position="591"/>
    </location>
</feature>
<feature type="region of interest" description="Disordered" evidence="6">
    <location>
        <begin position="1005"/>
        <end position="1141"/>
    </location>
</feature>
<feature type="region of interest" description="Interaction with FGF13" evidence="89">
    <location>
        <begin position="1839"/>
        <end position="1901"/>
    </location>
</feature>
<feature type="region of interest" description="Disordered" evidence="6">
    <location>
        <begin position="1959"/>
        <end position="2016"/>
    </location>
</feature>
<feature type="region of interest" description="Interaction with NEDD4, NEDD4L and WWP2" evidence="46">
    <location>
        <begin position="1974"/>
        <end position="1977"/>
    </location>
</feature>
<feature type="compositionally biased region" description="Basic and acidic residues" evidence="6">
    <location>
        <begin position="41"/>
        <end position="52"/>
    </location>
</feature>
<feature type="compositionally biased region" description="Basic and acidic residues" evidence="6">
    <location>
        <begin position="491"/>
        <end position="503"/>
    </location>
</feature>
<feature type="compositionally biased region" description="Polar residues" evidence="6">
    <location>
        <begin position="509"/>
        <end position="528"/>
    </location>
</feature>
<feature type="compositionally biased region" description="Polar residues" evidence="6">
    <location>
        <begin position="570"/>
        <end position="580"/>
    </location>
</feature>
<feature type="compositionally biased region" description="Basic and acidic residues" evidence="6">
    <location>
        <begin position="1015"/>
        <end position="1030"/>
    </location>
</feature>
<feature type="compositionally biased region" description="Low complexity" evidence="6">
    <location>
        <begin position="1033"/>
        <end position="1044"/>
    </location>
</feature>
<feature type="compositionally biased region" description="Acidic residues" evidence="6">
    <location>
        <begin position="1054"/>
        <end position="1071"/>
    </location>
</feature>
<feature type="compositionally biased region" description="Low complexity" evidence="6">
    <location>
        <begin position="1096"/>
        <end position="1113"/>
    </location>
</feature>
<feature type="compositionally biased region" description="Low complexity" evidence="6">
    <location>
        <begin position="1959"/>
        <end position="1979"/>
    </location>
</feature>
<feature type="compositionally biased region" description="Polar residues" evidence="6">
    <location>
        <begin position="1981"/>
        <end position="1990"/>
    </location>
</feature>
<feature type="modified residue" description="Phosphoserine" evidence="92">
    <location>
        <position position="36"/>
    </location>
</feature>
<feature type="modified residue" description="Phosphothreonine" evidence="92">
    <location>
        <position position="38"/>
    </location>
</feature>
<feature type="modified residue" description="Phosphoserine" evidence="92">
    <location>
        <position position="457"/>
    </location>
</feature>
<feature type="modified residue" description="Phosphoserine" evidence="92">
    <location>
        <position position="460"/>
    </location>
</feature>
<feature type="modified residue" description="Phosphoserine" evidence="92">
    <location>
        <position position="483"/>
    </location>
</feature>
<feature type="modified residue" description="Phosphoserine" evidence="92">
    <location>
        <position position="484"/>
    </location>
</feature>
<feature type="modified residue" description="Phosphothreonine" evidence="2">
    <location>
        <position position="486"/>
    </location>
</feature>
<feature type="modified residue" description="Phosphoserine" evidence="92">
    <location>
        <position position="497"/>
    </location>
</feature>
<feature type="modified residue" description="Phosphoserine" evidence="92">
    <location>
        <position position="510"/>
    </location>
</feature>
<feature type="modified residue" description="Dimethylated arginine; alternate" evidence="87">
    <location>
        <position position="513"/>
    </location>
</feature>
<feature type="modified residue" description="Omega-N-methylarginine; alternate" evidence="87">
    <location>
        <position position="513"/>
    </location>
</feature>
<feature type="modified residue" description="Dimethylated arginine; alternate" evidence="87">
    <location>
        <position position="526"/>
    </location>
</feature>
<feature type="modified residue" description="Omega-N-methylarginine; alternate" evidence="87">
    <location>
        <position position="526"/>
    </location>
</feature>
<feature type="modified residue" description="Phosphoserine" evidence="3">
    <location>
        <position position="539"/>
    </location>
</feature>
<feature type="modified residue" description="Phosphoserine" evidence="92">
    <location>
        <position position="571"/>
    </location>
</feature>
<feature type="modified residue" description="Phosphoserine" evidence="92">
    <location>
        <position position="664"/>
    </location>
</feature>
<feature type="modified residue" description="Phosphoserine" evidence="92">
    <location>
        <position position="667"/>
    </location>
</feature>
<feature type="modified residue" description="Dimethylated arginine; alternate" evidence="87">
    <location>
        <position position="680"/>
    </location>
</feature>
<feature type="modified residue" description="Omega-N-methylarginine; alternate" evidence="87">
    <location>
        <position position="680"/>
    </location>
</feature>
<feature type="modified residue" description="Phosphoserine; by PKC" evidence="118">
    <location>
        <position position="1503"/>
    </location>
</feature>
<feature type="glycosylation site" description="N-linked (GlcNAc...) asparagine" evidence="4">
    <location>
        <position position="214"/>
    </location>
</feature>
<feature type="glycosylation site" description="N-linked (GlcNAc...) asparagine" evidence="4">
    <location>
        <position position="283"/>
    </location>
</feature>
<feature type="glycosylation site" description="N-linked (GlcNAc...) asparagine" evidence="4">
    <location>
        <position position="288"/>
    </location>
</feature>
<feature type="glycosylation site" description="N-linked (GlcNAc...) asparagine" evidence="4">
    <location>
        <position position="291"/>
    </location>
</feature>
<feature type="glycosylation site" description="N-linked (GlcNAc...) asparagine" evidence="2">
    <location>
        <position position="318"/>
    </location>
</feature>
<feature type="glycosylation site" description="N-linked (GlcNAc...) asparagine" evidence="4">
    <location>
        <position position="328"/>
    </location>
</feature>
<feature type="glycosylation site" description="N-linked (GlcNAc...) asparagine" evidence="4">
    <location>
        <position position="740"/>
    </location>
</feature>
<feature type="glycosylation site" description="N-linked (GlcNAc...) asparagine" evidence="4">
    <location>
        <position position="803"/>
    </location>
</feature>
<feature type="glycosylation site" description="N-linked (GlcNAc...) asparagine" evidence="4">
    <location>
        <position position="864"/>
    </location>
</feature>
<feature type="glycosylation site" description="N-linked (GlcNAc...) asparagine" evidence="4">
    <location>
        <position position="1365"/>
    </location>
</feature>
<feature type="glycosylation site" description="N-linked (GlcNAc...) asparagine" evidence="4">
    <location>
        <position position="1374"/>
    </location>
</feature>
<feature type="glycosylation site" description="N-linked (GlcNAc...) asparagine" evidence="4">
    <location>
        <position position="1380"/>
    </location>
</feature>
<feature type="glycosylation site" description="N-linked (GlcNAc...) asparagine" evidence="4">
    <location>
        <position position="1388"/>
    </location>
</feature>
<feature type="glycosylation site" description="N-linked (GlcNAc...) asparagine" evidence="4">
    <location>
        <position position="1736"/>
    </location>
</feature>
<feature type="disulfide bond" evidence="1">
    <location>
        <begin position="280"/>
        <end position="335"/>
    </location>
</feature>
<feature type="disulfide bond" evidence="1">
    <location>
        <begin position="906"/>
        <end position="915"/>
    </location>
</feature>
<feature type="splice variant" id="VSP_037477" description="In isoform 3, isoform 4, isoform 5 and isoform 6." evidence="114 115 116">
    <original>TTEFVD</original>
    <variation>VSENIK</variation>
    <location>
        <begin position="206"/>
        <end position="211"/>
    </location>
</feature>
<feature type="splice variant" id="VSP_037478" description="In isoform 2 and isoform 3." evidence="110 111 113 114">
    <location>
        <position position="1076"/>
    </location>
</feature>
<feature type="splice variant" id="VSP_037479" description="In isoform 5." evidence="115">
    <location>
        <begin position="1077"/>
        <end position="1130"/>
    </location>
</feature>
<feature type="splice variant" id="VSP_037480" description="In isoform 6." evidence="116">
    <location>
        <begin position="1416"/>
        <end position="1433"/>
    </location>
</feature>
<feature type="splice variant" id="VSP_037481" description="In isoform 3." evidence="114">
    <location>
        <begin position="1573"/>
        <end position="1604"/>
    </location>
</feature>
<feature type="sequence variant" id="VAR_036660" description="In LQT3; dbSNP:rs199473043." evidence="56">
    <original>G</original>
    <variation>V</variation>
    <location>
        <position position="9"/>
    </location>
</feature>
<feature type="sequence variant" id="VAR_074312" description="In BRGDA1 and LQT3; uncertain significance; dbSNP:rs41311087." evidence="82 83">
    <original>R</original>
    <variation>Q</variation>
    <location>
        <position position="18"/>
    </location>
</feature>
<feature type="sequence variant" id="VAR_068325" description="Rare variant; found in a patient with long QT syndrome; uncertain significance; dbSNP:rs199473044." evidence="48 83">
    <original>R</original>
    <variation>W</variation>
    <location>
        <position position="18"/>
    </location>
</feature>
<feature type="sequence variant" id="VAR_026341" description="In BRGDA1 and LQT3; dbSNP:rs199473045." evidence="25 82">
    <original>R</original>
    <variation>H</variation>
    <location>
        <position position="27"/>
    </location>
</feature>
<feature type="sequence variant" id="VAR_074695" description="In LQT3; uncertain significance; dbSNP:rs199473551." evidence="82">
    <original>E</original>
    <variation>G</variation>
    <location>
        <position position="30"/>
    </location>
</feature>
<feature type="sequence variant" id="VAR_026342" description="In dbSNP:rs6791924." evidence="26 65 83">
    <original>R</original>
    <variation>C</variation>
    <location>
        <position position="34"/>
    </location>
</feature>
<feature type="sequence variant" id="VAR_074313" description="In dbSNP:rs199473046." evidence="83">
    <original>R</original>
    <variation>H</variation>
    <location>
        <position position="34"/>
    </location>
</feature>
<feature type="sequence variant" id="VAR_055159" description="In LQT3; does not affect baseline kinetics of sodium currents; causes an unusual hyperpolarizing shift of the activation kinetics after lidocaine treatment; dbSNP:rs199473047." evidence="72 82">
    <original>R</original>
    <variation>Q</variation>
    <location>
        <position position="43"/>
    </location>
</feature>
<feature type="sequence variant" id="VAR_074696" description="In LQT3; uncertain significance; dbSNP:rs199473048." evidence="82">
    <original>E</original>
    <variation>K</variation>
    <location>
        <position position="48"/>
    </location>
</feature>
<feature type="sequence variant" id="VAR_074697" description="In LQT3; uncertain significance; dbSNP:rs199473553." evidence="82">
    <original>P</original>
    <variation>S</variation>
    <location>
        <position position="52"/>
    </location>
</feature>
<feature type="sequence variant" id="VAR_074698" description="In LQT3; uncertain significance; dbSNP:rs199473049." evidence="82">
    <original>R</original>
    <variation>Q</variation>
    <location>
        <position position="53"/>
    </location>
</feature>
<feature type="sequence variant" id="VAR_074314" description="In BRGDA1; uncertain significance; dbSNP:rs199473050." evidence="83">
    <original>N</original>
    <variation>K</variation>
    <location>
        <position position="70"/>
    </location>
</feature>
<feature type="sequence variant" id="VAR_074315" description="In BRGDA1; uncertain significance; dbSNP:rs199473051." evidence="83">
    <original>D</original>
    <variation>N</variation>
    <location>
        <position position="84"/>
    </location>
</feature>
<feature type="sequence variant" id="VAR_074316" description="In BRGDA1; uncertain significance; dbSNP:rs199473052." evidence="83">
    <original>F</original>
    <variation>S</variation>
    <location>
        <position position="93"/>
    </location>
</feature>
<feature type="sequence variant" id="VAR_074317" description="In BRGDA1; uncertain significance; dbSNP:rs199473053." evidence="83">
    <original>I</original>
    <variation>S</variation>
    <location>
        <position position="94"/>
    </location>
</feature>
<feature type="sequence variant" id="VAR_055160" description="In BRGDA1; dbSNP:rs199473054." evidence="58">
    <original>V</original>
    <variation>I</variation>
    <location>
        <position position="95"/>
    </location>
</feature>
<feature type="sequence variant" id="VAR_074699" description="In LQT3; uncertain significance; dbSNP:rs199473055." evidence="82">
    <original>R</original>
    <variation>G</variation>
    <location>
        <position position="104"/>
    </location>
</feature>
<feature type="sequence variant" id="VAR_074318" description="In BRGDA1; uncertain significance; dbSNP:rs199473554." evidence="83">
    <original>R</original>
    <variation>Q</variation>
    <location>
        <position position="104"/>
    </location>
</feature>
<feature type="sequence variant" id="VAR_074319" description="In BRGDA1; uncertain significance; dbSNP:rs199473055." evidence="83">
    <original>R</original>
    <variation>W</variation>
    <location>
        <position position="104"/>
    </location>
</feature>
<feature type="sequence variant" id="VAR_074320" description="In BRGDA1; uncertain significance; dbSNP:rs199473056." evidence="83">
    <original>N</original>
    <variation>K</variation>
    <location>
        <position position="109"/>
    </location>
</feature>
<feature type="sequence variant" id="VAR_074700" description="In LQT3; uncertain significance; dbSNP:rs199473057." evidence="82">
    <original>S</original>
    <variation>G</variation>
    <location>
        <position position="115"/>
    </location>
</feature>
<feature type="sequence variant" id="VAR_074321" description="In BRGDA1; uncertain significance; dbSNP:rs199473058." evidence="83">
    <original>R</original>
    <variation>Q</variation>
    <location>
        <position position="121"/>
    </location>
</feature>
<feature type="sequence variant" id="VAR_074322" description="In BRGDA1; uncertain significance; dbSNP:rs199473556." evidence="83">
    <original>R</original>
    <variation>W</variation>
    <location>
        <position position="121"/>
    </location>
</feature>
<feature type="sequence variant" id="VAR_068326" description="In LQT3; dbSNP:rs199473059." evidence="48 82">
    <original>V</original>
    <variation>L</variation>
    <location>
        <position position="125"/>
    </location>
</feature>
<feature type="sequence variant" id="VAR_026343" description="In BRGDA1; dbSNP:rs185492581." evidence="27 83">
    <original>K</original>
    <variation>E</variation>
    <location>
        <position position="126"/>
    </location>
</feature>
<feature type="sequence variant" id="VAR_074323" description="In BRGDA1; uncertain significance; dbSNP:rs199473557." evidence="83">
    <original>L</original>
    <variation>P</variation>
    <location>
        <position position="136"/>
    </location>
</feature>
<feature type="sequence variant" id="VAR_055161" description="In ATFB10; dbSNP:rs199473060." evidence="65">
    <original>M</original>
    <variation>I</variation>
    <location>
        <position position="138"/>
    </location>
</feature>
<feature type="sequence variant" id="VAR_074324" description="In BRGDA1; uncertain significance; dbSNP:rs199473061." evidence="83">
    <original>V</original>
    <variation>M</variation>
    <location>
        <position position="146"/>
    </location>
</feature>
<feature type="sequence variant" id="VAR_026344" description="In BRGDA1 and PFHB1A; dbSNP:rs199473062." evidence="28 78 83">
    <original>E</original>
    <variation>K</variation>
    <location>
        <position position="161"/>
    </location>
</feature>
<feature type="sequence variant" id="VAR_074325" description="In BRGDA1; uncertain significance; dbSNP:rs199473062." evidence="83">
    <original>E</original>
    <variation>Q</variation>
    <location>
        <position position="161"/>
    </location>
</feature>
<feature type="sequence variant" id="VAR_074326" description="In BRGDA1; uncertain significance; dbSNP:rs199473063." evidence="83">
    <original>K</original>
    <variation>N</variation>
    <location>
        <position position="175"/>
    </location>
</feature>
<feature type="sequence variant" id="VAR_074327" description="In BRGDA1; uncertain significance; dbSNP:rs199473065." evidence="83">
    <original>A</original>
    <variation>G</variation>
    <location>
        <position position="178"/>
    </location>
</feature>
<feature type="sequence variant" id="VAR_074328" description="In BRGDA1; uncertain significance; dbSNP:rs199473066." evidence="83">
    <original>C</original>
    <variation>R</variation>
    <location>
        <position position="182"/>
    </location>
</feature>
<feature type="sequence variant" id="VAR_074329" description="In BRGDA1; uncertain significance; dbSNP:rs199473067." evidence="83">
    <original>A</original>
    <variation>V</variation>
    <location>
        <position position="185"/>
    </location>
</feature>
<feature type="sequence variant" id="VAR_026345" description="In BRGDA1; loss of function; dbSNP:rs199473558." evidence="53">
    <original>T</original>
    <variation>I</variation>
    <location>
        <position position="187"/>
    </location>
</feature>
<feature type="sequence variant" id="VAR_074330" description="In BRGDA1; uncertain significance; dbSNP:rs199473559." evidence="83">
    <original>A</original>
    <variation>V</variation>
    <location>
        <position position="204"/>
    </location>
</feature>
<feature type="sequence variant" id="VAR_055162" description="In LQT3; dbSNP:rs199473070." evidence="82">
    <original>L</original>
    <variation>P</variation>
    <location>
        <position position="212"/>
    </location>
</feature>
<feature type="sequence variant" id="VAR_074331" description="In BRGDA1; uncertain significance; dbSNP:rs199473070." evidence="83">
    <original>L</original>
    <variation>Q</variation>
    <location>
        <position position="212"/>
    </location>
</feature>
<feature type="sequence variant" id="VAR_055163" description="In ATFB10 and BRGDA1; uncertain significance; dbSNP:rs41276525." evidence="65 83">
    <original>S</original>
    <variation>L</variation>
    <location>
        <position position="216"/>
    </location>
</feature>
<feature type="sequence variant" id="VAR_017670" description="In SSS1 and BRGDA1; dbSNP:rs45620037." evidence="40 83">
    <original>T</original>
    <variation>I</variation>
    <location>
        <position position="220"/>
    </location>
</feature>
<feature type="sequence variant" id="VAR_074332" description="In BRGDA1 and LQT3; dbSNP:rs45546039." evidence="82 83">
    <original>R</original>
    <variation>Q</variation>
    <location>
        <position position="222"/>
    </location>
</feature>
<feature type="sequence variant" id="VAR_074333" description="In BRGDA1; uncertain significance; dbSNP:rs199473560." evidence="83">
    <original>V</original>
    <variation>L</variation>
    <location>
        <position position="223"/>
    </location>
</feature>
<feature type="sequence variant" id="VAR_036661" description="In LQT3; dbSNP:rs199473071." evidence="56">
    <original>R</original>
    <variation>Q</variation>
    <location>
        <position position="225"/>
    </location>
</feature>
<feature type="sequence variant" id="VAR_055164" description="In PFHB1A, BRGDA1 and LQT3; dbSNP:rs199473072." evidence="36 82 83">
    <original>R</original>
    <variation>W</variation>
    <location>
        <position position="225"/>
    </location>
</feature>
<feature type="sequence variant" id="VAR_026346" description="In BRGDA1; dbSNP:rs199473561." evidence="25 83">
    <original>A</original>
    <variation>V</variation>
    <location>
        <position position="226"/>
    </location>
</feature>
<feature type="sequence variant" id="VAR_026347" description="In BRGDA1; dbSNP:rs199473074." evidence="25">
    <original>I</original>
    <variation>V</variation>
    <location>
        <position position="230"/>
    </location>
</feature>
<feature type="sequence variant" id="VAR_055165" description="In BRGDA1; uncertain significance; dbSNP:rs45471994." evidence="69 83">
    <original>V</original>
    <variation>I</variation>
    <location>
        <position position="232"/>
    </location>
</feature>
<feature type="sequence variant" id="VAR_074334" description="In BRGDA1 and LQT3; dbSNP:rs199473076." evidence="82 83">
    <original>V</original>
    <variation>M</variation>
    <location>
        <position position="240"/>
    </location>
</feature>
<feature type="sequence variant" id="VAR_068327" description="In LQT3; dbSNP:rs199473077." evidence="48">
    <original>Q</original>
    <variation>K</variation>
    <location>
        <position position="245"/>
    </location>
</feature>
<feature type="sequence variant" id="VAR_074701" description="In LQT3; uncertain significance; dbSNP:rs199473078." evidence="82">
    <original>V</original>
    <variation>L</variation>
    <location>
        <position position="247"/>
    </location>
</feature>
<feature type="sequence variant" id="VAR_074335" description="In BRGDA1; uncertain significance; dbSNP:rs199473079." evidence="83">
    <original>Q</original>
    <variation>K</variation>
    <location>
        <position position="270"/>
    </location>
</feature>
<feature type="sequence variant" id="VAR_074702" description="In LQT3; uncertain significance; dbSNP:rs199473080." evidence="82">
    <original>N</original>
    <variation>K</variation>
    <location>
        <position position="275"/>
    </location>
</feature>
<feature type="sequence variant" id="VAR_074336" description="In BRGDA1; uncertain significance; dbSNP:rs199473081." evidence="83">
    <original>L</original>
    <variation>Q</variation>
    <location>
        <position position="276"/>
    </location>
</feature>
<feature type="sequence variant" id="VAR_074337" description="In BRGDA1; uncertain significance; dbSNP:rs199473562." evidence="83">
    <original>H</original>
    <variation>D</variation>
    <location>
        <position position="278"/>
    </location>
</feature>
<feature type="sequence variant" id="VAR_074338" description="In BRGDA1; uncertain significance; dbSNP:rs199473082." evidence="83">
    <original>R</original>
    <variation>C</variation>
    <location>
        <position position="282"/>
    </location>
</feature>
<feature type="sequence variant" id="VAR_026348" description="In BRGDA1; dbSNP:rs199473083." evidence="25">
    <original>R</original>
    <variation>H</variation>
    <location>
        <position position="282"/>
    </location>
</feature>
<feature type="sequence variant" id="VAR_074339" description="In dbSNP:rs61746118." evidence="83">
    <original>A</original>
    <variation>S</variation>
    <location>
        <position position="286"/>
    </location>
</feature>
<feature type="sequence variant" id="VAR_074703" description="In LQT3; uncertain significance; dbSNP:rs199473084." evidence="82">
    <original>G</original>
    <variation>S</variation>
    <location>
        <position position="289"/>
    </location>
</feature>
<feature type="sequence variant" id="VAR_074340" description="In dbSNP:rs199473563." evidence="83">
    <original>N</original>
    <variation>S</variation>
    <location>
        <position position="291"/>
    </location>
</feature>
<feature type="sequence variant" id="VAR_026349" description="In BRGDA1; dbSNP:rs199473086." evidence="25">
    <original>V</original>
    <variation>M</variation>
    <location>
        <position position="294"/>
    </location>
</feature>
<feature type="sequence variant" id="VAR_017671" description="In PFHB1A; also in irritable bowel syndrome; results in reduction of whole cell current density and a delay in channel activation kinetics without a change in single-channel conductance; dbSNP:rs137854608." evidence="22 76">
    <original>G</original>
    <variation>S</variation>
    <location>
        <position position="298"/>
    </location>
</feature>
<feature type="sequence variant" id="VAR_074341" description="In dbSNP:rs199473087." evidence="83">
    <original>L</original>
    <variation>M</variation>
    <location>
        <position position="299"/>
    </location>
</feature>
<feature type="sequence variant" id="VAR_074342" description="In BRGDA1; uncertain significance; dbSNP:rs199473088." evidence="83">
    <original>V</original>
    <variation>I</variation>
    <location>
        <position position="300"/>
    </location>
</feature>
<feature type="sequence variant" id="VAR_074343" description="In BRGDA1; uncertain significance; dbSNP:rs199473564." evidence="83">
    <original>L</original>
    <variation>P</variation>
    <location>
        <position position="315"/>
    </location>
</feature>
<feature type="sequence variant" id="VAR_026350" description="In BRGDA1; dbSNP:rs199473090." evidence="25">
    <original>G</original>
    <variation>S</variation>
    <location>
        <position position="319"/>
    </location>
</feature>
<feature type="sequence variant" id="VAR_074344" description="In BRGDA1; uncertain significance; dbSNP:rs199473091." evidence="83">
    <original>T</original>
    <variation>N</variation>
    <location>
        <position position="320"/>
    </location>
</feature>
<feature type="sequence variant" id="VAR_055166" description="In BRGDA1; uncertain significance; dbSNP:rs199473092." evidence="83">
    <original>L</original>
    <variation>R</variation>
    <location>
        <position position="325"/>
    </location>
</feature>
<feature type="sequence variant" id="VAR_055167" description="In BRGDA1; severe reduction of sodium currents; dbSNP:rs199473093." evidence="57 83 109">
    <original>P</original>
    <variation>L</variation>
    <location>
        <position position="336"/>
    </location>
</feature>
<feature type="sequence variant" id="VAR_074704" description="In LQT3; uncertain significance; dbSNP:rs199473094." evidence="82">
    <original>R</original>
    <variation>W</variation>
    <location>
        <position position="340"/>
    </location>
</feature>
<feature type="sequence variant" id="VAR_074345" description="In BRGDA1; uncertain significance; dbSNP:rs199473095." evidence="83">
    <original>G</original>
    <variation>D</variation>
    <location>
        <position position="351"/>
    </location>
</feature>
<feature type="sequence variant" id="VAR_026351" description="In BRGDA1; 7-fold current reduction; dbSNP:rs199473095." evidence="27 83">
    <original>G</original>
    <variation>V</variation>
    <location>
        <position position="351"/>
    </location>
</feature>
<feature type="sequence variant" id="VAR_055168" description="In BRGDA1; dbSNP:rs199473096." evidence="59">
    <original>T</original>
    <variation>I</variation>
    <location>
        <position position="353"/>
    </location>
</feature>
<feature type="sequence variant" id="VAR_026352" description="In BRGDA1; loss of function; dbSNP:rs199473565." evidence="53 83">
    <original>D</original>
    <variation>N</variation>
    <location>
        <position position="356"/>
    </location>
</feature>
<feature type="sequence variant" id="VAR_026353" description="In BRGDA1 and LQT3; express no current; dbSNP:rs199473097." evidence="28 78 82 83">
    <original>R</original>
    <variation>C</variation>
    <location>
        <position position="367"/>
    </location>
</feature>
<feature type="sequence variant" id="VAR_017672" description="In BRGDA1; express no current; dbSNP:rs28937318." evidence="23 78 83">
    <original>R</original>
    <variation>H</variation>
    <location>
        <position position="367"/>
    </location>
</feature>
<feature type="sequence variant" id="VAR_074346" description="In BRGDA1; uncertain significance; dbSNP:rs28937318." evidence="83">
    <original>R</original>
    <variation>L</variation>
    <location>
        <position position="367"/>
    </location>
</feature>
<feature type="sequence variant" id="VAR_026354" description="In BRGDA1; dbSNP:rs199473098." evidence="28 83">
    <original>M</original>
    <variation>K</variation>
    <location>
        <position position="369"/>
    </location>
</feature>
<feature type="sequence variant" id="VAR_074705" description="In LQT3; uncertain significance; dbSNP:rs199473099." evidence="82">
    <original>T</original>
    <variation>M</variation>
    <location>
        <position position="370"/>
    </location>
</feature>
<feature type="sequence variant" id="VAR_074347" description="In BRGDA1; uncertain significance; dbSNP:rs199473566." evidence="83">
    <original>W</original>
    <variation>G</variation>
    <location>
        <position position="374"/>
    </location>
</feature>
<feature type="sequence variant" id="VAR_074348" description="In dbSNP:rs199473100." evidence="83">
    <original>R</original>
    <variation>C</variation>
    <location>
        <position position="376"/>
    </location>
</feature>
<feature type="sequence variant" id="VAR_055169" description="In BRGDA1 and ATFB10; uncertain significance; dbSNP:rs199473101." evidence="65 83">
    <original>R</original>
    <variation>H</variation>
    <location>
        <position position="376"/>
    </location>
</feature>
<feature type="sequence variant" id="VAR_074349" description="In BRGDA1; uncertain significance; dbSNP:rs199473567." evidence="83">
    <original>G</original>
    <variation>E</variation>
    <location>
        <position position="386"/>
    </location>
</feature>
<feature type="sequence variant" id="VAR_074350" description="In BRGDA1; uncertain significance; dbSNP:rs199473102." evidence="83">
    <original>G</original>
    <variation>R</variation>
    <location>
        <position position="386"/>
    </location>
</feature>
<feature type="sequence variant" id="VAR_026355" description="In BRGDA1." evidence="25">
    <location>
        <position position="393"/>
    </location>
</feature>
<feature type="sequence variant" id="VAR_074351" description="In BRGDA1; uncertain significance; dbSNP:rs199473103." evidence="83">
    <original>V</original>
    <variation>A</variation>
    <location>
        <position position="396"/>
    </location>
</feature>
<feature type="sequence variant" id="VAR_074352" description="In BRGDA1; uncertain significance; dbSNP:rs199473104." evidence="83">
    <original>V</original>
    <variation>L</variation>
    <location>
        <position position="396"/>
    </location>
</feature>
<feature type="sequence variant" id="VAR_074706" description="In LQT3; uncertain significance; dbSNP:rs199473105." evidence="82">
    <original>I</original>
    <variation>T</variation>
    <location>
        <position position="397"/>
    </location>
</feature>
<feature type="sequence variant" id="VAR_068328" description="In LQT3; dbSNP:rs199473107." evidence="48">
    <original>L</original>
    <variation>Q</variation>
    <location>
        <position position="404"/>
    </location>
</feature>
<feature type="sequence variant" id="VAR_055170" description="In LQT3; dbSNP:rs199473108." evidence="48 82">
    <original>N</original>
    <variation>K</variation>
    <location>
        <position position="406"/>
    </location>
</feature>
<feature type="sequence variant" id="VAR_055171" description="In BRGDA1; dbSNP:rs199473568." evidence="75">
    <original>N</original>
    <variation>S</variation>
    <location>
        <position position="406"/>
    </location>
</feature>
<feature type="sequence variant" id="VAR_074707" description="In LQT3; uncertain significance; dbSNP:rs199473109." evidence="82">
    <original>L</original>
    <variation>V</variation>
    <location>
        <position position="409"/>
    </location>
</feature>
<feature type="sequence variant" id="VAR_068329" description="In LQT3; dbSNP:rs72549410." evidence="48 82">
    <original>V</original>
    <variation>M</variation>
    <location>
        <position position="411"/>
    </location>
</feature>
<feature type="sequence variant" id="VAR_074708" description="In LQT3; uncertain significance; dbSNP:rs199473569." evidence="54">
    <original>A</original>
    <variation>E</variation>
    <location>
        <position position="413"/>
    </location>
</feature>
<feature type="sequence variant" id="VAR_074709" description="In LQT3; uncertain significance; dbSNP:rs199473110." evidence="54">
    <original>A</original>
    <variation>T</variation>
    <location>
        <position position="413"/>
    </location>
</feature>
<feature type="sequence variant" id="VAR_055172" description="In ATFB10; dbSNP:rs199473111." evidence="65">
    <original>E</original>
    <variation>K</variation>
    <location>
        <position position="428"/>
    </location>
</feature>
<feature type="sequence variant" id="VAR_074710" description="In LQT3; uncertain significance; dbSNP:rs761375502." evidence="82">
    <location>
        <position position="429"/>
    </location>
</feature>
<feature type="sequence variant" id="VAR_074353" description="In BRGDA1; uncertain significance; dbSNP:rs199473570." evidence="83">
    <original>E</original>
    <variation>K</variation>
    <location>
        <position position="439"/>
    </location>
</feature>
<feature type="sequence variant" id="VAR_055173" description="In ATFB10; dbSNP:rs199473112." evidence="65">
    <original>H</original>
    <variation>D</variation>
    <location>
        <position position="445"/>
    </location>
</feature>
<feature type="sequence variant" id="VAR_074354" description="In dbSNP:rs199473113." evidence="83">
    <original>A</original>
    <variation>G</variation>
    <location>
        <position position="447"/>
    </location>
</feature>
<feature type="sequence variant" id="VAR_074355" description="In dbSNP:rs199473571." evidence="83">
    <original>T</original>
    <variation>A</variation>
    <location>
        <position position="449"/>
    </location>
</feature>
<feature type="sequence variant" id="VAR_055174" description="In dbSNP:rs41313697." evidence="65 83">
    <original>L</original>
    <variation>V</variation>
    <location>
        <position position="461"/>
    </location>
</feature>
<feature type="sequence variant" id="VAR_074711" description="In LQT3; uncertain significance; dbSNP:rs199473114." evidence="82">
    <original>E</original>
    <variation>A</variation>
    <location>
        <position position="462"/>
    </location>
</feature>
<feature type="sequence variant" id="VAR_068330" description="In LQT3; dbSNP:rs199473572." evidence="48">
    <original>E</original>
    <variation>K</variation>
    <location>
        <position position="462"/>
    </location>
</feature>
<feature type="sequence variant" id="VAR_055175" description="In ATFB10; dbSNP:rs199473115." evidence="65">
    <original>N</original>
    <variation>K</variation>
    <location>
        <position position="470"/>
    </location>
</feature>
<feature type="sequence variant" id="VAR_074356" description="In dbSNP:rs199473116." evidence="83">
    <original>R</original>
    <variation>S</variation>
    <location>
        <position position="475"/>
    </location>
</feature>
<feature type="sequence variant" id="VAR_055176" description="In dbSNP:rs144511230." evidence="65 83">
    <original>R</original>
    <variation>W</variation>
    <location>
        <position position="481"/>
    </location>
</feature>
<feature type="sequence variant" id="VAR_074357" description="In BRGDA1; uncertain significance; dbSNP:rs199473117." evidence="83">
    <original>D</original>
    <variation>G</variation>
    <location>
        <position position="501"/>
    </location>
</feature>
<feature type="sequence variant" id="VAR_036662" description="In PFHB1A; voltage-dependent activation and inactivation of the I-512 channel is shifted negatively by 8 to 9 mV and had enhanced slow activation and slower recovery from inactivation compared to the wild-type channel; the double mutant R-558/I-512 channel shows that R-558 eliminates the negative shift induced by I-512 but only partially restores the kinetic abnormalities; dbSNP:rs199473118." evidence="35">
    <original>T</original>
    <variation>I</variation>
    <location>
        <position position="512"/>
    </location>
</feature>
<feature type="sequence variant" id="VAR_017673" description="In BRGDA1 and PFHB1A; dbSNP:rs137854606." evidence="17 78">
    <original>G</original>
    <variation>C</variation>
    <location>
        <position position="514"/>
    </location>
</feature>
<feature type="sequence variant" id="VAR_036663" description="In dbSNP:rs41313691." evidence="65 83">
    <original>S</original>
    <variation>Y</variation>
    <location>
        <position position="524"/>
    </location>
</feature>
<feature type="sequence variant" id="VAR_074358" description="In BRGDA1; uncertain significance; dbSNP:rs45627438." evidence="83">
    <original>R</original>
    <variation>H</variation>
    <location>
        <position position="526"/>
    </location>
</feature>
<feature type="sequence variant" id="VAR_074712" description="In LQT3; uncertain significance; dbSNP:rs199473120." evidence="82">
    <original>F</original>
    <variation>V</variation>
    <location>
        <position position="530"/>
    </location>
</feature>
<feature type="sequence variant" id="VAR_055177" description="In SIDS and BRGDA1; dbSNP:rs199473573." evidence="68 83">
    <original>F</original>
    <variation>C</variation>
    <location>
        <position position="532"/>
    </location>
</feature>
<feature type="sequence variant" id="VAR_074713" description="In LQT3; uncertain significance; dbSNP:rs199473121." evidence="82">
    <original>R</original>
    <variation>Q</variation>
    <location>
        <position position="535"/>
    </location>
</feature>
<feature type="sequence variant" id="VAR_074359" description="In BRGDA1; uncertain significance; dbSNP:rs199473122." evidence="83">
    <original>F</original>
    <variation>L</variation>
    <location>
        <position position="543"/>
    </location>
</feature>
<feature type="sequence variant" id="VAR_026356" description="In BRGDA1; dbSNP:rs3918389." evidence="31 38 55 83">
    <original>G</original>
    <variation>R</variation>
    <location>
        <position position="552"/>
    </location>
</feature>
<feature type="sequence variant" id="VAR_008955" description="Channels properties are similar to wild-type; the double mutant R-558/I-512 channel shows that R-558 eliminates the negative shift induced by Ile-512 but only partially restores the kinetic abnormalities; can modulate the gating defects caused by Ala-2006 and other mutations; dbSNP:rs1805124." evidence="26 27 32 35 39 45 64 65 83 84 91">
    <original>H</original>
    <variation>R</variation>
    <location>
        <position position="558"/>
    </location>
</feature>
<feature type="sequence variant" id="VAR_026357" description="In BRGDA1; dbSNP:rs199473124." evidence="25">
    <original>L</original>
    <variation>Q</variation>
    <location>
        <position position="567"/>
    </location>
</feature>
<feature type="sequence variant" id="VAR_074360" description="In dbSNP:rs199473125." evidence="83">
    <original>R</original>
    <variation>H</variation>
    <location>
        <position position="568"/>
    </location>
</feature>
<feature type="sequence variant" id="VAR_074714" description="In LQT3; uncertain significance; dbSNP:rs199473576." evidence="82">
    <original>R</original>
    <variation>W</variation>
    <location>
        <position position="569"/>
    </location>
</feature>
<feature type="sequence variant" id="VAR_074715" description="In LQT3; uncertain significance; dbSNP:rs199473126." evidence="82">
    <original>S</original>
    <variation>I</variation>
    <location>
        <position position="571"/>
    </location>
</feature>
<feature type="sequence variant" id="VAR_055178" description="In LQT3 and ATFB10; likely benign; dbSNP:rs36210423." evidence="48 65">
    <original>A</original>
    <variation>D</variation>
    <location>
        <position position="572"/>
    </location>
</feature>
<feature type="sequence variant" id="VAR_074716" description="In LQT3; uncertain significance; dbSNP:rs184442491." evidence="82">
    <original>A</original>
    <variation>S</variation>
    <location>
        <position position="572"/>
    </location>
</feature>
<feature type="sequence variant" id="VAR_074717" description="In LQT3; uncertain significance; dbSNP:rs36210423." evidence="82">
    <original>A</original>
    <variation>V</variation>
    <location>
        <position position="572"/>
    </location>
</feature>
<feature type="sequence variant" id="VAR_074718" description="In LQT3; uncertain significance; dbSNP:rs199473127." evidence="54">
    <original>Q</original>
    <variation>E</variation>
    <location>
        <position position="573"/>
    </location>
</feature>
<feature type="sequence variant" id="VAR_074361" description="In LQT3; uncertain significance; dbSNP:rs199473128." evidence="54 83">
    <original>G</original>
    <variation>R</variation>
    <location>
        <position position="579"/>
    </location>
</feature>
<feature type="sequence variant" id="VAR_055179" description="In LQT3; uncertain significance." evidence="82">
    <location>
        <begin position="586"/>
        <end position="587"/>
    </location>
</feature>
<feature type="sequence variant" id="VAR_074362" description="In dbSNP:rs199473130." evidence="83">
    <original>N</original>
    <variation>K</variation>
    <location>
        <position position="592"/>
    </location>
</feature>
<feature type="sequence variant" id="VAR_074363" description="In dbSNP:rs199473131." evidence="83">
    <original>D</original>
    <variation>G</variation>
    <location>
        <position position="596"/>
    </location>
</feature>
<feature type="sequence variant" id="VAR_074364" description="In dbSNP:rs199473132." evidence="83">
    <original>V</original>
    <variation>A</variation>
    <location>
        <position position="601"/>
    </location>
</feature>
<feature type="sequence variant" id="VAR_026358" description="In LQT3 and BRGDA1; drug-induced LQT syndrome; dbSNP:rs12720452." evidence="26 48 82 83">
    <original>G</original>
    <variation>E</variation>
    <location>
        <position position="615"/>
    </location>
</feature>
<feature type="sequence variant" id="VAR_047360" description="In dbSNP:rs45488304." evidence="48 65 83">
    <original>L</original>
    <variation>F</variation>
    <location>
        <position position="618"/>
    </location>
</feature>
<feature type="sequence variant" id="VAR_015682" description="In LQT3 and BRGDA1; dbSNP:rs199473133." evidence="26 37 83">
    <original>L</original>
    <variation>F</variation>
    <location>
        <position position="619"/>
    </location>
</feature>
<feature type="sequence variant" id="VAR_074365" description="In BRGDA1; uncertain significance; dbSNP:rs199473577." evidence="83">
    <original>R</original>
    <variation>C</variation>
    <location>
        <position position="620"/>
    </location>
</feature>
<feature type="sequence variant" id="VAR_074366" description="In BRGDA1; uncertain significance; dbSNP:rs199473134." evidence="83">
    <original>T</original>
    <variation>M</variation>
    <location>
        <position position="632"/>
    </location>
</feature>
<feature type="sequence variant" id="VAR_068331" description="In LQT3; dbSNP:rs199473135." evidence="48">
    <original>P</original>
    <variation>L</variation>
    <location>
        <position position="637"/>
    </location>
</feature>
<feature type="sequence variant" id="VAR_074367" description="In dbSNP:rs199473578." evidence="83">
    <original>G</original>
    <variation>D</variation>
    <location>
        <position position="638"/>
    </location>
</feature>
<feature type="sequence variant" id="VAR_036664" description="In LQT3; dbSNP:rs199473136." evidence="56 82">
    <original>G</original>
    <variation>R</variation>
    <location>
        <position position="639"/>
    </location>
</feature>
<feature type="sequence variant" id="VAR_074368" description="In BRGDA1; uncertain significance; dbSNP:rs199473137." evidence="83">
    <original>P</original>
    <variation>A</variation>
    <location>
        <position position="640"/>
    </location>
</feature>
<feature type="sequence variant" id="VAR_074369" description="In BRGDA1; uncertain significance; dbSNP:rs185638763." evidence="83">
    <original>A</original>
    <variation>D</variation>
    <location>
        <position position="647"/>
    </location>
</feature>
<feature type="sequence variant" id="VAR_068332" description="In LQT3 and BRGDA1; dbSNP:rs45609733." evidence="48 83">
    <original>P</original>
    <variation>L</variation>
    <location>
        <position position="648"/>
    </location>
</feature>
<feature type="sequence variant" id="VAR_074719" description="In LQT3; uncertain significance; dbSNP:rs199473138." evidence="82">
    <original>E</original>
    <variation>K</variation>
    <location>
        <position position="654"/>
    </location>
</feature>
<feature type="sequence variant" id="VAR_055180" description="In ATFB10; dbSNP:rs199473579." evidence="65">
    <original>E</original>
    <variation>K</variation>
    <location>
        <position position="655"/>
    </location>
</feature>
<feature type="sequence variant" id="VAR_074370" description="In dbSNP:rs41313681." evidence="83">
    <original>P</original>
    <variation>L</variation>
    <location>
        <position position="656"/>
    </location>
</feature>
<feature type="sequence variant" id="VAR_074371" description="In BRGDA1; uncertain significance; dbSNP:rs199473139." evidence="83">
    <original>R</original>
    <variation>W</variation>
    <location>
        <position position="661"/>
    </location>
</feature>
<feature type="sequence variant" id="VAR_074372" description="In dbSNP:rs199473140." evidence="83">
    <original>A</original>
    <variation>T</variation>
    <location>
        <position position="672"/>
    </location>
</feature>
<feature type="sequence variant" id="VAR_074720" description="In LQT3; uncertain significance; dbSNP:rs199473141." evidence="82">
    <original>L</original>
    <variation>P</variation>
    <location>
        <position position="673"/>
    </location>
</feature>
<feature type="sequence variant" id="VAR_055181" description="In LQT3; dbSNP:rs199473142." evidence="75">
    <original>R</original>
    <variation>H</variation>
    <location>
        <position position="680"/>
    </location>
</feature>
<feature type="sequence variant" id="VAR_026359" description="In BRGDA1; dbSNP:rs199473143." evidence="25">
    <original>H</original>
    <variation>P</variation>
    <location>
        <position position="681"/>
    </location>
</feature>
<feature type="sequence variant" id="VAR_074373" description="In BRGDA1; uncertain significance; dbSNP:rs199473144." evidence="83">
    <original>C</original>
    <variation>G</variation>
    <location>
        <position position="683"/>
    </location>
</feature>
<feature type="sequence variant" id="VAR_074721" description="In LQT3; uncertain significance; dbSNP:rs199473580." evidence="82">
    <original>R</original>
    <variation>C</variation>
    <location>
        <position position="689"/>
    </location>
</feature>
<feature type="sequence variant" id="VAR_074374" description="In LQT3; uncertain significance; dbSNP:rs199473145." evidence="54 83">
    <original>R</original>
    <variation>H</variation>
    <location>
        <position position="689"/>
    </location>
</feature>
<feature type="sequence variant" id="VAR_074375" description="In dbSNP:rs45553235." evidence="83">
    <original>Q</original>
    <variation>K</variation>
    <location>
        <position position="692"/>
    </location>
</feature>
<feature type="sequence variant" id="VAR_074376" description="In BRGDA1 and LQT3; dbSNP:rs199473147." evidence="82 83">
    <original>P</original>
    <variation>L</variation>
    <location>
        <position position="701"/>
    </location>
</feature>
<feature type="sequence variant" id="VAR_074377" description="In dbSNP:rs199473148." evidence="83">
    <original>S</original>
    <variation>F</variation>
    <location>
        <position position="705"/>
    </location>
</feature>
<feature type="sequence variant" id="VAR_074378" description="In BRGDA1; uncertain significance; dbSNP:rs199473149." evidence="83">
    <original>P</original>
    <variation>L</variation>
    <location>
        <position position="717"/>
    </location>
</feature>
<feature type="sequence variant" id="VAR_074722" description="In LQT3; uncertain significance; dbSNP:rs199473150." evidence="82">
    <original>T</original>
    <variation>I</variation>
    <location>
        <position position="731"/>
    </location>
</feature>
<feature type="sequence variant" id="VAR_026360" description="In BRGDA1; dbSNP:rs137854611." evidence="25">
    <original>A</original>
    <variation>E</variation>
    <location>
        <position position="735"/>
    </location>
</feature>
<feature type="sequence variant" id="VAR_017674" description="In BRGDA1 and SSS1; expresses currents with steady state activation voltage shifted to more positive potentials and exhibit reduced sodium channel current at the end of phase I of the action potential; dbSNP:rs137854611." evidence="23 83 90">
    <original>A</original>
    <variation>V</variation>
    <location>
        <position position="735"/>
    </location>
</feature>
<feature type="sequence variant" id="VAR_074379" description="In BRGDA1; uncertain significance; dbSNP:rs199473582." evidence="83">
    <original>E</original>
    <variation>K</variation>
    <location>
        <position position="746"/>
    </location>
</feature>
<feature type="sequence variant" id="VAR_074723" description="In LQT3; uncertain significance; dbSNP:rs199473152." evidence="82">
    <original>Q</original>
    <variation>R</variation>
    <location>
        <position position="750"/>
    </location>
</feature>
<feature type="sequence variant" id="VAR_026361" description="In BRGDA1 and PFHB1A; dbSNP:rs199473153." evidence="28 78 83">
    <original>G</original>
    <variation>R</variation>
    <location>
        <position position="752"/>
    </location>
</feature>
<feature type="sequence variant" id="VAR_074380" description="In BRGDA1; uncertain significance; dbSNP:rs199473154." evidence="83">
    <original>G</original>
    <variation>E</variation>
    <location>
        <position position="758"/>
    </location>
</feature>
<feature type="sequence variant" id="VAR_074381" description="In BRGDA1; uncertain significance; dbSNP:rs199473156." evidence="83">
    <original>M</original>
    <variation>R</variation>
    <location>
        <position position="764"/>
    </location>
</feature>
<feature type="sequence variant" id="VAR_074382" description="In BRGDA1 and LQT3; dbSNP:rs199473157." evidence="82 83">
    <original>D</original>
    <variation>N</variation>
    <location>
        <position position="772"/>
    </location>
</feature>
<feature type="sequence variant" id="VAR_074383" description="In BRGDA1; uncertain significance; dbSNP:rs199473158." evidence="83">
    <original>P</original>
    <variation>S</variation>
    <location>
        <position position="773"/>
    </location>
</feature>
<feature type="sequence variant" id="VAR_074384" description="In BRGDA1; uncertain significance; dbSNP:rs199473159." evidence="83">
    <original>V</original>
    <variation>I</variation>
    <location>
        <position position="789"/>
    </location>
</feature>
<feature type="sequence variant" id="VAR_074385" description="In BRGDA1; uncertain significance; dbSNP:rs199473160." evidence="83">
    <original>R</original>
    <variation>P</variation>
    <location>
        <position position="808"/>
    </location>
</feature>
<feature type="sequence variant" id="VAR_076555" description="In BRGDA1; decreased protein abundance; retained intracellularly; decreased voltage-gated sodium channel activity; hyperpolarizing shift of the voltage dependence of inactivation leading to reduced sodium window current; no dominant negative effect." evidence="97">
    <original>L</original>
    <variation>Q</variation>
    <location>
        <position position="812"/>
    </location>
</feature>
<feature type="sequence variant" id="VAR_055182" description="In BRGDA1; dbSNP:rs199473584." evidence="75">
    <original>R</original>
    <variation>Q</variation>
    <location>
        <position position="814"/>
    </location>
</feature>
<feature type="sequence variant" id="VAR_074724" description="In LQT3; uncertain significance; dbSNP:rs199473162." evidence="82">
    <original>F</original>
    <variation>Y</variation>
    <location>
        <position position="816"/>
    </location>
</feature>
<feature type="sequence variant" id="VAR_076556" description="In BRGDA1; no effect on localization to the plasma membrane; decreased voltage-gated sodium channel activity; shift in the voltage dependence of activation and changed recovery from inactivation." evidence="100">
    <original>K</original>
    <variation>E</variation>
    <location>
        <position position="817"/>
    </location>
</feature>
<feature type="sequence variant" id="VAR_074386" description="In BRGDA1; uncertain significance; dbSNP:rs199473164." evidence="83">
    <original>L</original>
    <variation>P</variation>
    <location>
        <position position="839"/>
    </location>
</feature>
<feature type="sequence variant" id="VAR_074725" description="In LQT3; uncertain significance; dbSNP:rs199473166." evidence="82">
    <original>I</original>
    <variation>F</variation>
    <location>
        <position position="848"/>
    </location>
</feature>
<feature type="sequence variant" id="VAR_026362" description="In BRGDA1; dbSNP:rs199473586." evidence="25 83">
    <original>F</original>
    <variation>L</variation>
    <location>
        <position position="851"/>
    </location>
</feature>
<feature type="sequence variant" id="VAR_074387" description="In BRGDA1; uncertain significance; dbSNP:rs199473167." evidence="83">
    <original>E</original>
    <variation>Q</variation>
    <location>
        <position position="867"/>
    </location>
</feature>
<feature type="sequence variant" id="VAR_055183" description="In BRGDA1; dbSNP:rs199473168." evidence="70 83">
    <original>R</original>
    <variation>C</variation>
    <location>
        <position position="878"/>
    </location>
</feature>
<feature type="sequence variant" id="VAR_074388" description="In BRGDA1; uncertain significance; dbSNP:rs199473587." evidence="83">
    <original>R</original>
    <variation>H</variation>
    <location>
        <position position="878"/>
    </location>
</feature>
<feature type="sequence variant" id="VAR_074389" description="In BRGDA1; uncertain significance; dbSNP:rs199473169." evidence="83">
    <original>H</original>
    <variation>P</variation>
    <location>
        <position position="886"/>
    </location>
</feature>
<feature type="sequence variant" id="VAR_026363" description="In BRGDA1; dbSNP:rs199473170." evidence="25">
    <original>F</original>
    <variation>I</variation>
    <location>
        <position position="892"/>
    </location>
</feature>
<feature type="sequence variant" id="VAR_074390" description="In BRGDA1; uncertain significance; dbSNP:rs199473171." evidence="83">
    <original>R</original>
    <variation>C</variation>
    <location>
        <position position="893"/>
    </location>
</feature>
<feature type="sequence variant" id="VAR_074391" description="In BRGDA1; uncertain significance; dbSNP:rs199473172." evidence="83">
    <original>R</original>
    <variation>H</variation>
    <location>
        <position position="893"/>
    </location>
</feature>
<feature type="sequence variant" id="VAR_026364" description="In BRGDA1; dbSNP:rs199473173." evidence="25">
    <original>C</original>
    <variation>S</variation>
    <location>
        <position position="896"/>
    </location>
</feature>
<feature type="sequence variant" id="VAR_074392" description="In BRGDA1; uncertain significance; dbSNP:rs199473174." evidence="83">
    <original>E</original>
    <variation>K</variation>
    <location>
        <position position="901"/>
    </location>
</feature>
<feature type="sequence variant" id="VAR_026365" description="In BRGDA1; dbSNP:rs199473175." evidence="25 83">
    <original>S</original>
    <variation>L</variation>
    <location>
        <position position="910"/>
    </location>
</feature>
<feature type="sequence variant" id="VAR_074393" description="In BRGDA1; uncertain significance; dbSNP:rs199473588." evidence="83">
    <original>C</original>
    <variation>R</variation>
    <location>
        <position position="915"/>
    </location>
</feature>
<feature type="sequence variant" id="VAR_074394" description="In BRGDA1; uncertain significance; dbSNP:rs199473176." evidence="83">
    <original>L</original>
    <variation>R</variation>
    <location>
        <position position="917"/>
    </location>
</feature>
<feature type="sequence variant" id="VAR_074395" description="In dbSNP:rs199473177." evidence="83">
    <original>V</original>
    <variation>I</variation>
    <location>
        <position position="924"/>
    </location>
</feature>
<feature type="sequence variant" id="VAR_074396" description="In BRGDA1; uncertain significance; dbSNP:rs199473589." evidence="83">
    <original>N</original>
    <variation>S</variation>
    <location>
        <position position="927"/>
    </location>
</feature>
<feature type="sequence variant" id="VAR_074397" description="In BRGDA1; uncertain significance; dbSNP:rs199473178." evidence="83">
    <original>L</original>
    <variation>P</variation>
    <location>
        <position position="928"/>
    </location>
</feature>
<feature type="sequence variant" id="VAR_074398" description="In BRGDA1; uncertain significance; dbSNP:rs199473179." evidence="83">
    <original>L</original>
    <variation>P</variation>
    <location>
        <position position="935"/>
    </location>
</feature>
<feature type="sequence variant" id="VAR_017675" description="In LQT3; also in SIDS; dbSNP:rs137854605." evidence="14">
    <original>S</original>
    <variation>N</variation>
    <location>
        <position position="941"/>
    </location>
</feature>
<feature type="sequence variant" id="VAR_074726" description="In LQT3; uncertain significance; dbSNP:rs199473590." evidence="82">
    <original>Q</original>
    <variation>K</variation>
    <location>
        <position position="960"/>
    </location>
</feature>
<feature type="sequence variant" id="VAR_026366" description="In BRGDA1; steady state inactivation shifted to a more negative potential; slower recovery from inactivation; dbSNP:rs199473180." evidence="25 79 83">
    <original>R</original>
    <variation>C</variation>
    <location>
        <position position="965"/>
    </location>
</feature>
<feature type="sequence variant" id="VAR_074399" description="In BRGDA1; uncertain significance; dbSNP:rs199473181." evidence="83">
    <original>R</original>
    <variation>H</variation>
    <location>
        <position position="965"/>
    </location>
</feature>
<feature type="sequence variant" id="VAR_074727" description="In LQT3; uncertain significance; dbSNP:rs199473181." evidence="82">
    <original>R</original>
    <variation>L</variation>
    <location>
        <position position="965"/>
    </location>
</feature>
<feature type="sequence variant" id="VAR_068333" description="In LQT3; dbSNP:rs61737825." evidence="48">
    <original>R</original>
    <variation>C</variation>
    <location>
        <position position="971"/>
    </location>
</feature>
<feature type="sequence variant" id="VAR_074728" description="In LQT3; uncertain significance; dbSNP:rs199473591." evidence="82">
    <original>C</original>
    <variation>F</variation>
    <location>
        <position position="981"/>
    </location>
</feature>
<feature type="sequence variant" id="VAR_074400" description="In dbSNP:rs41313667." evidence="83">
    <original>R</original>
    <variation>Q</variation>
    <location>
        <position position="986"/>
    </location>
</feature>
<feature type="sequence variant" id="VAR_017676" description="In LQT3; also found in patients with atrial fibrillation; sodium current characterized by slower decay and a 2- to 3-fold increase in late sodium current; dbSNP:rs137854609." evidence="20 65 82">
    <original>A</original>
    <variation>S</variation>
    <location>
        <position position="997"/>
    </location>
</feature>
<feature type="sequence variant" id="VAR_074401" description="In BRGDA1; uncertain significance; dbSNP:rs137854609." evidence="83">
    <original>A</original>
    <variation>T</variation>
    <location>
        <position position="997"/>
    </location>
</feature>
<feature type="sequence variant" id="VAR_074729" description="In LQT3; uncertain significance; dbSNP:rs199473183." evidence="82">
    <original>C</original>
    <variation>R</variation>
    <location>
        <position position="1004"/>
    </location>
</feature>
<feature type="sequence variant" id="VAR_074402" description="In dbSNP:rs199473185." evidence="83">
    <original>T</original>
    <variation>M</variation>
    <location>
        <position position="1016"/>
    </location>
</feature>
<feature type="sequence variant" id="VAR_055184" description="In BRGDA1; dbSNP:rs199473592." evidence="75">
    <original>R</original>
    <variation>H</variation>
    <location>
        <position position="1023"/>
    </location>
</feature>
<feature type="sequence variant" id="VAR_026367" description="In dbSNP:rs763891399." evidence="38 55 109">
    <original>R</original>
    <variation>Q</variation>
    <location>
        <position position="1027"/>
    </location>
</feature>
<feature type="sequence variant" id="VAR_074403" description="In dbSNP:rs199473186." evidence="83">
    <original>G</original>
    <variation>R</variation>
    <location>
        <position position="1040"/>
    </location>
</feature>
<feature type="sequence variant" id="VAR_047361" description="In dbSNP:rs45491996.">
    <original>D</original>
    <variation>N</variation>
    <location>
        <position position="1041"/>
    </location>
</feature>
<feature type="sequence variant" id="VAR_026368" description="In BRGDA1, ATFB10 and LQT3; abolishes binding to ANK3 and also prevents accumulation of SCN5A at cell surface sites in ventricular cardiomyocytes; dbSNP:rs137854617." evidence="25 47 65 82 83">
    <original>E</original>
    <variation>K</variation>
    <location>
        <position position="1053"/>
    </location>
</feature>
<feature type="sequence variant" id="VAR_074404" description="In BRGDA1; uncertain significance; dbSNP:rs199473593." evidence="83">
    <original>D</original>
    <variation>G</variation>
    <location>
        <position position="1055"/>
    </location>
</feature>
<feature type="sequence variant" id="VAR_068334" description="In LQT3; dbSNP:rs199473187." evidence="48 82">
    <original>T</original>
    <variation>M</variation>
    <location>
        <position position="1069"/>
    </location>
</feature>
<feature type="sequence variant" id="VAR_074405" description="In BRGDA1; uncertain significance; dbSNP:rs199473188." evidence="83">
    <original>S</original>
    <variation>Y</variation>
    <location>
        <position position="1079"/>
    </location>
</feature>
<feature type="sequence variant" id="VAR_074406" description="In dbSNP:rs199473189." evidence="83">
    <original>V</original>
    <variation>A</variation>
    <location>
        <position position="1082"/>
    </location>
</feature>
<feature type="sequence variant" id="VAR_055185" description="In SIDS; uncertain significance; dbSNP:rs199473190." evidence="68">
    <original>G</original>
    <variation>S</variation>
    <location>
        <position position="1084"/>
    </location>
</feature>
<feature type="sequence variant" id="VAR_014464" description="In dbSNP:rs1805125." evidence="64 83">
    <original>P</original>
    <variation>L</variation>
    <location>
        <position position="1090"/>
    </location>
</feature>
<feature type="sequence variant" id="VAR_074407" description="In dbSNP:rs199473191." evidence="83">
    <original>V</original>
    <variation>L</variation>
    <location>
        <position position="1098"/>
    </location>
</feature>
<feature type="sequence variant" id="VAR_074730" description="In LQT3; uncertain significance; dbSNP:rs199473192." evidence="82">
    <original>A</original>
    <variation>V</variation>
    <location>
        <position position="1100"/>
    </location>
</feature>
<feature type="sequence variant" id="VAR_017677" description="May confer susceptibility to acquired arrhythmia; dbSNP:rs7626962." evidence="29 33 39 65 83">
    <original>S</original>
    <variation>Y</variation>
    <location>
        <position position="1103"/>
    </location>
</feature>
<feature type="sequence variant" id="VAR_074408" description="In dbSNP:rs199473193." evidence="83">
    <original>E</original>
    <variation>K</variation>
    <location>
        <position position="1107"/>
    </location>
</feature>
<feature type="sequence variant" id="VAR_074409" description="In BRGDA1; uncertain significance; dbSNP:rs199473194." evidence="83">
    <original>A</original>
    <variation>V</variation>
    <location>
        <position position="1113"/>
    </location>
</feature>
<feature type="sequence variant" id="VAR_009935" description="In LQT3; dbSNP:rs199473195." evidence="16 82">
    <original>D</original>
    <variation>N</variation>
    <location>
        <position position="1114"/>
    </location>
</feature>
<feature type="sequence variant" id="VAR_074410" description="In dbSNP:rs199473196." evidence="83">
    <original>R</original>
    <variation>W</variation>
    <location>
        <position position="1116"/>
    </location>
</feature>
<feature type="sequence variant" id="VAR_055186" description="In ATFB10; dbSNP:rs199473197." evidence="65">
    <original>T</original>
    <variation>I</variation>
    <location>
        <position position="1131"/>
    </location>
</feature>
<feature type="sequence variant" id="VAR_074411" description="In BRGDA1; uncertain significance; dbSNP:rs199473199." evidence="83">
    <original>S</original>
    <variation>T</variation>
    <location>
        <position position="1140"/>
    </location>
</feature>
<feature type="sequence variant" id="VAR_074731" description="In LQT3; uncertain significance; dbSNP:rs199473594." evidence="82">
    <original>D</original>
    <variation>N</variation>
    <location>
        <position position="1166"/>
    </location>
</feature>
<feature type="sequence variant" id="VAR_047362" description="In dbSNP:rs41310765.">
    <original>A</original>
    <variation>V</variation>
    <location>
        <position position="1180"/>
    </location>
</feature>
<feature type="sequence variant" id="VAR_017678" description="In BRGDA1 and LQT3; also found in patients with atrial fibrillation; accelerates the inactivation of the sodium channel current and exhibit reduced sodium channel current at the end of phase I of the action potential; dbSNP:rs41261344." evidence="23 65 83">
    <original>R</original>
    <variation>Q</variation>
    <location>
        <position position="1193"/>
    </location>
</feature>
<feature type="sequence variant" id="VAR_074732" description="In LQT3; uncertain significance; dbSNP:rs199473202." evidence="82">
    <original>Y</original>
    <variation>S</variation>
    <location>
        <position position="1199"/>
    </location>
</feature>
<feature type="sequence variant" id="VAR_074733" description="In LQT3; uncertain significance; dbSNP:rs794728920." evidence="82">
    <location>
        <position position="1212"/>
    </location>
</feature>
<feature type="sequence variant" id="VAR_074412" description="In BRGDA1; uncertain significance; dbSNP:rs199473597." evidence="83">
    <original>S</original>
    <variation>N</variation>
    <location>
        <position position="1219"/>
    </location>
</feature>
<feature type="sequence variant" id="VAR_026369" description="In BRGDA1 and LQT3; dbSNP:rs199473204." evidence="28 48 83">
    <original>E</original>
    <variation>K</variation>
    <location>
        <position position="1225"/>
    </location>
</feature>
<feature type="sequence variant" id="VAR_074413" description="In BRGDA1; uncertain significance; dbSNP:rs199473205." evidence="83">
    <original>Y</original>
    <variation>H</variation>
    <location>
        <position position="1228"/>
    </location>
</feature>
<feature type="sequence variant" id="VAR_068335" description="In LQT3; dbSNP:rs199473598." evidence="48">
    <original>E</original>
    <variation>K</variation>
    <location>
        <position position="1231"/>
    </location>
</feature>
<feature type="sequence variant" id="VAR_074414" description="In BRGDA1; uncertain significance; dbSNP:rs199473206." evidence="83">
    <original>R</original>
    <variation>Q</variation>
    <location>
        <position position="1232"/>
    </location>
</feature>
<feature type="sequence variant" id="VAR_017679" description="In BRGDA1 and PFHB1A; dbSNP:rs199473207." evidence="78 83 106">
    <original>R</original>
    <variation>W</variation>
    <location>
        <position position="1232"/>
    </location>
</feature>
<feature type="sequence variant" id="VAR_026370" description="In BRGDA1; dbSNP:rs199473208." evidence="25">
    <original>K</original>
    <variation>N</variation>
    <location>
        <position position="1236"/>
    </location>
</feature>
<feature type="sequence variant" id="VAR_074415" description="In BRGDA1; uncertain significance; dbSNP:rs199473210." evidence="83">
    <original>L</original>
    <variation>P</variation>
    <location>
        <position position="1239"/>
    </location>
</feature>
<feature type="sequence variant" id="VAR_026371" description="In dbSNP:rs199473211." evidence="25">
    <original>E</original>
    <variation>Q</variation>
    <location>
        <position position="1240"/>
    </location>
</feature>
<feature type="sequence variant" id="VAR_074416" description="In BRGDA1; uncertain significance; dbSNP:rs199473599." evidence="83">
    <original>D</original>
    <variation>N</variation>
    <location>
        <position position="1243"/>
    </location>
</feature>
<feature type="sequence variant" id="VAR_074417" description="In BRGDA1; uncertain significance; dbSNP:rs199473213." evidence="83">
    <original>V</original>
    <variation>D</variation>
    <location>
        <position position="1249"/>
    </location>
</feature>
<feature type="sequence variant" id="VAR_026372" description="In LQT3; drug-induced LQT syndrome; dbSNP:rs45589741." evidence="26">
    <original>F</original>
    <variation>L</variation>
    <location>
        <position position="1250"/>
    </location>
</feature>
<feature type="sequence variant" id="VAR_074418" description="In dbSNP:rs199473600." evidence="83">
    <original>V</original>
    <variation>M</variation>
    <location>
        <position position="1251"/>
    </location>
</feature>
<feature type="sequence variant" id="VAR_074419" description="In BRGDA1; uncertain significance; dbSNP:rs199473214." evidence="83">
    <original>E</original>
    <variation>G</variation>
    <location>
        <position position="1253"/>
    </location>
</feature>
<feature type="sequence variant" id="VAR_036665" description="In BRGDA1; uncertain significance; dbSNP:rs137854616." evidence="43 83">
    <original>G</original>
    <variation>S</variation>
    <location>
        <position position="1262"/>
    </location>
</feature>
<feature type="sequence variant" id="VAR_074420" description="In BRGDA1; uncertain significance; dbSNP:rs199473601." evidence="83">
    <original>W</original>
    <variation>C</variation>
    <location>
        <position position="1271"/>
    </location>
</feature>
<feature type="sequence variant" id="VAR_026373" description="In CMD1E, BRGDA1, PFHB1A and ATRST1; in familial atrial standstill is found in association with variants in the regulatory region of GJA5; decreases expression at the cell membrane; alters channel kinetics; shifts activation and inactivation to more positive membrane potentials; dbSNP:rs137854618." evidence="34 44 78 83">
    <original>D</original>
    <variation>N</variation>
    <location>
        <position position="1275"/>
    </location>
</feature>
<feature type="sequence variant" id="VAR_074734" description="In LQT3; uncertain significance; dbSNP:rs199473216." evidence="82">
    <original>L</original>
    <variation>M</variation>
    <location>
        <position position="1283"/>
    </location>
</feature>
<feature type="sequence variant" id="VAR_074421" description="In BRGDA1; uncertain significance; dbSNP:rs199473217." evidence="83">
    <original>A</original>
    <variation>G</variation>
    <location>
        <position position="1288"/>
    </location>
</feature>
<feature type="sequence variant" id="VAR_026374" description="In BRGDA1; uncertain significance; dbSNP:rs41311127." evidence="25 83">
    <original>F</original>
    <variation>S</variation>
    <location>
        <position position="1293"/>
    </location>
</feature>
<feature type="sequence variant" id="VAR_055187" description="In LQT3; causes significant positive shifts in the half-maximal voltage of steady-state inactivation and activation; dbSNP:rs199473218." evidence="18">
    <original>E</original>
    <variation>K</variation>
    <location>
        <position position="1295"/>
    </location>
</feature>
<feature type="sequence variant" id="VAR_017680" description="In SSS1; dbSNP:rs28937319." evidence="40">
    <original>P</original>
    <variation>L</variation>
    <location>
        <position position="1298"/>
    </location>
</feature>
<feature type="sequence variant" id="VAR_008956" description="In LQT3; dbSNP:rs199473603." evidence="8 82">
    <original>T</original>
    <variation>M</variation>
    <location>
        <position position="1304"/>
    </location>
</feature>
<feature type="sequence variant" id="VAR_055188" description="Associated with I-232 in a case of lidocaine-induced Brugada syndrome; dbSNP:rs41313031." evidence="69 83">
    <original>L</original>
    <variation>F</variation>
    <location>
        <position position="1308"/>
    </location>
</feature>
<feature type="sequence variant" id="VAR_074422" description="In BRGDA1; uncertain significance; dbSNP:rs199473219." evidence="83">
    <original>L</original>
    <variation>P</variation>
    <location>
        <position position="1311"/>
    </location>
</feature>
<feature type="sequence variant" id="VAR_026375" description="In BRGDA1; dbSNP:rs199473220." evidence="28 78 83">
    <original>G</original>
    <variation>V</variation>
    <location>
        <position position="1319"/>
    </location>
</feature>
<feature type="sequence variant" id="VAR_074423" description="In BRGDA1; uncertain significance; dbSNP:rs199473221." evidence="83">
    <original>V</original>
    <variation>G</variation>
    <location>
        <position position="1323"/>
    </location>
</feature>
<feature type="sequence variant" id="VAR_001577" description="In LQT3; dbSNP:rs28937317." evidence="48 82">
    <original>N</original>
    <variation>S</variation>
    <location>
        <position position="1325"/>
    </location>
</feature>
<feature type="sequence variant" id="VAR_074735" description="In LQT3; uncertain significance; dbSNP:rs199473222." evidence="82">
    <original>A</original>
    <variation>S</variation>
    <location>
        <position position="1326"/>
    </location>
</feature>
<feature type="sequence variant" id="VAR_055189" description="In LQT3; dbSNP:rs199473224.">
    <original>A</original>
    <variation>P</variation>
    <location>
        <position position="1330"/>
    </location>
</feature>
<feature type="sequence variant" id="VAR_055190" description="In LQT3 and BRGDA1; dbSNP:rs199473224." evidence="75">
    <original>A</original>
    <variation>T</variation>
    <location>
        <position position="1330"/>
    </location>
</feature>
<feature type="sequence variant" id="VAR_055191" description="In BRGDA1; uncertain significance; dbSNP:rs199473225." evidence="83">
    <original>P</original>
    <variation>L</variation>
    <location>
        <position position="1332"/>
    </location>
</feature>
<feature type="sequence variant" id="VAR_036666" description="In LQT3 and SIDS; dbSNP:rs199473604." evidence="56 80">
    <original>S</original>
    <variation>Y</variation>
    <location>
        <position position="1333"/>
    </location>
</feature>
<feature type="sequence variant" id="VAR_074736" description="In LQT3; uncertain significance; dbSNP:rs199473226." evidence="82">
    <original>I</original>
    <variation>V</variation>
    <location>
        <position position="1334"/>
    </location>
</feature>
<feature type="sequence variant" id="VAR_074737" description="In LQT3; uncertain significance; dbSNP:rs199473227." evidence="82">
    <original>L</original>
    <variation>V</variation>
    <location>
        <position position="1338"/>
    </location>
</feature>
<feature type="sequence variant" id="VAR_074424" description="In BRGDA1; uncertain significance; dbSNP:rs199473228." evidence="83">
    <original>F</original>
    <variation>L</variation>
    <location>
        <position position="1344"/>
    </location>
</feature>
<feature type="sequence variant" id="VAR_026376" description="In BRGDA1; dbSNP:rs199473229." evidence="55">
    <original>F</original>
    <variation>S</variation>
    <location>
        <position position="1344"/>
    </location>
</feature>
<feature type="sequence variant" id="VAR_074425" description="In BRGDA1; uncertain significance; dbSNP:rs199473230." evidence="83">
    <original>L</original>
    <variation>I</variation>
    <location>
        <position position="1346"/>
    </location>
</feature>
<feature type="sequence variant" id="VAR_074426" description="In BRGDA1; uncertain significance; dbSNP:rs199473231." evidence="83">
    <original>L</original>
    <variation>P</variation>
    <location>
        <position position="1346"/>
    </location>
</feature>
<feature type="sequence variant" id="VAR_074427" description="In BRGDA1; uncertain significance; dbSNP:rs199473232." evidence="83">
    <original>M</original>
    <variation>R</variation>
    <location>
        <position position="1351"/>
    </location>
</feature>
<feature type="sequence variant" id="VAR_074428" description="In BRGDA1; uncertain significance; dbSNP:rs199473233." evidence="83">
    <original>V</original>
    <variation>M</variation>
    <location>
        <position position="1353"/>
    </location>
</feature>
<feature type="sequence variant" id="VAR_074429" description="In BRGDA1; uncertain significance; dbSNP:rs199473234." evidence="83">
    <original>G</original>
    <variation>W</variation>
    <location>
        <position position="1358"/>
    </location>
</feature>
<feature type="sequence variant" id="VAR_074430" description="In BRGDA1; uncertain significance; dbSNP:rs199473235." evidence="83">
    <original>K</original>
    <variation>N</variation>
    <location>
        <position position="1359"/>
    </location>
</feature>
<feature type="sequence variant" id="VAR_074431" description="In BRGDA1; uncertain significance; dbSNP:rs199473236." evidence="83">
    <original>F</original>
    <variation>C</variation>
    <location>
        <position position="1360"/>
    </location>
</feature>
<feature type="sequence variant" id="VAR_074432" description="In BRGDA1; uncertain significance; dbSNP:rs199473237." evidence="83">
    <original>C</original>
    <variation>Y</variation>
    <location>
        <position position="1363"/>
    </location>
</feature>
<feature type="sequence variant" id="VAR_026377" description="In BRGDA1; dbSNP:rs199473608." evidence="28 83">
    <original>S</original>
    <variation>I</variation>
    <location>
        <position position="1382"/>
    </location>
</feature>
<feature type="sequence variant" id="VAR_026378" description="In BRGDA1; dbSNP:rs199473239." evidence="28 83">
    <original>V</original>
    <variation>L</variation>
    <location>
        <position position="1405"/>
    </location>
</feature>
<feature type="sequence variant" id="VAR_074433" description="In BRGDA1; uncertain significance; dbSNP:rs199473239." evidence="83">
    <original>V</original>
    <variation>M</variation>
    <location>
        <position position="1405"/>
    </location>
</feature>
<feature type="sequence variant" id="VAR_074434" description="In BRGDA1; uncertain significance; dbSNP:rs199473609." evidence="83">
    <original>G</original>
    <variation>E</variation>
    <location>
        <position position="1406"/>
    </location>
</feature>
<feature type="sequence variant" id="VAR_026379" description="In BRGDA1; dbSNP:rs199473240." evidence="28 83">
    <original>G</original>
    <variation>R</variation>
    <location>
        <position position="1406"/>
    </location>
</feature>
<feature type="sequence variant" id="VAR_017681" description="In SSS1 and BRGDA1; dbSNP:rs137854612." evidence="21 40 78 83">
    <original>G</original>
    <variation>R</variation>
    <location>
        <position position="1408"/>
    </location>
</feature>
<feature type="sequence variant" id="VAR_074435" description="In BRGDA1; uncertain significance; dbSNP:rs199473610." evidence="83">
    <original>Y</original>
    <variation>C</variation>
    <location>
        <position position="1409"/>
    </location>
</feature>
<feature type="sequence variant" id="VAR_074436" description="In BRGDA1; uncertain significance; dbSNP:rs199473241." evidence="83">
    <original>L</original>
    <variation>F</variation>
    <location>
        <position position="1412"/>
    </location>
</feature>
<feature type="sequence variant" id="VAR_074437" description="In BRGDA1; uncertain significance; dbSNP:rs199473242." evidence="83">
    <original>K</original>
    <variation>E</variation>
    <location>
        <position position="1419"/>
    </location>
</feature>
<feature type="sequence variant" id="VAR_074438" description="In BRGDA1; uncertain significance; dbSNP:rs199473611." evidence="83">
    <original>G</original>
    <variation>R</variation>
    <location>
        <position position="1420"/>
    </location>
</feature>
<feature type="sequence variant" id="VAR_074439" description="In BRGDA1; uncertain significance; dbSNP:rs199473244." evidence="83">
    <original>A</original>
    <variation>S</variation>
    <location>
        <position position="1427"/>
    </location>
</feature>
<feature type="sequence variant" id="VAR_074440" description="In BRGDA1; uncertain significance; dbSNP:rs199473612." evidence="83">
    <original>A</original>
    <variation>V</variation>
    <location>
        <position position="1428"/>
    </location>
</feature>
<feature type="sequence variant" id="VAR_055192" description="In BRGDA1; uncertain significance; dbSNP:rs199473245." evidence="83">
    <original>R</original>
    <variation>G</variation>
    <location>
        <position position="1432"/>
    </location>
</feature>
<feature type="sequence variant" id="VAR_074441" description="In BRGDA1 and LQT3; dbSNP:rs199473246." evidence="82 83">
    <original>R</original>
    <variation>S</variation>
    <location>
        <position position="1432"/>
    </location>
</feature>
<feature type="sequence variant" id="VAR_074442" description="In BRGDA1; uncertain significance; dbSNP:rs199473247." evidence="83">
    <original>G</original>
    <variation>V</variation>
    <location>
        <position position="1433"/>
    </location>
</feature>
<feature type="sequence variant" id="VAR_055193" description="In BRGDA1; uncertain significance; dbSNP:rs199473248." evidence="83">
    <original>P</original>
    <variation>L</variation>
    <location>
        <position position="1438"/>
    </location>
</feature>
<feature type="sequence variant" id="VAR_074443" description="In BRGDA1; uncertain significance; dbSNP:rs199473249." evidence="83">
    <original>E</original>
    <variation>Q</variation>
    <location>
        <position position="1441"/>
    </location>
</feature>
<feature type="sequence variant" id="VAR_074444" description="In BRGDA1; uncertain significance; dbSNP:rs199473250." evidence="83">
    <original>I</original>
    <variation>L</variation>
    <location>
        <position position="1448"/>
    </location>
</feature>
<feature type="sequence variant" id="VAR_074445" description="In BRGDA1; uncertain significance; dbSNP:rs199473251." evidence="83">
    <original>I</original>
    <variation>T</variation>
    <location>
        <position position="1448"/>
    </location>
</feature>
<feature type="sequence variant" id="VAR_074446" description="In BRGDA1; uncertain significance; dbSNP:rs199473613." evidence="83">
    <original>Y</original>
    <variation>C</variation>
    <location>
        <position position="1449"/>
    </location>
</feature>
<feature type="sequence variant" id="VAR_074447" description="In BRGDA1; uncertain significance; dbSNP:rs199473252." evidence="83">
    <original>V</original>
    <variation>D</variation>
    <location>
        <position position="1451"/>
    </location>
</feature>
<feature type="sequence variant" id="VAR_068336" description="In LQT3; dbSNP:rs199473253." evidence="48">
    <original>S</original>
    <variation>Y</variation>
    <location>
        <position position="1458"/>
    </location>
</feature>
<feature type="sequence variant" id="VAR_074448" description="In BRGDA1; uncertain significance; dbSNP:rs199473614." evidence="83">
    <original>N</original>
    <variation>Y</variation>
    <location>
        <position position="1463"/>
    </location>
</feature>
<feature type="sequence variant" id="VAR_074449" description="In BRGDA1; uncertain significance; dbSNP:rs199473254." evidence="83">
    <original>V</original>
    <variation>F</variation>
    <location>
        <position position="1468"/>
    </location>
</feature>
<feature type="sequence variant" id="VAR_074738" description="In LQT3; uncertain significance; dbSNP:rs199473255." evidence="82">
    <original>N</original>
    <variation>S</variation>
    <location>
        <position position="1472"/>
    </location>
</feature>
<feature type="sequence variant" id="VAR_055194" description="In LQT3; dbSNP:rs199473256." evidence="60 82">
    <original>F</original>
    <variation>C</variation>
    <location>
        <position position="1473"/>
    </location>
</feature>
<feature type="sequence variant" id="VAR_026380" description="In BRGDA1." evidence="28">
    <location>
        <position position="1479"/>
    </location>
</feature>
<feature type="sequence variant" id="VAR_068337" description="In LQT3; dbSNP:rs199473257." evidence="48 82">
    <original>G</original>
    <variation>E</variation>
    <location>
        <position position="1481"/>
    </location>
</feature>
<feature type="sequence variant" id="VAR_055195" description="In LQT3; dbSNP:rs199473615." evidence="75">
    <original>F</original>
    <variation>L</variation>
    <location>
        <position position="1486"/>
    </location>
</feature>
<feature type="sequence variant" id="VAR_074739" description="In LQT3; uncertain significance; dbSNP:rs199473258." evidence="82">
    <original>M</original>
    <variation>L</variation>
    <location>
        <position position="1487"/>
    </location>
</feature>
<feature type="sequence variant" id="VAR_074740" description="In LQT3; uncertain significance; dbSNP:rs199473259." evidence="82">
    <original>T</original>
    <variation>R</variation>
    <location>
        <position position="1488"/>
    </location>
</feature>
<feature type="sequence variant" id="VAR_074741" description="In LQT3; uncertain significance; dbSNP:rs199473616." evidence="82">
    <original>E</original>
    <variation>D</variation>
    <location>
        <position position="1489"/>
    </location>
</feature>
<feature type="sequence variant" id="VAR_074742" description="In LQT3; uncertain significance; dbSNP:rs199473260." evidence="82">
    <original>K</original>
    <variation>R</variation>
    <location>
        <position position="1493"/>
    </location>
</feature>
<feature type="sequence variant" id="VAR_055196" description="In BRGDA1; dbSNP:rs199473261." evidence="63">
    <original>Y</original>
    <variation>N</variation>
    <location>
        <position position="1494"/>
    </location>
</feature>
<feature type="sequence variant" id="VAR_074743" description="In LQT3; uncertain significance; dbSNP:rs199473262." evidence="82">
    <original>Y</original>
    <variation>S</variation>
    <location>
        <position position="1495"/>
    </location>
</feature>
<feature type="sequence variant" id="VAR_074744" description="Found in a patient with long QT syndrome; uncertain significance; dbSNP:rs199473263." evidence="51 54">
    <original>M</original>
    <variation>T</variation>
    <location>
        <position position="1498"/>
    </location>
</feature>
<feature type="sequence variant" id="VAR_074745" description="In LQT3; uncertain significance; dbSNP:rs199473264." evidence="82">
    <original>M</original>
    <variation>V</variation>
    <location>
        <position position="1498"/>
    </location>
</feature>
<feature type="sequence variant" id="VAR_008957" description="In dbSNP:rs199473265." evidence="8">
    <original>K</original>
    <variation>N</variation>
    <location>
        <position position="1500"/>
    </location>
</feature>
<feature type="sequence variant" id="VAR_026381" description="In BRGDA1; dbSNP:rs2125834231." evidence="25">
    <location>
        <position position="1500"/>
    </location>
</feature>
<feature type="sequence variant" id="VAR_009936" description="In LQT3 and BRGDA1; dbSNP:rs199473266." evidence="16 82 83">
    <original>L</original>
    <variation>V</variation>
    <location>
        <position position="1501"/>
    </location>
</feature>
<feature type="sequence variant" id="VAR_026382" description="In BRGDA1; dbSNP:rs199473267." evidence="28">
    <original>G</original>
    <variation>S</variation>
    <location>
        <position position="1502"/>
    </location>
</feature>
<feature type="sequence variant" id="VAR_001576" description="In LQT3." evidence="48 102">
    <location>
        <begin position="1505"/>
        <end position="1507"/>
    </location>
</feature>
<feature type="sequence variant" id="VAR_074746" description="In LQT3; uncertain significance; dbSNP:rs199473268." evidence="82">
    <original>K</original>
    <variation>N</variation>
    <location>
        <position position="1505"/>
    </location>
</feature>
<feature type="sequence variant" id="VAR_055197" description="In LQT3.">
    <location>
        <begin position="1507"/>
        <end position="1509"/>
    </location>
</feature>
<feature type="sequence variant" id="VAR_017682" description="In BRGDA1; significantly affects cardiac sodium channel characteristics; associated with an increase in inward sodium current during the action potential upstroke; dbSNP:rs137854602." evidence="13 28 78 83">
    <original>R</original>
    <variation>W</variation>
    <location>
        <position position="1512"/>
    </location>
</feature>
<feature type="sequence variant" id="VAR_074450" description="In BRGDA1; uncertain significance; dbSNP:rs199473617." evidence="83">
    <original>I</original>
    <variation>K</variation>
    <location>
        <position position="1521"/>
    </location>
</feature>
<feature type="sequence variant" id="VAR_074451" description="In BRGDA1; uncertain significance; dbSNP:rs199473269." evidence="83">
    <original>V</original>
    <variation>M</variation>
    <location>
        <position position="1525"/>
    </location>
</feature>
<feature type="sequence variant" id="VAR_055198" description="In BRGDA1; asymptomatic patient; associated with P-1569; dbSNP:rs199473270." evidence="49">
    <original>K</original>
    <variation>R</variation>
    <location>
        <position position="1527"/>
    </location>
</feature>
<feature type="sequence variant" id="VAR_074747" description="In LQT3; uncertain significance; dbSNP:rs199473618." evidence="82">
    <original>V</original>
    <variation>I</variation>
    <location>
        <position position="1532"/>
    </location>
</feature>
<feature type="sequence variant" id="VAR_074452" description="In BRGDA1; uncertain significance; dbSNP:rs199473271." evidence="83">
    <original>E</original>
    <variation>K</variation>
    <location>
        <position position="1548"/>
    </location>
</feature>
<feature type="sequence variant" id="VAR_074748" description="In LQT3; uncertain significance; dbSNP:rs199473619." evidence="82">
    <original>L</original>
    <variation>F</variation>
    <location>
        <position position="1560"/>
    </location>
</feature>
<feature type="sequence variant" id="VAR_055199" description="In BRGDA1; asymptomatic patient; associated with R-1527; dbSNP:rs199473273." evidence="49">
    <original>A</original>
    <variation>P</variation>
    <location>
        <position position="1569"/>
    </location>
</feature>
<feature type="sequence variant" id="VAR_074453" description="In BRGDA1; uncertain significance; dbSNP:rs199473274." evidence="83">
    <original>F</original>
    <variation>C</variation>
    <location>
        <position position="1571"/>
    </location>
</feature>
<feature type="sequence variant" id="VAR_085793" description="In BRGDA1; affects channel activity; the mutant displays a hyperpolarizing shift in the voltage dependence of inactivation causing slower inactivation compared to the wild type, slower recovery and a reduced availability of channels at rest; dbSNP:rs1369632373." evidence="101">
    <original>F</original>
    <variation>L</variation>
    <location>
        <position position="1571"/>
    </location>
</feature>
<feature type="sequence variant" id="VAR_074454" description="In BRGDA1; uncertain significance; dbSNP:rs199473620." evidence="83">
    <original>E</original>
    <variation>K</variation>
    <location>
        <position position="1574"/>
    </location>
</feature>
<feature type="sequence variant" id="VAR_074455" description="In BRGDA1; uncertain significance; dbSNP:rs199473275." evidence="83">
    <original>L</original>
    <variation>P</variation>
    <location>
        <position position="1582"/>
    </location>
</feature>
<feature type="sequence variant" id="VAR_074456" description="In BRGDA1; uncertain significance; dbSNP:rs45514691." evidence="83">
    <original>R</original>
    <variation>C</variation>
    <location>
        <position position="1583"/>
    </location>
</feature>
<feature type="sequence variant" id="VAR_074457" description="In BRGDA1; uncertain significance; dbSNP:rs199473621." evidence="83">
    <original>R</original>
    <variation>H</variation>
    <location>
        <position position="1583"/>
    </location>
</feature>
<feature type="sequence variant" id="VAR_074749" description="In LQT3; uncertain significance; dbSNP:rs199473276." evidence="82">
    <original>I</original>
    <variation>M</variation>
    <location>
        <position position="1593"/>
    </location>
</feature>
<feature type="sequence variant" id="VAR_074750" description="In LQT3; uncertain significance; dbSNP:rs199473277." evidence="82">
    <original>F</original>
    <variation>S</variation>
    <location>
        <position position="1594"/>
    </location>
</feature>
<feature type="sequence variant" id="VAR_017683" description="In PFHB1A; significant defect in the kinetics of fast-channel inactivation distinct from mutations reported in LQT3; dbSNP:rs137854607." evidence="22">
    <original>D</original>
    <variation>N</variation>
    <location>
        <position position="1595"/>
    </location>
</feature>
<feature type="sequence variant" id="VAR_074751" description="In LQT3; uncertain significance; dbSNP:rs199473278." evidence="82">
    <original>F</original>
    <variation>I</variation>
    <location>
        <position position="1596"/>
    </location>
</feature>
<feature type="sequence variant" id="VAR_074458" description="In BRGDA1; uncertain significance; dbSNP:rs199473280." evidence="83">
    <original>V</original>
    <variation>M</variation>
    <location>
        <position position="1604"/>
    </location>
</feature>
<feature type="sequence variant" id="VAR_036667" description="In LQT3; dbSNP:rs199473622." evidence="56">
    <original>S</original>
    <variation>W</variation>
    <location>
        <position position="1609"/>
    </location>
</feature>
<feature type="sequence variant" id="VAR_074459" description="In BRGDA1; uncertain significance; dbSNP:rs199473281." evidence="83">
    <original>Q</original>
    <variation>L</variation>
    <location>
        <position position="1613"/>
    </location>
</feature>
<feature type="sequence variant" id="VAR_055200" description="In LQT3 and BRGDA1." evidence="58 82">
    <location>
        <position position="1617"/>
    </location>
</feature>
<feature type="sequence variant" id="VAR_055201" description="In LQT3 and PFHB1A; dbSNP:rs199473282." evidence="75">
    <original>T</original>
    <variation>K</variation>
    <location>
        <position position="1620"/>
    </location>
</feature>
<feature type="sequence variant" id="VAR_017684" description="In BRGDA1; arrhythmogenicity revealed only at temperatures approaching the physiologic range; dbSNP:rs199473282." evidence="9 11 83 106">
    <original>T</original>
    <variation>M</variation>
    <location>
        <position position="1620"/>
    </location>
</feature>
<feature type="sequence variant" id="VAR_009937" description="In LQT3; dbSNP:rs137854600." evidence="16 48 82">
    <original>R</original>
    <variation>L</variation>
    <location>
        <position position="1623"/>
    </location>
</feature>
<feature type="sequence variant" id="VAR_001578" description="In LQT3 and BRGDA1; dbSNP:rs137854600." evidence="82 83 105 108">
    <original>R</original>
    <variation>Q</variation>
    <location>
        <position position="1623"/>
    </location>
</feature>
<feature type="sequence variant" id="VAR_074752" description="In LQT3; uncertain significance; dbSNP:rs199473283." evidence="82">
    <original>R</original>
    <variation>H</variation>
    <location>
        <position position="1626"/>
    </location>
</feature>
<feature type="sequence variant" id="VAR_055202" description="In LQT3; uncertain significance; dbSNP:rs199473283." evidence="54">
    <original>R</original>
    <variation>P</variation>
    <location>
        <position position="1626"/>
    </location>
</feature>
<feature type="sequence variant" id="VAR_074460" description="In BRGDA1; changed voltage-gated sodium channel activity; no difference in current density but changed inactivation kinetics and prolonged recovery from inactivation; dbSNP:rs199473623." evidence="83 94">
    <original>R</original>
    <variation>Q</variation>
    <location>
        <position position="1629"/>
    </location>
</feature>
<feature type="sequence variant" id="VAR_074461" description="In BRGDA1; uncertain significance; dbSNP:rs199473624." evidence="83">
    <original>G</original>
    <variation>E</variation>
    <location>
        <position position="1642"/>
    </location>
</feature>
<feature type="sequence variant" id="VAR_055203" description="In LQT3; dbSNP:rs199473287." evidence="54 82">
    <original>R</original>
    <variation>C</variation>
    <location>
        <position position="1644"/>
    </location>
</feature>
<feature type="sequence variant" id="VAR_001579" description="In LQT3; dbSNP:rs28937316." evidence="16 48">
    <original>R</original>
    <variation>H</variation>
    <location>
        <position position="1644"/>
    </location>
</feature>
<feature type="sequence variant" id="VAR_008958" description="In LQT3; dbSNP:rs199473288." evidence="8">
    <original>T</original>
    <variation>M</variation>
    <location>
        <position position="1645"/>
    </location>
</feature>
<feature type="sequence variant" id="VAR_055204" description="In BRGDA1; dbSNP:rs199473289." evidence="58">
    <original>A</original>
    <variation>V</variation>
    <location>
        <position position="1649"/>
    </location>
</feature>
<feature type="sequence variant" id="VAR_074753" description="In LQT3; uncertain significance; dbSNP:rs199473290." evidence="82">
    <original>L</original>
    <variation>F</variation>
    <location>
        <position position="1650"/>
    </location>
</feature>
<feature type="sequence variant" id="VAR_055205" description="In LQT3; dbSNP:rs199473291." evidence="75">
    <original>M</original>
    <variation>R</variation>
    <location>
        <position position="1652"/>
    </location>
</feature>
<feature type="sequence variant" id="VAR_074754" description="In LQT3; uncertain significance; dbSNP:rs199473291." evidence="82">
    <original>M</original>
    <variation>T</variation>
    <location>
        <position position="1652"/>
    </location>
</feature>
<feature type="sequence variant" id="VAR_055206" description="In BRGDA1 and LQT3; complete loss of sodium currents due to defective channel trafficking to the plasma membrane; dbSNP:rs199473625." evidence="54 57 83">
    <original>I</original>
    <variation>V</variation>
    <location>
        <position position="1660"/>
    </location>
</feature>
<feature type="sequence variant" id="VAR_074462" description="In BRGDA1; uncertain significance; dbSNP:rs199473292." evidence="83">
    <original>G</original>
    <variation>R</variation>
    <location>
        <position position="1661"/>
    </location>
</feature>
<feature type="sequence variant" id="VAR_068338" description="In LQT3 and BRGDA1; dbSNP:rs199473293." evidence="48 83">
    <original>V</original>
    <variation>I</variation>
    <location>
        <position position="1667"/>
    </location>
</feature>
<feature type="sequence variant" id="VAR_074463" description="In BRGDA1; uncertain significance; dbSNP:rs199473626." evidence="83">
    <original>S</original>
    <variation>Y</variation>
    <location>
        <position position="1672"/>
    </location>
</feature>
<feature type="sequence variant" id="VAR_074464" description="In BRGDA1; uncertain significance; dbSNP:rs199473294." evidence="83">
    <original>A</original>
    <variation>T</variation>
    <location>
        <position position="1680"/>
    </location>
</feature>
<feature type="sequence variant" id="VAR_076557" description="In BRGDA1; decreased localization to the plasma membrane; decreased voltage-gated sodium channel activity; dominant negative effect; no effect on voltage dependence for activation and inactivation; dbSNP:rs1060499900." evidence="91">
    <original>D</original>
    <variation>N</variation>
    <location>
        <position position="1690"/>
    </location>
</feature>
<feature type="sequence variant" id="VAR_074465" description="In BRGDA1; uncertain significance; dbSNP:rs199473295." evidence="83">
    <original>A</original>
    <variation>T</variation>
    <location>
        <position position="1698"/>
    </location>
</feature>
<feature type="sequence variant" id="VAR_055207" description="In SIDS; causes a hyperpolarizing shift of steady-state inactivation and delayed recovery from inactivation; dbSNP:rs199473627." evidence="68">
    <original>F</original>
    <variation>S</variation>
    <location>
        <position position="1705"/>
    </location>
</feature>
<feature type="sequence variant" id="VAR_074466" description="In BRGDA1; uncertain significance; dbSNP:rs199473297." evidence="83">
    <original>T</original>
    <variation>M</variation>
    <location>
        <position position="1709"/>
    </location>
</feature>
<feature type="sequence variant" id="VAR_074467" description="In BRGDA1; uncertain significance; dbSNP:rs199473297." evidence="83">
    <original>T</original>
    <variation>R</variation>
    <location>
        <position position="1709"/>
    </location>
</feature>
<feature type="sequence variant" id="VAR_017685" description="In VF1; dbSNP:rs137854604." evidence="15">
    <original>S</original>
    <variation>L</variation>
    <location>
        <position position="1710"/>
    </location>
</feature>
<feature type="sequence variant" id="VAR_074468" description="In BRGDA1; uncertain significance; dbSNP:rs199473298." evidence="83">
    <original>G</original>
    <variation>S</variation>
    <location>
        <position position="1712"/>
    </location>
</feature>
<feature type="sequence variant" id="VAR_026383" description="In BRGDA1; strong decrease of current density; does not affect ion selectivity properties; dbSNP:rs199473628." evidence="52 78 83">
    <original>D</original>
    <variation>G</variation>
    <location>
        <position position="1714"/>
    </location>
</feature>
<feature type="sequence variant" id="VAR_074469" description="In BRGDA1; uncertain significance; dbSNP:rs199473299." evidence="83">
    <original>N</original>
    <variation>D</variation>
    <location>
        <position position="1722"/>
    </location>
</feature>
<feature type="sequence variant" id="VAR_074755" description="In LQT3; uncertain significance; dbSNP:rs199473300." evidence="82">
    <original>T</original>
    <variation>N</variation>
    <location>
        <position position="1723"/>
    </location>
</feature>
<feature type="sequence variant" id="VAR_074470" description="In BRGDA1; uncertain significance; dbSNP:rs199473302." evidence="83">
    <original>C</original>
    <variation>R</variation>
    <location>
        <position position="1728"/>
    </location>
</feature>
<feature type="sequence variant" id="VAR_074471" description="In BRGDA1; uncertain significance; dbSNP:rs193922726." evidence="83">
    <original>C</original>
    <variation>W</variation>
    <location>
        <position position="1728"/>
    </location>
</feature>
<feature type="sequence variant" id="VAR_074756" description="In LQT3; uncertain significance; dbSNP:rs199473303." evidence="82">
    <original>R</original>
    <variation>W</variation>
    <location>
        <position position="1739"/>
    </location>
</feature>
<feature type="sequence variant" id="VAR_026384" description="In BRGDA1; dbSNP:rs199473304." evidence="25 78 83">
    <original>G</original>
    <variation>R</variation>
    <location>
        <position position="1740"/>
    </location>
</feature>
<feature type="sequence variant" id="VAR_026385" description="In BRGDA1; dbSNP:rs199473629." evidence="28 78 83">
    <original>G</original>
    <variation>E</variation>
    <location>
        <position position="1743"/>
    </location>
</feature>
<feature type="sequence variant" id="VAR_055208" description="In BRGDA1; decreases expression at the cell membrane; yields nearly undetectable currents in transfected cells; dbSNP:rs199473305." evidence="41 83 93">
    <original>G</original>
    <variation>R</variation>
    <location>
        <position position="1743"/>
    </location>
</feature>
<feature type="sequence variant" id="VAR_076558" description="In BRGDA1; decreased localization to the plasma membrane; decreased voltage-gated sodium channel activity; dominant negative effect; changed voltage dependence for activation and inactivation; dbSNP:rs2061029111." evidence="91">
    <original>G</original>
    <variation>D</variation>
    <location>
        <position position="1748"/>
    </location>
</feature>
<feature type="sequence variant" id="VAR_074757" description="In LQT3; uncertain significance; dbSNP:rs199473307." evidence="82">
    <original>L</original>
    <variation>F</variation>
    <location>
        <position position="1761"/>
    </location>
</feature>
<feature type="sequence variant" id="VAR_074758" description="In LQT3; uncertain significance; dbSNP:rs199473308." evidence="82">
    <original>L</original>
    <variation>H</variation>
    <location>
        <position position="1761"/>
    </location>
</feature>
<feature type="sequence variant" id="VAR_055209" description="In LQT3; dbSNP:rs199473631." evidence="48 82">
    <original>V</original>
    <variation>M</variation>
    <location>
        <position position="1763"/>
    </location>
</feature>
<feature type="sequence variant" id="VAR_074472" description="In BRGDA1; uncertain significance; dbSNP:rs199473309." evidence="83">
    <original>V</original>
    <variation>F</variation>
    <location>
        <position position="1764"/>
    </location>
</feature>
<feature type="sequence variant" id="VAR_055210" description="In LQT3; affects protein trafficking; dbSNP:rs199473310." evidence="32 48">
    <original>M</original>
    <variation>L</variation>
    <location>
        <position position="1766"/>
    </location>
</feature>
<feature type="sequence variant" id="VAR_074759" description="In LQT3; uncertain significance; dbSNP:rs199473632." evidence="54">
    <original>Y</original>
    <variation>C</variation>
    <location>
        <position position="1767"/>
    </location>
</feature>
<feature type="sequence variant" id="VAR_055211" description="In LQT3; increases the rate of recovery from inactivation and the channel availability, observed as a positive shift of the steady-state inactivation curve; dbSNP:rs199473311." evidence="30">
    <original>I</original>
    <variation>V</variation>
    <location>
        <position position="1768"/>
    </location>
</feature>
<feature type="sequence variant" id="VAR_055212" description="In LQT3; dbSNP:rs199473314." evidence="48 82">
    <original>V</original>
    <variation>M</variation>
    <location>
        <position position="1777"/>
    </location>
</feature>
<feature type="sequence variant" id="VAR_068339" description="In LQT3 and BRGDA1; dbSNP:rs199473634." evidence="48 82 83">
    <original>T</original>
    <variation>M</variation>
    <location>
        <position position="1779"/>
    </location>
</feature>
<feature type="sequence variant" id="VAR_008959" description="In LQT3 and BRGDA1; dbSNP:rs137854601." evidence="7 25 48 66 82 83">
    <original>E</original>
    <variation>K</variation>
    <location>
        <position position="1784"/>
    </location>
</feature>
<feature type="sequence variant" id="VAR_009938" description="In dbSNP:rs199473316." evidence="16 54 83">
    <original>S</original>
    <variation>N</variation>
    <location>
        <position position="1787"/>
    </location>
</feature>
<feature type="sequence variant" id="VAR_001580" description="In LQT3; dbSNP:rs199473317." evidence="54 107">
    <original>D</original>
    <variation>G</variation>
    <location>
        <position position="1790"/>
    </location>
</feature>
<feature type="sequence variant" id="VAR_068475" description="In SSS1; dbSNP:rs727504495." evidence="90">
    <original>D</original>
    <variation>N</variation>
    <location>
        <position position="1792"/>
    </location>
</feature>
<feature type="sequence variant" id="VAR_019123" description="In LQT3; also in a family associating LQT syndrome and atrial fibrillation; slows the onset of activation, but does not cause a marked negative shift in the voltage dependence of inactivation or affect the kinetics of the recovery from inactivation; increases the expression of sustained Na(+) channel activity and promotes entrance into an intermediate or slowly developing inactivated state; dbSNP:rs137854614." evidence="19 48 74 82">
    <original>Y</original>
    <variation>C</variation>
    <location>
        <position position="1795"/>
    </location>
</feature>
<feature type="sequence variant" id="VAR_019124" description="In BRGDA1; accelerates the onset of activation and causes a marked negative shift in the voltage dependence of inactivation; does not affect the kinetics of the recovery from inactivation; increases the expression of sustained Na(+) channel activity and promotes entrance into an intermediate or slowly developing inactivated state; dbSNP:rs137854615." evidence="19 25">
    <original>Y</original>
    <variation>H</variation>
    <location>
        <position position="1795"/>
    </location>
</feature>
<feature type="sequence variant" id="VAR_017686" description="In LQT3 and BRGDA1; 7.3-mV negative shift of the steady-state inactivation curve and 8.1-mV positive shift of the steady-state activation curve; may reduce sodium current during the upstroke of the action potential." evidence="10 24">
    <original>Y</original>
    <variation>YD</variation>
    <location>
        <position position="1795"/>
    </location>
</feature>
<feature type="sequence variant" id="VAR_036668" description="In LQT3; digenic; the patient also carries mutation G-100 on KCNH2; dbSNP:rs137854619." evidence="56">
    <original>D</original>
    <variation>N</variation>
    <location>
        <position position="1819"/>
    </location>
</feature>
<feature type="sequence variant" id="VAR_055213" description="In LQT3; drug-induced LQT syndrome; dbSNP:rs79299226." evidence="75">
    <original>L</original>
    <variation>P</variation>
    <location>
        <position position="1825"/>
    </location>
</feature>
<feature type="sequence variant" id="VAR_055214" description="In ATFB10; dbSNP:rs199473635." evidence="65">
    <original>R</original>
    <variation>C</variation>
    <location>
        <position position="1826"/>
    </location>
</feature>
<feature type="sequence variant" id="VAR_017687" description="In LQT3; sodium current characterized by slower decay and a 2- to 3-fold increase in late sodium current; dbSNP:rs137854610." evidence="20 82">
    <original>R</original>
    <variation>H</variation>
    <location>
        <position position="1826"/>
    </location>
</feature>
<feature type="sequence variant" id="VAR_074473" description="In BRGDA1; uncertain significance; dbSNP:rs199473320." evidence="83">
    <original>Q</original>
    <variation>E</variation>
    <location>
        <position position="1832"/>
    </location>
</feature>
<feature type="sequence variant" id="VAR_074474" description="In dbSNP:rs45563942." evidence="83">
    <original>I</original>
    <variation>T</variation>
    <location>
        <position position="1836"/>
    </location>
</feature>
<feature type="sequence variant" id="VAR_001581" description="In LQT3; dbSNP:rs199473321." evidence="12 82">
    <original>D</original>
    <variation>G</variation>
    <location>
        <position position="1839"/>
    </location>
</feature>
<feature type="sequence variant" id="VAR_076559" description="In LQT3; decreased interaction with FGF12, FGF13 and FGF14; increased voltage-gated sodium channel activity; altered inactivation; dbSNP:rs794728898." evidence="98">
    <original>H</original>
    <variation>R</variation>
    <location>
        <position position="1849"/>
    </location>
</feature>
<feature type="sequence variant" id="VAR_055215" description="In BRGDA1; decreased I(Na) density; shift of the steady-state inactivation towards negative potentials; dbSNP:rs199473322." evidence="62">
    <original>C</original>
    <variation>S</variation>
    <location>
        <position position="1850"/>
    </location>
</feature>
<feature type="sequence variant" id="VAR_074475" description="In BRGDA1; uncertain significance; dbSNP:rs199473636." evidence="83">
    <original>V</original>
    <variation>I</variation>
    <location>
        <position position="1861"/>
    </location>
</feature>
<feature type="sequence variant" id="VAR_074476" description="In BRGDA1; uncertain significance; dbSNP:rs199473323." evidence="83">
    <original>K</original>
    <variation>N</variation>
    <location>
        <position position="1872"/>
    </location>
</feature>
<feature type="sequence variant" id="VAR_055216" description="In atrial fibrillation; pronounced depolarized shift of the voltage dependence of steady-state inactivation; no persistent sodium current; dbSNP:rs199473324." evidence="73">
    <original>M</original>
    <variation>T</variation>
    <location>
        <position position="1875"/>
    </location>
</feature>
<feature type="sequence variant" id="VAR_074760" description="In LQT3; uncertain significance; dbSNP:rs45465995." evidence="82">
    <original>R</original>
    <variation>W</variation>
    <location>
        <position position="1897"/>
    </location>
</feature>
<feature type="sequence variant" id="VAR_074477" description="In dbSNP:rs199473325." evidence="83">
    <original>E</original>
    <variation>K</variation>
    <location>
        <position position="1901"/>
    </location>
</feature>
<feature type="sequence variant" id="VAR_074761" description="In LQT3; uncertain significance; dbSNP:rs199473325." evidence="82">
    <original>E</original>
    <variation>Q</variation>
    <location>
        <position position="1901"/>
    </location>
</feature>
<feature type="sequence variant" id="VAR_074478" description="In BRGDA1; uncertain significance; dbSNP:rs864622270." evidence="83">
    <original>V</original>
    <variation>L</variation>
    <location>
        <position position="1903"/>
    </location>
</feature>
<feature type="sequence variant" id="VAR_055217" description="In LQT3; promotes late sodium currents by increasing the propensity of the channel to reopen during prolonged depolarization; dbSNP:rs150264233." evidence="71">
    <original>S</original>
    <variation>L</variation>
    <location>
        <position position="1904"/>
    </location>
</feature>
<feature type="sequence variant" id="VAR_068340" description="In LQT3; dbSNP:rs199473326." evidence="48">
    <original>Q</original>
    <variation>R</variation>
    <location>
        <position position="1909"/>
    </location>
</feature>
<feature type="sequence variant" id="VAR_074762" description="In LQT3; uncertain significance; dbSNP:rs199473327." evidence="54">
    <original>R</original>
    <variation>H</variation>
    <location>
        <position position="1913"/>
    </location>
</feature>
<feature type="sequence variant" id="VAR_074479" description="In dbSNP:rs199473328." evidence="83">
    <original>R</original>
    <variation>C</variation>
    <location>
        <position position="1919"/>
    </location>
</feature>
<feature type="sequence variant" id="VAR_017688" description="In BRGDA1; significantly affect cardiac sodium channel characteristics; associated with an increase in inward sodium current during the action potential upstroke; dbSNP:rs137854603." evidence="13 28 78 83">
    <original>A</original>
    <variation>T</variation>
    <location>
        <position position="1924"/>
    </location>
</feature>
<feature type="sequence variant" id="VAR_055218" description="In BRGDA1; uncertain significance; dbSNP:rs199473637." evidence="83">
    <original>G</original>
    <variation>S</variation>
    <location>
        <position position="1935"/>
    </location>
</feature>
<feature type="sequence variant" id="VAR_074480" description="In BRGDA1; uncertain significance; dbSNP:rs199473329." evidence="83">
    <original>E</original>
    <variation>K</variation>
    <location>
        <position position="1938"/>
    </location>
</feature>
<feature type="sequence variant" id="VAR_068341" description="In LQT3; dbSNP:rs199473330." evidence="48">
    <original>A</original>
    <variation>S</variation>
    <location>
        <position position="1949"/>
    </location>
</feature>
<feature type="sequence variant" id="VAR_026386" description="In BRGDA1, ATFB10 and LQT3; uncertain significance; dbSNP:rs41315493." evidence="25 65 83">
    <original>V</original>
    <variation>L</variation>
    <location>
        <position position="1951"/>
    </location>
</feature>
<feature type="sequence variant" id="VAR_055219" description="In ATFB10; dbSNP:rs41315493." evidence="65">
    <original>V</original>
    <variation>M</variation>
    <location>
        <position position="1951"/>
    </location>
</feature>
<feature type="sequence variant" id="VAR_068342" description="Found in a patient with long QT syndrome; uncertain significance; dbSNP:rs199473331." evidence="48 83">
    <original>R</original>
    <variation>Q</variation>
    <location>
        <position position="1958"/>
    </location>
</feature>
<feature type="sequence variant" id="VAR_074481" description="In dbSNP:rs199473638." evidence="83">
    <original>P</original>
    <variation>L</variation>
    <location>
        <position position="1962"/>
    </location>
</feature>
<feature type="sequence variant" id="VAR_074482" description="In dbSNP:rs199473333." evidence="83">
    <original>I</original>
    <variation>M</variation>
    <location>
        <position position="1968"/>
    </location>
</feature>
<feature type="sequence variant" id="VAR_055220" description="In BRGDA1; dbSNP:rs199473639." evidence="75">
    <original>I</original>
    <variation>S</variation>
    <location>
        <position position="1968"/>
    </location>
</feature>
<feature type="sequence variant" id="VAR_074763" description="In LQT3; uncertain significance; dbSNP:rs199473334." evidence="82">
    <original>Y</original>
    <variation>N</variation>
    <location>
        <position position="1977"/>
    </location>
</feature>
<feature type="sequence variant" id="VAR_065865" description="In ATFB10; dbSNP:rs199473335." evidence="61">
    <original>N</original>
    <variation>K</variation>
    <location>
        <position position="1987"/>
    </location>
</feature>
<feature type="sequence variant" id="VAR_074483" description="In dbSNP:rs199473336." evidence="83">
    <original>R</original>
    <variation>Q</variation>
    <location>
        <position position="1991"/>
    </location>
</feature>
<feature type="sequence variant" id="VAR_055221" description="In LQT3 and BRGDA1; also found in patients with atrial fibrillation; results in channels with decreased peak and persistent current amplitudes; increased closed-state and slow inactivation; decelerated recovery from inactivation; dbSNP:rs41311117." evidence="65 67 83">
    <original>F</original>
    <variation>L</variation>
    <location>
        <position position="2004"/>
    </location>
</feature>
<feature type="sequence variant" id="VAR_074484" description="In BRGDA1 and LQT3; dbSNP:rs41311117." evidence="82 83">
    <original>F</original>
    <variation>V</variation>
    <location>
        <position position="2004"/>
    </location>
</feature>
<feature type="sequence variant" id="VAR_055222" description="Found in a patient with long QT syndrome; uncertain significance; causes an increase of persistent sodium current and produces a depolarizing shift in voltage dependence of inactivation; dbSNP:rs45489199." evidence="83 84">
    <original>P</original>
    <variation>A</variation>
    <location>
        <position position="2006"/>
    </location>
</feature>
<feature type="sequence variant" id="VAR_074764" description="In LQT3; uncertain significance; dbSNP:rs199473640." evidence="82">
    <original>R</original>
    <variation>C</variation>
    <location>
        <position position="2012"/>
    </location>
</feature>
<feature type="mutagenesis site" description="Induces accelerated recovery from channel fast inactivation." evidence="50">
    <original>Q</original>
    <variation>K</variation>
    <location>
        <position position="1476"/>
    </location>
</feature>
<feature type="mutagenesis site" description="Complete loss of channel inhibition by the spider Jingzhaotoxin-I." evidence="99">
    <original>D</original>
    <variation>A</variation>
    <location>
        <position position="1610"/>
    </location>
</feature>
<feature type="mutagenesis site" description="High decrease in affinity to the sea anemone toxin anthopleurin-B." evidence="95">
    <original>D</original>
    <variation>R</variation>
    <location>
        <position position="1610"/>
    </location>
</feature>
<feature type="mutagenesis site" description="4.2-fold decrease of channel inhibition potency by the spider Jingzhaotoxin-I." evidence="99">
    <original>K</original>
    <variation>A</variation>
    <location>
        <position position="1614"/>
    </location>
</feature>
<feature type="mutagenesis site" description="Abolishes calcium response on channel inactivation." evidence="77">
    <original>DPE</original>
    <variation>APA</variation>
    <location>
        <begin position="1802"/>
        <end position="1804"/>
    </location>
</feature>
<feature type="mutagenesis site" description="Strongly reduces interaction with NEDD4, NEDD4L or WWP2." evidence="46">
    <original>P</original>
    <variation>A</variation>
    <location>
        <position position="1974"/>
    </location>
</feature>
<feature type="mutagenesis site" description="Strongly reduces interaction with NEDD4, NEDD4L or WWP2." evidence="46">
    <original>P</original>
    <variation>A</variation>
    <location>
        <position position="1975"/>
    </location>
</feature>
<feature type="mutagenesis site" description="Strongly reduces interaction with NEDD4, NEDD4L or WWP2." evidence="46">
    <original>S</original>
    <variation>A</variation>
    <location>
        <position position="1976"/>
    </location>
</feature>
<feature type="mutagenesis site" description="Strongly reduces interaction with NEDD4, NEDD4L or WWP2." evidence="42 46">
    <original>Y</original>
    <variation>A</variation>
    <location>
        <position position="1977"/>
    </location>
</feature>
<feature type="mutagenesis site" description="No effect on interaction with NEDD4, NEDD4L or WWP2." evidence="46">
    <original>D</original>
    <variation>A</variation>
    <location>
        <position position="1978"/>
    </location>
</feature>
<feature type="mutagenesis site" description="No effect on interaction with NEDD4, NEDD4L or WWP2." evidence="46">
    <original>S</original>
    <variation>A</variation>
    <location>
        <position position="1979"/>
    </location>
</feature>
<feature type="mutagenesis site" description="No effect on interaction with NEDD4, NEDD4L or WWP2." evidence="42 46">
    <original>V</original>
    <variation>A</variation>
    <location>
        <position position="1980"/>
    </location>
</feature>
<feature type="mutagenesis site" description="Strongly reduces interaction with NEDD4L." evidence="42 46">
    <original>V</original>
    <variation>D</variation>
    <variation>R</variation>
    <location>
        <position position="1980"/>
    </location>
</feature>
<feature type="sequence conflict" description="In Ref. 6; ABR15763/ABR15764." evidence="117" ref="6">
    <original>K</original>
    <variation>R</variation>
    <location>
        <position position="91"/>
    </location>
</feature>
<feature type="sequence conflict" description="In Ref. 6; ABR15763/ABR15764." evidence="117" ref="6">
    <original>L</original>
    <variation>P</variation>
    <location>
        <position position="96"/>
    </location>
</feature>
<feature type="sequence conflict" description="In Ref. 1; AAA58644." evidence="117" ref="1">
    <original>I</original>
    <variation>V</variation>
    <location>
        <position position="120"/>
    </location>
</feature>
<feature type="sequence conflict" description="In Ref. 6; ABR15763/ABR15764." evidence="117" ref="6">
    <original>Y</original>
    <variation>H</variation>
    <location>
        <position position="162"/>
    </location>
</feature>
<feature type="sequence conflict" description="In Ref. 1; AAA58644." evidence="117" ref="1">
    <original>G</original>
    <variation>A</variation>
    <location>
        <position position="180"/>
    </location>
</feature>
<feature type="sequence conflict" description="In Ref. 6; ABR15763/ABR15764." evidence="117" ref="6">
    <original>F</original>
    <variation>S</variation>
    <location>
        <position position="181"/>
    </location>
</feature>
<feature type="sequence conflict" description="In Ref. 5; BAD12084/BAD12085 and 6; ABR15763/ABR15764." evidence="117" ref="5 6">
    <original>D</original>
    <variation>G</variation>
    <location>
        <position position="191"/>
    </location>
</feature>
<feature type="sequence conflict" description="In Ref. 6; ABR15763/ABR15764." evidence="117" ref="6">
    <original>L</original>
    <variation>P</variation>
    <location>
        <position position="196"/>
    </location>
</feature>
<feature type="sequence conflict" description="In Ref. 5; BAD12084/BAD12085, 6; ABR15763/ABR15764 and 9; AAI44622/AAI40814." evidence="117" ref="5 6 9">
    <original>V</original>
    <variation>L</variation>
    <location>
        <position position="215"/>
    </location>
</feature>
<feature type="sequence conflict" description="In Ref. 5; BAD12084/BAD12085, 6; ABR15763/ABR15764 and 9; AAI44622/AAI40814." evidence="117" ref="5 6 9">
    <original>S</original>
    <variation>P</variation>
    <location>
        <position position="234"/>
    </location>
</feature>
<feature type="sequence conflict" description="In Ref. 6; ABR15763/ABR15764." evidence="117" ref="6">
    <original>C</original>
    <variation>R</variation>
    <location>
        <position position="280"/>
    </location>
</feature>
<feature type="sequence conflict" description="In Ref. 6; ABR15763/ABR15764." evidence="117" ref="6">
    <original>T</original>
    <variation>I</variation>
    <location>
        <position position="290"/>
    </location>
</feature>
<feature type="sequence conflict" description="In Ref. 6; ABR15763/ABR15764." evidence="117" ref="6">
    <original>S</original>
    <variation>N</variation>
    <location>
        <position position="516"/>
    </location>
</feature>
<feature type="sequence conflict" description="In Ref. 6; ABR15763/ABR15764." evidence="117" ref="6">
    <original>D</original>
    <variation>N</variation>
    <location>
        <position position="608"/>
    </location>
</feature>
<feature type="sequence conflict" description="In Ref. 4; AAO91669." evidence="117" ref="4">
    <original>L</original>
    <variation>I</variation>
    <location>
        <position position="618"/>
    </location>
</feature>
<feature type="sequence conflict" description="In Ref. 5; BAD12084/BAD12085." evidence="117" ref="5">
    <original>F</original>
    <variation>V</variation>
    <location>
        <position position="653"/>
    </location>
</feature>
<feature type="sequence conflict" description="In Ref. 6; ABR15763/ABR15764." evidence="117" ref="6">
    <original>V</original>
    <variation>G</variation>
    <location>
        <position position="918"/>
    </location>
</feature>
<feature type="sequence conflict" description="In Ref. 1; AAA58644, 5; BAD12084/BAD12085 and 6; ABR15763/ABR15764." evidence="117" ref="1 5 6">
    <original>Q</original>
    <variation>H</variation>
    <location>
        <position position="987"/>
    </location>
</feature>
<feature type="sequence conflict" description="In Ref. 1; AAA58644 and 5; BAD12084." evidence="117" ref="1 5">
    <original>G</original>
    <variation>W</variation>
    <location>
        <position position="1085"/>
    </location>
</feature>
<feature type="sequence conflict" description="In Ref. 1; AAA58644 and 5; BAD12084." evidence="117" ref="1 5">
    <original>E</original>
    <variation>R</variation>
    <location>
        <position position="1087"/>
    </location>
</feature>
<feature type="sequence conflict" description="In Ref. 1; AAA58644 and 5; BAD12084." evidence="117" ref="1 5">
    <original>A</original>
    <variation>G</variation>
    <location>
        <position position="1088"/>
    </location>
</feature>
<feature type="sequence conflict" description="In Ref. 6; ABR15763/ABR15764." evidence="117" ref="6">
    <original>L</original>
    <variation>H</variation>
    <location>
        <position position="1342"/>
    </location>
</feature>
<feature type="sequence conflict" description="In Ref. 5; BAD12084/BAD12085." evidence="117" ref="5">
    <original>K</original>
    <variation>T</variation>
    <location>
        <position position="1479"/>
    </location>
</feature>
<feature type="sequence conflict" description="In Ref. 7; ABQ01244." evidence="117" ref="7">
    <original>LG</original>
    <variation>IR</variation>
    <location>
        <begin position="1480"/>
        <end position="1481"/>
    </location>
</feature>
<feature type="sequence conflict" description="In Ref. 10; BAD92103." evidence="117" ref="10">
    <original>F</original>
    <variation>S</variation>
    <location>
        <position position="1616"/>
    </location>
</feature>
<feature type="sequence conflict" description="In Ref. 6; ABR15763/ABR15764." evidence="117" ref="6">
    <original>L</original>
    <variation>P</variation>
    <location>
        <position position="1657"/>
    </location>
</feature>
<feature type="sequence conflict" description="In Ref. 6; ABR15763/ABR15764." evidence="117" ref="6">
    <original>C</original>
    <variation>R</variation>
    <location>
        <position position="1850"/>
    </location>
</feature>
<feature type="helix" evidence="126">
    <location>
        <begin position="121"/>
        <end position="128"/>
    </location>
</feature>
<feature type="helix" evidence="126">
    <location>
        <begin position="131"/>
        <end position="148"/>
    </location>
</feature>
<feature type="helix" evidence="126">
    <location>
        <begin position="157"/>
        <end position="178"/>
    </location>
</feature>
<feature type="strand" evidence="126">
    <location>
        <begin position="185"/>
        <end position="191"/>
    </location>
</feature>
<feature type="helix" evidence="126">
    <location>
        <begin position="193"/>
        <end position="207"/>
    </location>
</feature>
<feature type="helix" evidence="126">
    <location>
        <begin position="218"/>
        <end position="223"/>
    </location>
</feature>
<feature type="helix" evidence="126">
    <location>
        <begin position="224"/>
        <end position="227"/>
    </location>
</feature>
<feature type="helix" evidence="126">
    <location>
        <begin position="228"/>
        <end position="231"/>
    </location>
</feature>
<feature type="strand" evidence="127">
    <location>
        <begin position="232"/>
        <end position="235"/>
    </location>
</feature>
<feature type="helix" evidence="126">
    <location>
        <begin position="236"/>
        <end position="250"/>
    </location>
</feature>
<feature type="helix" evidence="126">
    <location>
        <begin position="253"/>
        <end position="272"/>
    </location>
</feature>
<feature type="turn" evidence="126">
    <location>
        <begin position="273"/>
        <end position="276"/>
    </location>
</feature>
<feature type="strand" evidence="126">
    <location>
        <begin position="279"/>
        <end position="282"/>
    </location>
</feature>
<feature type="strand" evidence="126">
    <location>
        <begin position="288"/>
        <end position="292"/>
    </location>
</feature>
<feature type="strand" evidence="126">
    <location>
        <begin position="294"/>
        <end position="302"/>
    </location>
</feature>
<feature type="helix" evidence="126">
    <location>
        <begin position="304"/>
        <end position="307"/>
    </location>
</feature>
<feature type="strand" evidence="126">
    <location>
        <begin position="318"/>
        <end position="320"/>
    </location>
</feature>
<feature type="strand" evidence="126">
    <location>
        <begin position="328"/>
        <end position="332"/>
    </location>
</feature>
<feature type="strand" evidence="126">
    <location>
        <begin position="339"/>
        <end position="342"/>
    </location>
</feature>
<feature type="helix" evidence="127">
    <location>
        <begin position="349"/>
        <end position="351"/>
    </location>
</feature>
<feature type="strand" evidence="126">
    <location>
        <begin position="355"/>
        <end position="357"/>
    </location>
</feature>
<feature type="helix" evidence="126">
    <location>
        <begin position="358"/>
        <end position="369"/>
    </location>
</feature>
<feature type="turn" evidence="127">
    <location>
        <begin position="370"/>
        <end position="373"/>
    </location>
</feature>
<feature type="helix" evidence="126">
    <location>
        <begin position="374"/>
        <end position="385"/>
    </location>
</feature>
<feature type="helix" evidence="126">
    <location>
        <begin position="387"/>
        <end position="389"/>
    </location>
</feature>
<feature type="helix" evidence="126">
    <location>
        <begin position="390"/>
        <end position="399"/>
    </location>
</feature>
<feature type="helix" evidence="126">
    <location>
        <begin position="401"/>
        <end position="428"/>
    </location>
</feature>
<feature type="helix" evidence="126">
    <location>
        <begin position="700"/>
        <end position="714"/>
    </location>
</feature>
<feature type="turn" evidence="126">
    <location>
        <begin position="717"/>
        <end position="720"/>
    </location>
</feature>
<feature type="helix" evidence="126">
    <location>
        <begin position="721"/>
        <end position="734"/>
    </location>
</feature>
<feature type="strand" evidence="127">
    <location>
        <begin position="738"/>
        <end position="740"/>
    </location>
</feature>
<feature type="helix" evidence="126">
    <location>
        <begin position="745"/>
        <end position="770"/>
    </location>
</feature>
<feature type="helix" evidence="126">
    <location>
        <begin position="773"/>
        <end position="776"/>
    </location>
</feature>
<feature type="turn" evidence="126">
    <location>
        <begin position="780"/>
        <end position="782"/>
    </location>
</feature>
<feature type="helix" evidence="126">
    <location>
        <begin position="783"/>
        <end position="797"/>
    </location>
</feature>
<feature type="helix" evidence="126">
    <location>
        <begin position="806"/>
        <end position="812"/>
    </location>
</feature>
<feature type="helix" evidence="126">
    <location>
        <begin position="813"/>
        <end position="819"/>
    </location>
</feature>
<feature type="helix" evidence="126">
    <location>
        <begin position="825"/>
        <end position="835"/>
    </location>
</feature>
<feature type="turn" evidence="126">
    <location>
        <begin position="836"/>
        <end position="838"/>
    </location>
</feature>
<feature type="helix" evidence="126">
    <location>
        <begin position="842"/>
        <end position="861"/>
    </location>
</feature>
<feature type="turn" evidence="126">
    <location>
        <begin position="862"/>
        <end position="864"/>
    </location>
</feature>
<feature type="helix" evidence="126">
    <location>
        <begin position="865"/>
        <end position="868"/>
    </location>
</feature>
<feature type="strand" evidence="126">
    <location>
        <begin position="872"/>
        <end position="874"/>
    </location>
</feature>
<feature type="helix" evidence="126">
    <location>
        <begin position="884"/>
        <end position="896"/>
    </location>
</feature>
<feature type="helix" evidence="126">
    <location>
        <begin position="900"/>
        <end position="910"/>
    </location>
</feature>
<feature type="helix" evidence="126">
    <location>
        <begin position="912"/>
        <end position="942"/>
    </location>
</feature>
<feature type="helix" evidence="126">
    <location>
        <begin position="1191"/>
        <end position="1203"/>
    </location>
</feature>
<feature type="helix" evidence="126">
    <location>
        <begin position="1205"/>
        <end position="1220"/>
    </location>
</feature>
<feature type="helix" evidence="126">
    <location>
        <begin position="1221"/>
        <end position="1224"/>
    </location>
</feature>
<feature type="turn" evidence="127">
    <location>
        <begin position="1230"/>
        <end position="1232"/>
    </location>
</feature>
<feature type="helix" evidence="126">
    <location>
        <begin position="1233"/>
        <end position="1267"/>
    </location>
</feature>
<feature type="strand" evidence="126">
    <location>
        <begin position="1269"/>
        <end position="1271"/>
    </location>
</feature>
<feature type="helix" evidence="126">
    <location>
        <begin position="1272"/>
        <end position="1290"/>
    </location>
</feature>
<feature type="helix" evidence="126">
    <location>
        <begin position="1299"/>
        <end position="1303"/>
    </location>
</feature>
<feature type="helix" evidence="126">
    <location>
        <begin position="1304"/>
        <end position="1315"/>
    </location>
</feature>
<feature type="helix" evidence="126">
    <location>
        <begin position="1318"/>
        <end position="1329"/>
    </location>
</feature>
<feature type="helix" evidence="126">
    <location>
        <begin position="1332"/>
        <end position="1356"/>
    </location>
</feature>
<feature type="strand" evidence="126">
    <location>
        <begin position="1361"/>
        <end position="1364"/>
    </location>
</feature>
<feature type="turn" evidence="126">
    <location>
        <begin position="1366"/>
        <end position="1368"/>
    </location>
</feature>
<feature type="turn" evidence="126">
    <location>
        <begin position="1375"/>
        <end position="1377"/>
    </location>
</feature>
<feature type="helix" evidence="126">
    <location>
        <begin position="1381"/>
        <end position="1386"/>
    </location>
</feature>
<feature type="strand" evidence="126">
    <location>
        <begin position="1394"/>
        <end position="1397"/>
    </location>
</feature>
<feature type="strand" evidence="126">
    <location>
        <begin position="1402"/>
        <end position="1404"/>
    </location>
</feature>
<feature type="helix" evidence="126">
    <location>
        <begin position="1405"/>
        <end position="1416"/>
    </location>
</feature>
<feature type="helix" evidence="126">
    <location>
        <begin position="1422"/>
        <end position="1429"/>
    </location>
</feature>
<feature type="strand" evidence="126">
    <location>
        <begin position="1433"/>
        <end position="1436"/>
    </location>
</feature>
<feature type="turn" evidence="126">
    <location>
        <begin position="1440"/>
        <end position="1443"/>
    </location>
</feature>
<feature type="helix" evidence="126">
    <location>
        <begin position="1444"/>
        <end position="1446"/>
    </location>
</feature>
<feature type="helix" evidence="126">
    <location>
        <begin position="1447"/>
        <end position="1477"/>
    </location>
</feature>
<feature type="strand" evidence="126">
    <location>
        <begin position="1480"/>
        <end position="1482"/>
    </location>
</feature>
<feature type="helix" evidence="123">
    <location>
        <begin position="1491"/>
        <end position="1500"/>
    </location>
</feature>
<feature type="strand" evidence="126">
    <location>
        <begin position="1501"/>
        <end position="1504"/>
    </location>
</feature>
<feature type="helix" evidence="125">
    <location>
        <begin position="1516"/>
        <end position="1526"/>
    </location>
</feature>
<feature type="helix" evidence="126">
    <location>
        <begin position="1528"/>
        <end position="1546"/>
    </location>
</feature>
<feature type="helix" evidence="126">
    <location>
        <begin position="1554"/>
        <end position="1581"/>
    </location>
</feature>
<feature type="strand" evidence="126">
    <location>
        <begin position="1583"/>
        <end position="1586"/>
    </location>
</feature>
<feature type="strand" evidence="126">
    <location>
        <begin position="1589"/>
        <end position="1591"/>
    </location>
</feature>
<feature type="helix" evidence="126">
    <location>
        <begin position="1592"/>
        <end position="1608"/>
    </location>
</feature>
<feature type="helix" evidence="126">
    <location>
        <begin position="1609"/>
        <end position="1614"/>
    </location>
</feature>
<feature type="helix" evidence="126">
    <location>
        <begin position="1621"/>
        <end position="1626"/>
    </location>
</feature>
<feature type="helix" evidence="126">
    <location>
        <begin position="1627"/>
        <end position="1635"/>
    </location>
</feature>
<feature type="turn" evidence="126">
    <location>
        <begin position="1636"/>
        <end position="1639"/>
    </location>
</feature>
<feature type="helix" evidence="126">
    <location>
        <begin position="1641"/>
        <end position="1651"/>
    </location>
</feature>
<feature type="helix" evidence="126">
    <location>
        <begin position="1654"/>
        <end position="1678"/>
    </location>
</feature>
<feature type="turn" evidence="127">
    <location>
        <begin position="1679"/>
        <end position="1681"/>
    </location>
</feature>
<feature type="strand" evidence="126">
    <location>
        <begin position="1690"/>
        <end position="1696"/>
    </location>
</feature>
<feature type="helix" evidence="126">
    <location>
        <begin position="1697"/>
        <end position="1708"/>
    </location>
</feature>
<feature type="turn" evidence="126">
    <location>
        <begin position="1709"/>
        <end position="1713"/>
    </location>
</feature>
<feature type="helix" evidence="126">
    <location>
        <begin position="1714"/>
        <end position="1720"/>
    </location>
</feature>
<feature type="strand" evidence="126">
    <location>
        <begin position="1724"/>
        <end position="1727"/>
    </location>
</feature>
<feature type="strand" evidence="127">
    <location>
        <begin position="1735"/>
        <end position="1737"/>
    </location>
</feature>
<feature type="helix" evidence="126">
    <location>
        <begin position="1745"/>
        <end position="1780"/>
    </location>
</feature>
<feature type="helix" evidence="122">
    <location>
        <begin position="1788"/>
        <end position="1801"/>
    </location>
</feature>
<feature type="strand" evidence="122">
    <location>
        <begin position="1807"/>
        <end position="1810"/>
    </location>
</feature>
<feature type="helix" evidence="122">
    <location>
        <begin position="1811"/>
        <end position="1813"/>
    </location>
</feature>
<feature type="helix" evidence="122">
    <location>
        <begin position="1814"/>
        <end position="1820"/>
    </location>
</feature>
<feature type="turn" evidence="122">
    <location>
        <begin position="1823"/>
        <end position="1825"/>
    </location>
</feature>
<feature type="helix" evidence="122">
    <location>
        <begin position="1832"/>
        <end position="1837"/>
    </location>
</feature>
<feature type="strand" evidence="122">
    <location>
        <begin position="1841"/>
        <end position="1843"/>
    </location>
</feature>
<feature type="turn" evidence="122">
    <location>
        <begin position="1844"/>
        <end position="1846"/>
    </location>
</feature>
<feature type="strand" evidence="122">
    <location>
        <begin position="1847"/>
        <end position="1849"/>
    </location>
</feature>
<feature type="helix" evidence="122">
    <location>
        <begin position="1850"/>
        <end position="1862"/>
    </location>
</feature>
<feature type="helix" evidence="122">
    <location>
        <begin position="1866"/>
        <end position="1882"/>
    </location>
</feature>
<feature type="helix" evidence="122">
    <location>
        <begin position="1886"/>
        <end position="1888"/>
    </location>
</feature>
<feature type="strand" evidence="124">
    <location>
        <begin position="1891"/>
        <end position="1894"/>
    </location>
</feature>
<feature type="helix" evidence="122">
    <location>
        <begin position="1896"/>
        <end position="1926"/>
    </location>
</feature>
<gene>
    <name evidence="120" type="primary">SCN5A</name>
</gene>
<comment type="function">
    <text evidence="3 17 22 35 38 77 86 91 93 94 96 97 98 100">Pore-forming subunit of Nav1.5, a voltage-gated sodium (Nav) channel that directly mediates the depolarizing phase of action potentials in excitable membranes. Navs, also called VGSCs (voltage-gated sodium channels) or VDSCs (voltage-dependent sodium channels), operate by switching between closed and open conformations depending on the voltage difference across the membrane. In the open conformation they allow Na(+) ions to selectively pass through the pore, along their electrochemical gradient. The influx of Na(+) ions provokes membrane depolarization, initiating the propagation of electrical signals throughout cells and tissues (PubMed:1309946, PubMed:21447824, PubMed:23085483, PubMed:23420830, PubMed:25370050, PubMed:26279430, PubMed:26392562, PubMed:26776555). Nav1.5 is the predominant sodium channel expressed in myocardial cells and it is responsible for the initial upstroke of the action potential in cardiac myocytes, thereby initiating the heartbeat (PubMed:11234013, PubMed:11804990, PubMed:12569159, PubMed:1309946). Required for normal electrical conduction including formation of the infranodal ventricular conduction system and normal action potential configuration, as a result of its interaction with XIRP2 (By similarity).</text>
</comment>
<comment type="catalytic activity">
    <reaction evidence="23 35 38">
        <text>Na(+)(in) = Na(+)(out)</text>
        <dbReference type="Rhea" id="RHEA:34963"/>
        <dbReference type="ChEBI" id="CHEBI:29101"/>
    </reaction>
</comment>
<comment type="activity regulation">
    <text evidence="38 77">Channel inactivation is regulated by intracellular calcium levels (PubMed:19074138). It is a tetrodotoxin-resistant voltage-gated Na(+) channel (Nav) (PubMed:1309946).</text>
</comment>
<comment type="subunit">
    <text evidence="2 3 42 46 47 81 85 88 89 96 98 99 119">Cannot form the same regulatory interactions with beta subunits as other Navs do (By similarity). Interacts with the PDZ domain of the syntrophin SNTA1, SNTB1 and SNTB2 (By similarity). Interacts with NEDD4, NEDD4L, WWP2 and GPD1L (PubMed:15217910, PubMed:15548568, PubMed:19666841). Interacts with CALM (PubMed:21167176, PubMed:22705208, PubMed:25370050). Interacts with FGF13; the interaction is direct and FGF13 may regulate SNC5A density at membranes and function (PubMed:21817159, PubMed:22705208, PubMed:26392562). May also interact with FGF12 and FGF14 (PubMed:26392562). Interacts with TMEM233 (PubMed:37117223). Interacts with the spider Jingzhaotoxin-I (AC P83974, AC B1P1B7, AC B1P1B8) (PubMed:26721415). Interacts with ANK3 (PubMed:15579534). Interacts with PKP2 (via N-terminus) (By similarity). Interacts with XIRP2; the interaction is required for normal action potential configuration in the heart (By similarity).</text>
</comment>
<comment type="interaction">
    <interactant intactId="EBI-726858">
        <id>Q14524</id>
    </interactant>
    <interactant intactId="EBI-397435">
        <id>P62158</id>
        <label>CALM3</label>
    </interactant>
    <organismsDiffer>false</organismsDiffer>
    <experiments>14</experiments>
</comment>
<comment type="interaction">
    <interactant intactId="EBI-726858">
        <id>Q14524</id>
    </interactant>
    <interactant intactId="EBI-351018">
        <id>Q13557</id>
        <label>CAMK2D</label>
    </interactant>
    <organismsDiffer>false</organismsDiffer>
    <experiments>16</experiments>
</comment>
<comment type="interaction">
    <interactant intactId="EBI-726858">
        <id>Q14524</id>
    </interactant>
    <interactant intactId="EBI-10699759">
        <id>P61328-2</id>
        <label>FGF12</label>
    </interactant>
    <organismsDiffer>false</organismsDiffer>
    <experiments>4</experiments>
</comment>
<comment type="interaction">
    <interactant intactId="EBI-726858">
        <id>Q14524</id>
    </interactant>
    <interactant intactId="EBI-1047946">
        <id>P26045</id>
        <label>PTPN3</label>
    </interactant>
    <organismsDiffer>false</organismsDiffer>
    <experiments>2</experiments>
</comment>
<comment type="interaction">
    <interactant intactId="EBI-14276801">
        <id>Q14524-3</id>
    </interactant>
    <interactant intactId="EBI-11954519">
        <id>Q49AR9</id>
        <label>ANKS1A</label>
    </interactant>
    <organismsDiffer>false</organismsDiffer>
    <experiments>3</experiments>
</comment>
<comment type="interaction">
    <interactant intactId="EBI-14276801">
        <id>Q14524-3</id>
    </interactant>
    <interactant intactId="EBI-11524452">
        <id>Q8N9N5-2</id>
        <label>BANP</label>
    </interactant>
    <organismsDiffer>false</organismsDiffer>
    <experiments>3</experiments>
</comment>
<comment type="interaction">
    <interactant intactId="EBI-14276801">
        <id>Q14524-3</id>
    </interactant>
    <interactant intactId="EBI-748366">
        <id>Q9Y3B6</id>
        <label>EMC9</label>
    </interactant>
    <organismsDiffer>false</organismsDiffer>
    <experiments>3</experiments>
</comment>
<comment type="interaction">
    <interactant intactId="EBI-14276801">
        <id>Q14524-3</id>
    </interactant>
    <interactant intactId="EBI-750487">
        <id>Q8WW24</id>
        <label>TEKT4</label>
    </interactant>
    <organismsDiffer>false</organismsDiffer>
    <experiments>3</experiments>
</comment>
<comment type="interaction">
    <interactant intactId="EBI-14276801">
        <id>Q14524-3</id>
    </interactant>
    <interactant intactId="EBI-746595">
        <id>Q96E35</id>
        <label>ZMYND19</label>
    </interactant>
    <organismsDiffer>false</organismsDiffer>
    <experiments>4</experiments>
</comment>
<comment type="subcellular location">
    <subcellularLocation>
        <location evidence="38 77 86 91 93 96 97">Cell membrane</location>
        <topology evidence="2">Multi-pass membrane protein</topology>
    </subcellularLocation>
    <subcellularLocation>
        <location evidence="86">Cytoplasm</location>
        <location evidence="86">Perinuclear region</location>
    </subcellularLocation>
    <subcellularLocation>
        <location evidence="2">Cell membrane</location>
        <location evidence="2">Sarcolemma</location>
        <location evidence="2">T-tubule</location>
    </subcellularLocation>
    <subcellularLocation>
        <location evidence="2">Cell junction</location>
    </subcellularLocation>
    <text evidence="2 86 93">RANGRF promotes trafficking to the cell membrane. Colocalizes with PKP2 at intercalated disks in the heart (By similarity).</text>
</comment>
<comment type="alternative products">
    <event type="alternative splicing"/>
    <isoform>
        <id>Q14524-1</id>
        <name>1</name>
        <name>CAG-inclusive variant</name>
        <name>Nav1.5c</name>
        <sequence type="displayed"/>
    </isoform>
    <isoform>
        <id>Q14524-2</id>
        <name>2</name>
        <name>Nav1.5b</name>
        <sequence type="described" ref="VSP_037478"/>
    </isoform>
    <isoform>
        <id>Q14524-3</id>
        <name>3</name>
        <sequence type="described" ref="VSP_037477 VSP_037478 VSP_037481"/>
    </isoform>
    <isoform>
        <id>Q14524-4</id>
        <name>4</name>
        <name>Nav1.5e</name>
        <name>neonatal</name>
        <sequence type="described" ref="VSP_037477"/>
    </isoform>
    <isoform>
        <id>Q14524-5</id>
        <name>5</name>
        <name>Ex18del</name>
        <name>Nav1.5a</name>
        <sequence type="described" ref="VSP_037477 VSP_037479"/>
    </isoform>
    <isoform>
        <id>Q14524-6</id>
        <name>6</name>
        <name>Ex24del</name>
        <name>Nav1.5f</name>
        <sequence type="described" ref="VSP_037477 VSP_037480"/>
    </isoform>
</comment>
<comment type="tissue specificity">
    <text evidence="31 38">Found in jejunal circular smooth muscle cells (at protein level). Expressed in human atrial and ventricular cardiac muscle but not in adult skeletal muscle, brain, myometrium, liver, or spleen. Isoform 4 is expressed in brain.</text>
</comment>
<comment type="domain">
    <text evidence="117">The sequence contains 4 internal repeats, each with 5 hydrophobic segments (S1, S2, S3, S5, S6) and one positively charged segment (S4). Segments S4 are probably the voltage-sensors and are characterized by a series of positively charged amino acids at every third position.</text>
</comment>
<comment type="domain">
    <text evidence="85 89">The IQ domain mediates association with calmodulin.</text>
</comment>
<comment type="PTM">
    <text evidence="42 46">Ubiquitinated by NEDD4L; which promotes its endocytosis. Does not seem to be ubiquitinated by NEDD4 or WWP2.</text>
</comment>
<comment type="PTM">
    <text evidence="3 118">Phosphorylation at Ser-1503 by PKC in a highly conserved cytoplasmic loop slows inactivation of the sodium channel and reduces peak sodium currents (Probable). Regulated through phosphorylation by CaMK2D (By similarity).</text>
</comment>
<comment type="PTM">
    <text evidence="2">Lacks the cysteine which covalently binds the conotoxin GVIIJ. This cysteine (position 868) is speculated in other sodium channel subunits alpha to be implied in covalent binding with the sodium channel subunit beta-2 or beta-4.</text>
</comment>
<comment type="PTM">
    <text evidence="2">N-glycosylated at Asn-318, probably hinders potential interaction with regulatory subunits.</text>
</comment>
<comment type="disease" evidence="17 22 35 36 78 93">
    <disease id="DI-00948">
        <name>Progressive familial heart block 1A</name>
        <acronym>PFHB1A</acronym>
        <description>A cardiac bundle branch disorder characterized by progressive alteration of cardiac conduction through the His-Purkinje system, with a pattern of a right bundle-branch block and/or left anterior hemiblock occurring individually or together. It leads to complete atrio-ventricular block causing syncope and sudden death.</description>
        <dbReference type="MIM" id="113900"/>
    </disease>
    <text>The disease is caused by variants affecting the gene represented in this entry.</text>
</comment>
<comment type="disease" evidence="7 8 10 12 14 16 18 19 20 24 26 30 32 37 48 54 56 60 65 66 71 72 74 75 82 98 102 103 104 105 107 108">
    <disease id="DI-00681">
        <name>Long QT syndrome 3</name>
        <acronym>LQT3</acronym>
        <description>A heart disorder characterized by a prolonged QT interval on the ECG and polymorphic ventricular arrhythmias. They cause syncope and sudden death in response to exercise or emotional stress, and can present with a sentinel event of sudden cardiac death in infancy.</description>
        <dbReference type="MIM" id="603830"/>
    </disease>
    <text>The disease is caused by variants affecting the gene represented in this entry.</text>
</comment>
<comment type="disease" evidence="9 11 13 19 21 23 25 27 28 41 43 47 49 52 53 55 57 58 59 62 63 66 67 70 75 78 79 83 91 93 94 97 100 101 106">
    <disease id="DI-00202">
        <name>Brugada syndrome 1</name>
        <acronym>BRGDA1</acronym>
        <description>A tachyarrhythmia characterized by right bundle branch block and ST segment elevation on an electrocardiogram (ECG). It can cause the ventricles to beat so fast that the blood is prevented from circulating efficiently in the body. When this situation occurs, the individual will faint and may die in a few minutes if the heart is not reset.</description>
        <dbReference type="MIM" id="601144"/>
    </disease>
    <text>The disease is caused by variants affecting the gene represented in this entry.</text>
</comment>
<comment type="disease" evidence="21 40 90">
    <disease id="DI-01028">
        <name>Sick sinus syndrome 1</name>
        <acronym>SSS1</acronym>
        <description>The term 'sick sinus syndrome' encompasses a variety of conditions caused by sinus node dysfunction. The most common clinical manifestations are syncope, presyncope, dizziness, and fatigue. Electrocardiogram typically shows sinus bradycardia, sinus arrest, and/or sinoatrial block. Episodes of atrial tachycardias coexisting with sinus bradycardia ('tachycardia-bradycardia syndrome') are also common in this disorder. SSS occurs most often in the elderly associated with underlying heart disease or previous cardiac surgery, but can also occur in the fetus, infant, or child without heart disease or other contributing factors. SSS1 onset is in utero, infancy, or early childhood.</description>
        <dbReference type="MIM" id="608567"/>
    </disease>
    <text>The disease is caused by variants affecting the gene represented in this entry.</text>
</comment>
<comment type="disease" evidence="15">
    <disease id="DI-01808">
        <name>Familial paroxysmal ventricular fibrillation 1</name>
        <acronym>VF1</acronym>
        <description>A cardiac arrhythmia marked by fibrillary contractions of the ventricular muscle due to rapid repetitive excitation of myocardial fibers without coordinated contraction of the ventricle and by absence of atrial activity.</description>
        <dbReference type="MIM" id="603829"/>
    </disease>
    <text>The disease is caused by variants affecting the gene represented in this entry.</text>
</comment>
<comment type="disease" evidence="68 80">
    <disease id="DI-01096">
        <name>Sudden infant death syndrome</name>
        <acronym>SIDS</acronym>
        <description>SIDS is the sudden death of an infant younger than 1 year that remains unexplained after a thorough case investigation, including performance of a complete autopsy, examination of the death scene, and review of clinical history. Pathophysiologic mechanisms for SIDS may include respiratory dysfunction, cardiac dysrhythmias, cardiorespiratory instability, and inborn errors of metabolism, but definitive pathogenic mechanisms precipitating an infant sudden death remain elusive.</description>
        <dbReference type="MIM" id="272120"/>
    </disease>
    <text>Disease susceptibility is associated with variants affecting the gene represented in this entry.</text>
</comment>
<comment type="disease" evidence="34 93">
    <disease id="DI-01557">
        <name>Atrial standstill 1</name>
        <acronym>ATRST1</acronym>
        <description>A rare arrhythmia characterized by the absence of electrical and mechanical activity in the atria. Electrocardiographically, it is characterized by bradycardia, the absence of P waves, and a junctional narrow complex escape rhythm.</description>
        <dbReference type="MIM" id="108770"/>
    </disease>
    <text>The disease may be caused by variants affecting distinct genetic loci, including the gene represented in this entry. A mutation in SCN5A has been detected in combination with a rare GJA5 genotype in a large family with atrial standstill.</text>
</comment>
<comment type="disease" evidence="44 93">
    <disease id="DI-00214">
        <name>Cardiomyopathy, dilated, 1E</name>
        <acronym>CMD1E</acronym>
        <description>A disorder characterized by ventricular dilation and impaired systolic function, resulting in congestive heart failure and arrhythmia. Patients are at risk of premature death.</description>
        <dbReference type="MIM" id="601154"/>
    </disease>
    <text>The disease is caused by variants affecting the gene represented in this entry.</text>
</comment>
<comment type="disease" evidence="61 65">
    <disease id="DI-03122">
        <name>Atrial fibrillation, familial, 10</name>
        <acronym>ATFB10</acronym>
        <description>A familial form of atrial fibrillation, a common sustained cardiac rhythm disturbance. Atrial fibrillation is characterized by disorganized atrial electrical activity and ineffective atrial contraction promoting blood stasis in the atria and reduces ventricular filling. It can result in palpitations, syncope, thromboembolic stroke, and congestive heart failure.</description>
        <dbReference type="MIM" id="614022"/>
    </disease>
    <text>The disease is caused by variants affecting the gene represented in this entry.</text>
</comment>
<comment type="miscellaneous">
    <text>Na(+) channels in mammalian cardiac membrane have functional properties quite distinct from Na(+) channels in nerve and skeletal muscle.</text>
</comment>
<comment type="miscellaneous">
    <molecule>Isoform 1</molecule>
    <text evidence="38">Most abundant isoform in heart.</text>
</comment>
<comment type="miscellaneous">
    <molecule>Isoform 2</molecule>
    <text evidence="117">Very abundant isoform.</text>
</comment>
<comment type="miscellaneous">
    <molecule>Isoform 4</molecule>
    <text evidence="117">Abundantly expressed in neonatal brain and heart, slower kinetics of activation and inactivation.</text>
</comment>
<comment type="miscellaneous">
    <molecule>Isoform 5</molecule>
    <text evidence="117">Only detected in neuroblastoma in humans.</text>
</comment>
<comment type="miscellaneous">
    <molecule>Isoform 6</molecule>
    <text evidence="117">High expression in brain where it accounts for nearly 50% of the total transcripts. Non-functional channel, may exist to limit the number of undesired functional Nav1.5 channels.</text>
</comment>
<comment type="similarity">
    <text evidence="117">Belongs to the sodium channel (TC 1.A.1.10) family. Nav1.5/SCN5A subfamily.</text>
</comment>
<evidence type="ECO:0000250" key="1">
    <source>
        <dbReference type="UniProtKB" id="D0E0C2"/>
    </source>
</evidence>
<evidence type="ECO:0000250" key="2">
    <source>
        <dbReference type="UniProtKB" id="P15389"/>
    </source>
</evidence>
<evidence type="ECO:0000250" key="3">
    <source>
        <dbReference type="UniProtKB" id="Q9JJV9"/>
    </source>
</evidence>
<evidence type="ECO:0000255" key="4"/>
<evidence type="ECO:0000255" key="5">
    <source>
        <dbReference type="PROSITE-ProRule" id="PRU00116"/>
    </source>
</evidence>
<evidence type="ECO:0000256" key="6">
    <source>
        <dbReference type="SAM" id="MobiDB-lite"/>
    </source>
</evidence>
<evidence type="ECO:0000269" key="7">
    <source>
    </source>
</evidence>
<evidence type="ECO:0000269" key="8">
    <source>
    </source>
</evidence>
<evidence type="ECO:0000269" key="9">
    <source>
    </source>
</evidence>
<evidence type="ECO:0000269" key="10">
    <source>
    </source>
</evidence>
<evidence type="ECO:0000269" key="11">
    <source>
    </source>
</evidence>
<evidence type="ECO:0000269" key="12">
    <source>
    </source>
</evidence>
<evidence type="ECO:0000269" key="13">
    <source>
    </source>
</evidence>
<evidence type="ECO:0000269" key="14">
    <source>
    </source>
</evidence>
<evidence type="ECO:0000269" key="15">
    <source>
    </source>
</evidence>
<evidence type="ECO:0000269" key="16">
    <source>
    </source>
</evidence>
<evidence type="ECO:0000269" key="17">
    <source>
    </source>
</evidence>
<evidence type="ECO:0000269" key="18">
    <source>
    </source>
</evidence>
<evidence type="ECO:0000269" key="19">
    <source>
    </source>
</evidence>
<evidence type="ECO:0000269" key="20">
    <source>
    </source>
</evidence>
<evidence type="ECO:0000269" key="21">
    <source>
    </source>
</evidence>
<evidence type="ECO:0000269" key="22">
    <source>
    </source>
</evidence>
<evidence type="ECO:0000269" key="23">
    <source>
    </source>
</evidence>
<evidence type="ECO:0000269" key="24">
    <source>
    </source>
</evidence>
<evidence type="ECO:0000269" key="25">
    <source>
    </source>
</evidence>
<evidence type="ECO:0000269" key="26">
    <source>
    </source>
</evidence>
<evidence type="ECO:0000269" key="27">
    <source>
    </source>
</evidence>
<evidence type="ECO:0000269" key="28">
    <source>
    </source>
</evidence>
<evidence type="ECO:0000269" key="29">
    <source>
    </source>
</evidence>
<evidence type="ECO:0000269" key="30">
    <source>
    </source>
</evidence>
<evidence type="ECO:0000269" key="31">
    <source>
    </source>
</evidence>
<evidence type="ECO:0000269" key="32">
    <source>
    </source>
</evidence>
<evidence type="ECO:0000269" key="33">
    <source>
    </source>
</evidence>
<evidence type="ECO:0000269" key="34">
    <source>
    </source>
</evidence>
<evidence type="ECO:0000269" key="35">
    <source>
    </source>
</evidence>
<evidence type="ECO:0000269" key="36">
    <source>
    </source>
</evidence>
<evidence type="ECO:0000269" key="37">
    <source>
    </source>
</evidence>
<evidence type="ECO:0000269" key="38">
    <source>
    </source>
</evidence>
<evidence type="ECO:0000269" key="39">
    <source>
    </source>
</evidence>
<evidence type="ECO:0000269" key="40">
    <source>
    </source>
</evidence>
<evidence type="ECO:0000269" key="41">
    <source>
    </source>
</evidence>
<evidence type="ECO:0000269" key="42">
    <source>
    </source>
</evidence>
<evidence type="ECO:0000269" key="43">
    <source>
    </source>
</evidence>
<evidence type="ECO:0000269" key="44">
    <source>
    </source>
</evidence>
<evidence type="ECO:0000269" key="45">
    <source>
    </source>
</evidence>
<evidence type="ECO:0000269" key="46">
    <source>
    </source>
</evidence>
<evidence type="ECO:0000269" key="47">
    <source>
    </source>
</evidence>
<evidence type="ECO:0000269" key="48">
    <source>
    </source>
</evidence>
<evidence type="ECO:0000269" key="49">
    <source>
    </source>
</evidence>
<evidence type="ECO:0000269" key="50">
    <source>
    </source>
</evidence>
<evidence type="ECO:0000269" key="51">
    <source>
    </source>
</evidence>
<evidence type="ECO:0000269" key="52">
    <source>
    </source>
</evidence>
<evidence type="ECO:0000269" key="53">
    <source>
    </source>
</evidence>
<evidence type="ECO:0000269" key="54">
    <source>
    </source>
</evidence>
<evidence type="ECO:0000269" key="55">
    <source>
    </source>
</evidence>
<evidence type="ECO:0000269" key="56">
    <source>
    </source>
</evidence>
<evidence type="ECO:0000269" key="57">
    <source>
    </source>
</evidence>
<evidence type="ECO:0000269" key="58">
    <source>
    </source>
</evidence>
<evidence type="ECO:0000269" key="59">
    <source>
    </source>
</evidence>
<evidence type="ECO:0000269" key="60">
    <source>
    </source>
</evidence>
<evidence type="ECO:0000269" key="61">
    <source>
    </source>
</evidence>
<evidence type="ECO:0000269" key="62">
    <source>
    </source>
</evidence>
<evidence type="ECO:0000269" key="63">
    <source>
    </source>
</evidence>
<evidence type="ECO:0000269" key="64">
    <source>
    </source>
</evidence>
<evidence type="ECO:0000269" key="65">
    <source>
    </source>
</evidence>
<evidence type="ECO:0000269" key="66">
    <source>
    </source>
</evidence>
<evidence type="ECO:0000269" key="67">
    <source>
    </source>
</evidence>
<evidence type="ECO:0000269" key="68">
    <source>
    </source>
</evidence>
<evidence type="ECO:0000269" key="69">
    <source>
    </source>
</evidence>
<evidence type="ECO:0000269" key="70">
    <source>
    </source>
</evidence>
<evidence type="ECO:0000269" key="71">
    <source>
    </source>
</evidence>
<evidence type="ECO:0000269" key="72">
    <source>
    </source>
</evidence>
<evidence type="ECO:0000269" key="73">
    <source>
    </source>
</evidence>
<evidence type="ECO:0000269" key="74">
    <source>
    </source>
</evidence>
<evidence type="ECO:0000269" key="75">
    <source>
    </source>
</evidence>
<evidence type="ECO:0000269" key="76">
    <source>
    </source>
</evidence>
<evidence type="ECO:0000269" key="77">
    <source>
    </source>
</evidence>
<evidence type="ECO:0000269" key="78">
    <source>
    </source>
</evidence>
<evidence type="ECO:0000269" key="79">
    <source>
    </source>
</evidence>
<evidence type="ECO:0000269" key="80">
    <source>
    </source>
</evidence>
<evidence type="ECO:0000269" key="81">
    <source>
    </source>
</evidence>
<evidence type="ECO:0000269" key="82">
    <source>
    </source>
</evidence>
<evidence type="ECO:0000269" key="83">
    <source>
    </source>
</evidence>
<evidence type="ECO:0000269" key="84">
    <source>
    </source>
</evidence>
<evidence type="ECO:0000269" key="85">
    <source>
    </source>
</evidence>
<evidence type="ECO:0000269" key="86">
    <source>
    </source>
</evidence>
<evidence type="ECO:0000269" key="87">
    <source>
    </source>
</evidence>
<evidence type="ECO:0000269" key="88">
    <source>
    </source>
</evidence>
<evidence type="ECO:0000269" key="89">
    <source>
    </source>
</evidence>
<evidence type="ECO:0000269" key="90">
    <source>
    </source>
</evidence>
<evidence type="ECO:0000269" key="91">
    <source>
    </source>
</evidence>
<evidence type="ECO:0000269" key="92">
    <source>
    </source>
</evidence>
<evidence type="ECO:0000269" key="93">
    <source>
    </source>
</evidence>
<evidence type="ECO:0000269" key="94">
    <source>
    </source>
</evidence>
<evidence type="ECO:0000269" key="95">
    <source>
    </source>
</evidence>
<evidence type="ECO:0000269" key="96">
    <source>
    </source>
</evidence>
<evidence type="ECO:0000269" key="97">
    <source>
    </source>
</evidence>
<evidence type="ECO:0000269" key="98">
    <source>
    </source>
</evidence>
<evidence type="ECO:0000269" key="99">
    <source>
    </source>
</evidence>
<evidence type="ECO:0000269" key="100">
    <source>
    </source>
</evidence>
<evidence type="ECO:0000269" key="101">
    <source>
    </source>
</evidence>
<evidence type="ECO:0000269" key="102">
    <source>
    </source>
</evidence>
<evidence type="ECO:0000269" key="103">
    <source>
    </source>
</evidence>
<evidence type="ECO:0000269" key="104">
    <source>
    </source>
</evidence>
<evidence type="ECO:0000269" key="105">
    <source>
    </source>
</evidence>
<evidence type="ECO:0000269" key="106">
    <source>
    </source>
</evidence>
<evidence type="ECO:0000269" key="107">
    <source>
    </source>
</evidence>
<evidence type="ECO:0000269" key="108">
    <source ref="36"/>
</evidence>
<evidence type="ECO:0000269" key="109">
    <source ref="6"/>
</evidence>
<evidence type="ECO:0000303" key="110">
    <source>
    </source>
</evidence>
<evidence type="ECO:0000303" key="111">
    <source>
    </source>
</evidence>
<evidence type="ECO:0000303" key="112">
    <source>
    </source>
</evidence>
<evidence type="ECO:0000303" key="113">
    <source>
    </source>
</evidence>
<evidence type="ECO:0000303" key="114">
    <source>
    </source>
</evidence>
<evidence type="ECO:0000303" key="115">
    <source>
    </source>
</evidence>
<evidence type="ECO:0000303" key="116">
    <source ref="6"/>
</evidence>
<evidence type="ECO:0000305" key="117"/>
<evidence type="ECO:0000305" key="118">
    <source>
    </source>
</evidence>
<evidence type="ECO:0000305" key="119">
    <source>
    </source>
</evidence>
<evidence type="ECO:0000312" key="120">
    <source>
        <dbReference type="HGNC" id="HGNC:10593"/>
    </source>
</evidence>
<evidence type="ECO:0007744" key="121">
    <source>
        <dbReference type="PDB" id="4OVN"/>
    </source>
</evidence>
<evidence type="ECO:0007829" key="122">
    <source>
        <dbReference type="PDB" id="4DCK"/>
    </source>
</evidence>
<evidence type="ECO:0007829" key="123">
    <source>
        <dbReference type="PDB" id="4DJC"/>
    </source>
</evidence>
<evidence type="ECO:0007829" key="124">
    <source>
        <dbReference type="PDB" id="4OVN"/>
    </source>
</evidence>
<evidence type="ECO:0007829" key="125">
    <source>
        <dbReference type="PDB" id="5DBR"/>
    </source>
</evidence>
<evidence type="ECO:0007829" key="126">
    <source>
        <dbReference type="PDB" id="6LQA"/>
    </source>
</evidence>
<evidence type="ECO:0007829" key="127">
    <source>
        <dbReference type="PDB" id="7DTC"/>
    </source>
</evidence>
<name>SCN5A_HUMAN</name>
<protein>
    <recommendedName>
        <fullName evidence="117">Sodium channel protein type 5 subunit alpha</fullName>
    </recommendedName>
    <alternativeName>
        <fullName>Sodium channel protein cardiac muscle subunit alpha</fullName>
    </alternativeName>
    <alternativeName>
        <fullName>Sodium channel protein type V subunit alpha</fullName>
    </alternativeName>
    <alternativeName>
        <fullName>Voltage-gated sodium channel subunit alpha Nav1.5</fullName>
    </alternativeName>
    <alternativeName>
        <fullName evidence="112">hH1</fullName>
    </alternativeName>
</protein>
<proteinExistence type="evidence at protein level"/>
<sequence length="2016" mass="226940">MANFLLPRGTSSFRRFTRESLAAIEKRMAEKQARGSTTLQESREGLPEEEAPRPQLDLQASKKLPDLYGNPPQELIGEPLEDLDPFYSTQKTFIVLNKGKTIFRFSATNALYVLSPFHPIRRAAVKILVHSLFNMLIMCTILTNCVFMAQHDPPPWTKYVEYTFTAIYTFESLVKILARGFCLHAFTFLRDPWNWLDFSVIIMAYTTEFVDLGNVSALRTFRVLRALKTISVISGLKTIVGALIQSVKKLADVMVLTVFCLSVFALIGLQLFMGNLRHKCVRNFTALNGTNGSVEADGLVWESLDLYLSDPENYLLKNGTSDVLLCGNSSDAGTCPEGYRCLKAGENPDHGYTSFDSFAWAFLALFRLMTQDCWERLYQQTLRSAGKIYMIFFMLVIFLGSFYLVNLILAVVAMAYEEQNQATIAETEEKEKRFQEAMEMLKKEHEALTIRGVDTVSRSSLEMSPLAPVNSHERRSKRRKRMSSGTEECGEDRLPKSDSEDGPRAMNHLSLTRGLSRTSMKPRSSRGSIFTFRRRDLGSEADFADDENSTAGESESHHTSLLVPWPLRRTSAQGQPSPGTSAPGHALHGKKNSTVDCNGVVSLLGAGDPEATSPGSHLLRPVMLEHPPDTTTPSEEPGGPQMLTSQAPCVDGFEEPGARQRALSAVSVLTSALEELEESRHKCPPCWNRLAQRYLIWECCPLWMSIKQGVKLVVMDPFTDLTITMCIVLNTLFMALEHYNMTSEFEEMLQVGNLVFTGIFTAEMTFKIIALDPYYYFQQGWNIFDSIIVILSLMELGLSRMSNLSVLRSFRLLRVFKLAKSWPTLNTLIKIIGNSVGALGNLTLVLAIIVFIFAVVGMQLFGKNYSELRDSDSGLLPRWHMMDFFHAFLIIFRILCGEWIETMWDCMEVSGQSLCLLVFLLVMVIGNLVVLNLFLALLLSSFSADNLTAPDEDREMNNLQLALARIQRGLRFVKRTTWDFCCGLLRQRPQKPAALAAQGQLPSCIATPYSPPPPETEKVPPTRKETRFEEGEQPGQGTPGDPEPVCVPIAVAESDTDDQEEDEENSLGTEEESSKQQESQPVSGGPEAPPDSRTWSQVSATASSEAEASASQADWRQQWKAEPQAPGCGETPEDSCSEGSTADMTNTAELLEQIPDLGQDVKDPEDCFTEGCVRRCPCCAVDTTQAPGKVWWRLRKTCYHIVEHSWFETFIIFMILLSSGALAFEDIYLEERKTIKVLLEYADKMFTYVFVLEMLLKWVAYGFKKYFTNAWCWLDFLIVDVSLVSLVANTLGFAEMGPIKSLRTLRALRPLRALSRFEGMRVVVNALVGAIPSIMNVLLVCLIFWLIFSIMGVNLFAGKFGRCINQTEGDLPLNYTIVNNKSQCESLNLTGELYWTKVKVNFDNVGAGYLALLQVATFKGWMDIMYAAVDSRGYEEQPQWEYNLYMYIYFVIFIIFGSFFTLNLFIGVIIDNFNQQKKKLGGQDIFMTEEQKKYYNAMKKLGSKKPQKPIPRPLNKYQGFIFDIVTKQAFDVTIMFLICLNMVTMMVETDDQSPEKINILAKINLLFVAIFTGECIVKLAALRHYYFTNSWNIFDFVVVILSIVGTVLSDIIQKYFFSPTLFRVIRLARIGRILRLIRGAKGIRTLLFALMMSLPALFNIGLLLFLVMFIYSIFGMANFAYVKWEAGIDDMFNFQTFANSMLCLFQITTSAGWDGLLSPILNTGPPYCDPTLPNSNGSRGDCGSPAVGILFFTTYIIISFLIVVNMYIAIILENFSVATEESTEPLSEDDFDMFYEIWEKFDPEATQFIEYSVLSDFADALSEPLRIAKPNQISLINMDLPMVSGDRIHCMDILFAFTKRVLGESGEMDALKIQMEEKFMAANPSKISYEPITTTLRRKHEEVSAMVIQRAFRRHLLQRSLKHASFLFRQQAGSGLSEEDAPEREGLIAYVMSENFSRPLGPPSSSSISSTSFPPSYDSVTRATSDNLQVRGSDYSHSEDLADFPPSPDRDRESIV</sequence>
<reference key="1">
    <citation type="journal article" date="1992" name="Proc. Natl. Acad. Sci. U.S.A.">
        <title>Primary structure and functional expression of the human cardiac tetrodotoxin-insensitive voltage-dependent sodium channel.</title>
        <authorList>
            <person name="Gellens M.E."/>
            <person name="George A.L. Jr."/>
            <person name="Chen L.Q."/>
            <person name="Chahine M."/>
            <person name="Horn R."/>
            <person name="Barchi R.L."/>
            <person name="Kallen R.G."/>
        </authorList>
    </citation>
    <scope>NUCLEOTIDE SEQUENCE [MRNA] (ISOFORM 1)</scope>
    <scope>FUNCTION</scope>
    <scope>TRANSPORTER ACTIVITY</scope>
    <scope>SUBCELLULAR LOCATION</scope>
    <scope>TISSUE SPECIFICITY</scope>
    <scope>VARIANTS ARG-552 AND GLN-1027</scope>
    <source>
        <tissue>Heart</tissue>
    </source>
</reference>
<reference key="2">
    <citation type="journal article" date="2002" name="Neurogastroenterol. Motil.">
        <title>SCN5A is expressed in human jejunal circular smooth muscle cells.</title>
        <authorList>
            <person name="Ou Y."/>
            <person name="Gibbons S.J."/>
            <person name="Miller S.M."/>
            <person name="Strege P.R."/>
            <person name="Rich A."/>
            <person name="Distad M.A."/>
            <person name="Ackerman M.J."/>
            <person name="Rae J.L."/>
            <person name="Szurszewski J.H."/>
            <person name="Farrugia G."/>
        </authorList>
    </citation>
    <scope>NUCLEOTIDE SEQUENCE [MRNA] (ISOFORM 2)</scope>
    <scope>TISSUE SPECIFICITY</scope>
    <scope>VARIANT ARG-552</scope>
    <source>
        <tissue>Jejunal smooth muscle</tissue>
    </source>
</reference>
<reference key="3">
    <citation type="journal article" date="2003" name="Circ. Res.">
        <title>A ubiquitous splice variant and a common polymorphism affect heterologous expression of recombinant human SCN5A heart sodium channels.</title>
        <authorList>
            <person name="Makielski J.C."/>
            <person name="Ye B."/>
            <person name="Valdivia C.R."/>
            <person name="Pagel M.D."/>
            <person name="Pu J."/>
            <person name="Tester D.J."/>
            <person name="Ackerman M.J."/>
        </authorList>
    </citation>
    <scope>NUCLEOTIDE SEQUENCE [MRNA] (ISOFORM 2)</scope>
    <scope>VARIANTS ARG-558 AND TYR-1103</scope>
</reference>
<reference key="4">
    <citation type="journal article" date="2003" name="Physiol. Genomics">
        <title>A common human SCN5A polymorphism modifies expression of an arrhythmia causing mutation.</title>
        <authorList>
            <person name="Ye B."/>
            <person name="Valdivia C.R."/>
            <person name="Ackerman M.J."/>
            <person name="Makielski J.C."/>
        </authorList>
    </citation>
    <scope>NUCLEOTIDE SEQUENCE [MRNA] (ISOFORM 2)</scope>
    <scope>VARIANT ARG-558</scope>
    <scope>CHARACTERIZATION OF VARIANT LQT3 LEU-1766</scope>
</reference>
<reference key="5">
    <citation type="journal article" date="2005" name="Eur. J. Neurosci.">
        <title>Tetrodotoxin-resistant Na+ channels in human neuroblastoma cells are encoded by new variants of Nav1.5/SCN5A.</title>
        <authorList>
            <person name="Ou S.-W."/>
            <person name="Kameyama A."/>
            <person name="Hao L.-Y."/>
            <person name="Horiuchi M."/>
            <person name="Minobe E."/>
            <person name="Wang W.-Y."/>
            <person name="Makita N."/>
            <person name="Kameyama M."/>
        </authorList>
    </citation>
    <scope>NUCLEOTIDE SEQUENCE [MRNA] (ISOFORMS 4 AND 5)</scope>
    <scope>VARIANT THR-1498</scope>
</reference>
<reference key="6">
    <citation type="journal article" date="2007" name="Sheng Wu Hua Xue Yu Sheng Wu Wu Li Jin Zhan">
        <title>Cloning, distribution and analysis of the new exon encoding Nav1.5 channel in brain tissues.</title>
        <authorList>
            <person name="Wang J."/>
            <person name="Ou S.-W."/>
            <person name="Wang Y.-J."/>
            <person name="Zong Z.-H."/>
        </authorList>
    </citation>
    <scope>NUCLEOTIDE SEQUENCE [MRNA] (ISOFORMS 4 AND 6)</scope>
    <scope>VARIANTS LEU-336 AND GLN-1027</scope>
</reference>
<reference key="7">
    <citation type="submission" date="2006-06" db="EMBL/GenBank/DDBJ databases">
        <authorList>
            <consortium name="NHLBI resequencing and genotyping service (RS&amp;G)"/>
        </authorList>
    </citation>
    <scope>NUCLEOTIDE SEQUENCE [GENOMIC DNA]</scope>
</reference>
<reference key="8">
    <citation type="journal article" date="2006" name="Nature">
        <title>The DNA sequence, annotation and analysis of human chromosome 3.</title>
        <authorList>
            <person name="Muzny D.M."/>
            <person name="Scherer S.E."/>
            <person name="Kaul R."/>
            <person name="Wang J."/>
            <person name="Yu J."/>
            <person name="Sudbrak R."/>
            <person name="Buhay C.J."/>
            <person name="Chen R."/>
            <person name="Cree A."/>
            <person name="Ding Y."/>
            <person name="Dugan-Rocha S."/>
            <person name="Gill R."/>
            <person name="Gunaratne P."/>
            <person name="Harris R.A."/>
            <person name="Hawes A.C."/>
            <person name="Hernandez J."/>
            <person name="Hodgson A.V."/>
            <person name="Hume J."/>
            <person name="Jackson A."/>
            <person name="Khan Z.M."/>
            <person name="Kovar-Smith C."/>
            <person name="Lewis L.R."/>
            <person name="Lozado R.J."/>
            <person name="Metzker M.L."/>
            <person name="Milosavljevic A."/>
            <person name="Miner G.R."/>
            <person name="Morgan M.B."/>
            <person name="Nazareth L.V."/>
            <person name="Scott G."/>
            <person name="Sodergren E."/>
            <person name="Song X.-Z."/>
            <person name="Steffen D."/>
            <person name="Wei S."/>
            <person name="Wheeler D.A."/>
            <person name="Wright M.W."/>
            <person name="Worley K.C."/>
            <person name="Yuan Y."/>
            <person name="Zhang Z."/>
            <person name="Adams C.Q."/>
            <person name="Ansari-Lari M.A."/>
            <person name="Ayele M."/>
            <person name="Brown M.J."/>
            <person name="Chen G."/>
            <person name="Chen Z."/>
            <person name="Clendenning J."/>
            <person name="Clerc-Blankenburg K.P."/>
            <person name="Chen R."/>
            <person name="Chen Z."/>
            <person name="Davis C."/>
            <person name="Delgado O."/>
            <person name="Dinh H.H."/>
            <person name="Dong W."/>
            <person name="Draper H."/>
            <person name="Ernst S."/>
            <person name="Fu G."/>
            <person name="Gonzalez-Garay M.L."/>
            <person name="Garcia D.K."/>
            <person name="Gillett W."/>
            <person name="Gu J."/>
            <person name="Hao B."/>
            <person name="Haugen E."/>
            <person name="Havlak P."/>
            <person name="He X."/>
            <person name="Hennig S."/>
            <person name="Hu S."/>
            <person name="Huang W."/>
            <person name="Jackson L.R."/>
            <person name="Jacob L.S."/>
            <person name="Kelly S.H."/>
            <person name="Kube M."/>
            <person name="Levy R."/>
            <person name="Li Z."/>
            <person name="Liu B."/>
            <person name="Liu J."/>
            <person name="Liu W."/>
            <person name="Lu J."/>
            <person name="Maheshwari M."/>
            <person name="Nguyen B.-V."/>
            <person name="Okwuonu G.O."/>
            <person name="Palmeiri A."/>
            <person name="Pasternak S."/>
            <person name="Perez L.M."/>
            <person name="Phelps K.A."/>
            <person name="Plopper F.J."/>
            <person name="Qiang B."/>
            <person name="Raymond C."/>
            <person name="Rodriguez R."/>
            <person name="Saenphimmachak C."/>
            <person name="Santibanez J."/>
            <person name="Shen H."/>
            <person name="Shen Y."/>
            <person name="Subramanian S."/>
            <person name="Tabor P.E."/>
            <person name="Verduzco D."/>
            <person name="Waldron L."/>
            <person name="Wang J."/>
            <person name="Wang J."/>
            <person name="Wang Q."/>
            <person name="Williams G.A."/>
            <person name="Wong G.K.-S."/>
            <person name="Yao Z."/>
            <person name="Zhang J."/>
            <person name="Zhang X."/>
            <person name="Zhao G."/>
            <person name="Zhou J."/>
            <person name="Zhou Y."/>
            <person name="Nelson D."/>
            <person name="Lehrach H."/>
            <person name="Reinhardt R."/>
            <person name="Naylor S.L."/>
            <person name="Yang H."/>
            <person name="Olson M."/>
            <person name="Weinstock G."/>
            <person name="Gibbs R.A."/>
        </authorList>
    </citation>
    <scope>NUCLEOTIDE SEQUENCE [LARGE SCALE GENOMIC DNA]</scope>
</reference>
<reference key="9">
    <citation type="journal article" date="2004" name="Genome Res.">
        <title>The status, quality, and expansion of the NIH full-length cDNA project: the Mammalian Gene Collection (MGC).</title>
        <authorList>
            <consortium name="The MGC Project Team"/>
        </authorList>
    </citation>
    <scope>NUCLEOTIDE SEQUENCE [LARGE SCALE MRNA] (ISOFORM 3)</scope>
    <scope>VARIANT ARG-558</scope>
</reference>
<reference key="10">
    <citation type="submission" date="2005-03" db="EMBL/GenBank/DDBJ databases">
        <authorList>
            <person name="Totoki Y."/>
            <person name="Toyoda A."/>
            <person name="Takeda T."/>
            <person name="Sakaki Y."/>
            <person name="Tanaka A."/>
            <person name="Yokoyama S."/>
            <person name="Ohara O."/>
            <person name="Nagase T."/>
            <person name="Kikuno R.F."/>
        </authorList>
    </citation>
    <scope>NUCLEOTIDE SEQUENCE [LARGE SCALE MRNA] OF 422-2016 (ISOFORMS 3/6)</scope>
    <source>
        <tissue>Brain</tissue>
    </source>
</reference>
<reference key="11">
    <citation type="journal article" date="2004" name="Circ. Res.">
        <title>Cardiac voltage-gated sodium channel Nav1.5 is regulated by Nedd4-2 mediated ubiquitination.</title>
        <authorList>
            <person name="van Bemmelen M.X."/>
            <person name="Rougier J.-S."/>
            <person name="Gavillet B."/>
            <person name="Apotheloz F."/>
            <person name="Daidie D."/>
            <person name="Tateyama M."/>
            <person name="Rivolta I."/>
            <person name="Thomas M.A."/>
            <person name="Kass R.S."/>
            <person name="Staub O."/>
            <person name="Abriel H."/>
        </authorList>
    </citation>
    <scope>INTERACTION WITH NEDD4L</scope>
    <scope>UBIQUITINATION</scope>
    <scope>MUTAGENESIS OF TYR-1977 AND VAL-1980</scope>
</reference>
<reference key="12">
    <citation type="journal article" date="2005" name="Am. J. Physiol.">
        <title>Molecular determinants of voltage-gated sodium channel regulation by the Nedd4/Nedd4-like proteins.</title>
        <authorList>
            <person name="Rougier J.-S."/>
            <person name="van Bemmelen M.X."/>
            <person name="Bruce M.C."/>
            <person name="Jespersen T."/>
            <person name="Gavillet B."/>
            <person name="Apotheloz F."/>
            <person name="Cordonier S."/>
            <person name="Staub O."/>
            <person name="Rotin D."/>
            <person name="Abriel H."/>
        </authorList>
    </citation>
    <scope>INTERACTION WITH NEDD4; NEDD4L AND WWP2</scope>
    <scope>UBIQUITINATION</scope>
    <scope>MUTAGENESIS OF PRO-1974; PRO-1975; SER-1976; TYR-1977; ASP-1978; SER-1979 AND VAL-1980</scope>
</reference>
<reference key="13">
    <citation type="journal article" date="2005" name="Lancet">
        <title>Mutation in the neuronal voltage-gated sodium channel SCN1A in familial hemiplegic migraine.</title>
        <authorList>
            <person name="Dichgans M."/>
            <person name="Freilinger T."/>
            <person name="Eckstein G."/>
            <person name="Babini E."/>
            <person name="Lorenz-Depiereux B."/>
            <person name="Biskup S."/>
            <person name="Ferrari M.D."/>
            <person name="Herzog J."/>
            <person name="van den Maagdenberg A.M.J.M."/>
            <person name="Pusch M."/>
            <person name="Strom T.M."/>
        </authorList>
    </citation>
    <scope>MUTAGENESIS OF GLN-1476</scope>
</reference>
<reference key="14">
    <citation type="journal article" date="2008" name="Prog. Biophys. Mol. Biol.">
        <title>SCN5A channelopathies - An update on mutations and mechanisms.</title>
        <authorList>
            <person name="Zimmer T."/>
            <person name="Surber R."/>
        </authorList>
    </citation>
    <scope>VARIANTS BRGDA1 SER-406; GLN-814; HIS-1023; THR-1330 AND SER-1968</scope>
    <scope>VARIANTS LQT3 HIS-680; LEU-1486; LYS-1620; ARG-1652 AND PRO-1825</scope>
</reference>
<reference key="15">
    <citation type="journal article" date="2009" name="Am. J. Physiol.">
        <title>GPD1L links redox state to cardiac excitability by PKC-dependent phosphorylation of the sodium channel SCN5A.</title>
        <authorList>
            <person name="Valdivia C.R."/>
            <person name="Ueda K."/>
            <person name="Ackerman M.J."/>
            <person name="Makielski J.C."/>
        </authorList>
    </citation>
    <scope>INTERACTION WITH GPD1L</scope>
    <scope>PHOSPHORYLATION AT SER-1503 BY PKC</scope>
</reference>
<reference key="16">
    <citation type="journal article" date="2009" name="Neurosci. Res.">
        <title>Analysis of four novel variants of Nav1.5/SCN5A cloned from the brain.</title>
        <authorList>
            <person name="Wang J."/>
            <person name="Ou S.-W."/>
            <person name="Wang Y.-J."/>
            <person name="Kameyama M."/>
            <person name="Kameyama A."/>
            <person name="Zong Z.-H."/>
        </authorList>
    </citation>
    <scope>ALTERNATIVE SPLICING</scope>
    <scope>TISSUE SPECIFICITY (ISOFORM 4)</scope>
</reference>
<reference key="17">
    <citation type="journal article" date="2010" name="J. Mol. Cell. Cardiol.">
        <title>Structure and function of splice variants of the cardiac voltage-gated sodium channel Na(v)1.5.</title>
        <authorList>
            <person name="Schroeter A."/>
            <person name="Walzik S."/>
            <person name="Blechschmidt S."/>
            <person name="Haufe V."/>
            <person name="Benndorf K."/>
            <person name="Zimmer T."/>
        </authorList>
    </citation>
    <scope>ALTERNATIVE SPLICING</scope>
</reference>
<reference key="18">
    <citation type="journal article" date="2011" name="Circ. Cardiovasc. Genet.">
        <title>MOG1: a new susceptibility gene for Brugada syndrome.</title>
        <authorList>
            <person name="Kattygnarath D."/>
            <person name="Maugenre S."/>
            <person name="Neyroud N."/>
            <person name="Balse E."/>
            <person name="Ichai C."/>
            <person name="Denjoy I."/>
            <person name="Dilanian G."/>
            <person name="Martins R.P."/>
            <person name="Fressart V."/>
            <person name="Berthet M."/>
            <person name="Schott J.J."/>
            <person name="Leenhardt A."/>
            <person name="Probst V."/>
            <person name="Le Marec H."/>
            <person name="Hainque B."/>
            <person name="Coulombe A."/>
            <person name="Hatem S.N."/>
            <person name="Guicheney P."/>
        </authorList>
    </citation>
    <scope>FUNCTION</scope>
    <scope>SUBCELLULAR LOCATION</scope>
</reference>
<reference key="19">
    <citation type="journal article" date="2011" name="Circ. Res.">
        <title>Fibroblast growth factor homologous factor 13 regulates Na+ channels and conduction velocity in murine hearts.</title>
        <authorList>
            <person name="Wang C."/>
            <person name="Hennessey J.A."/>
            <person name="Kirkton R.D."/>
            <person name="Wang C."/>
            <person name="Graham V."/>
            <person name="Puranam R.S."/>
            <person name="Rosenberg P.B."/>
            <person name="Bursac N."/>
            <person name="Pitt G.S."/>
        </authorList>
    </citation>
    <scope>INTERACTION WITH FGF13</scope>
</reference>
<reference key="20">
    <citation type="journal article" date="2011" name="J. Proteome Res.">
        <title>The cardiac sodium channel is post-translationally modified by arginine methylation.</title>
        <authorList>
            <person name="Beltran-Alvarez P."/>
            <person name="Pagans S."/>
            <person name="Brugada R."/>
        </authorList>
    </citation>
    <scope>METHYLATION AT ARG-513; ARG-526 AND ARG-680</scope>
</reference>
<reference key="21">
    <citation type="journal article" date="2012" name="J. Proteome Res.">
        <title>Mass spectrometry-based identification of native cardiac Nav1.5 channel alpha subunit phosphorylation sites.</title>
        <authorList>
            <person name="Marionneau C."/>
            <person name="Lichti C.F."/>
            <person name="Lindenbaum P."/>
            <person name="Charpentier F."/>
            <person name="Nerbonne J.M."/>
            <person name="Townsend R.R."/>
            <person name="Merot J."/>
        </authorList>
    </citation>
    <scope>PHOSPHORYLATION AT SER-36; THR-38; SER-457; SER-460; SER-483; SER-484; SER-497; SER-510; SER-571; SER-664 AND SER-667</scope>
</reference>
<reference key="22">
    <citation type="journal article" date="2013" name="Circ. Arrhythm. Electrophysiol.">
        <title>MOG1 rescues defective trafficking of Na(v)1.5 mutations in Brugada syndrome and sick sinus syndrome.</title>
        <authorList>
            <person name="Chakrabarti S."/>
            <person name="Wu X."/>
            <person name="Yang Z."/>
            <person name="Wu L."/>
            <person name="Yong S.L."/>
            <person name="Zhang C."/>
            <person name="Hu K."/>
            <person name="Wang Q.K."/>
            <person name="Chen Q."/>
        </authorList>
    </citation>
    <scope>FUNCTION</scope>
    <scope>SUBCELLULAR LOCATION</scope>
    <scope>CHARACTERIZATION OF VARIANT ATRST1 ASN-1275</scope>
    <scope>CHARACTERIZATION OF VARIANTS BRGDA1 ASN-1275 AND ARG-1743</scope>
    <scope>CHARACTERIZATION OF VARIANT CMD1E ASN-1275</scope>
    <scope>CHARACTERIZATION OF VARIANT PFHB1A ASN-1275</scope>
</reference>
<reference key="23">
    <citation type="journal article" date="2014" name="Mol. Pharmacol.">
        <title>Gating-pore currents demonstrate selective and specific modulation of individual sodium channel voltage-sensors by biological toxins.</title>
        <authorList>
            <person name="Xiao Y."/>
            <person name="Blumenthal K."/>
            <person name="Cummins T.R."/>
        </authorList>
    </citation>
    <scope>MUTAGENESIS OF ASP-1610</scope>
</reference>
<reference key="24">
    <citation type="journal article" date="2016" name="Toxicon">
        <title>Molecular determinant for the tarantula toxin Jingzhaotoxin-I slowing the fast inactivation of voltage-gated sodium channels.</title>
        <authorList>
            <person name="Tao H."/>
            <person name="Chen X."/>
            <person name="Lu M."/>
            <person name="Wu Y."/>
            <person name="Deng M."/>
            <person name="Zeng X."/>
            <person name="Liu Z."/>
            <person name="Liang S."/>
        </authorList>
    </citation>
    <scope>MUTAGENESIS OF ASP-1610 AND LYS-1614</scope>
    <scope>SUBUNIT</scope>
</reference>
<reference key="25">
    <citation type="journal article" date="2023" name="Nat. Commun.">
        <title>Pain-causing stinging nettle toxins target TMEM233 to modulate NaV1.7 function.</title>
        <authorList>
            <person name="Jami S."/>
            <person name="Deuis J.R."/>
            <person name="Klasfauseweh T."/>
            <person name="Cheng X."/>
            <person name="Kurdyukov S."/>
            <person name="Chung F."/>
            <person name="Okorokov A.L."/>
            <person name="Li S."/>
            <person name="Zhang J."/>
            <person name="Cristofori-Armstrong B."/>
            <person name="Israel M.R."/>
            <person name="Ju R.J."/>
            <person name="Robinson S.D."/>
            <person name="Zhao P."/>
            <person name="Ragnarsson L."/>
            <person name="Andersson A."/>
            <person name="Tran P."/>
            <person name="Schendel V."/>
            <person name="McMahon K.L."/>
            <person name="Tran H.N.T."/>
            <person name="Chin Y.K."/>
            <person name="Zhu Y."/>
            <person name="Liu J."/>
            <person name="Crawford T."/>
            <person name="Purushothamvasan S."/>
            <person name="Habib A.M."/>
            <person name="Andersson D.A."/>
            <person name="Rash L.D."/>
            <person name="Wood J.N."/>
            <person name="Zhao J."/>
            <person name="Stehbens S.J."/>
            <person name="Mobli M."/>
            <person name="Leffler A."/>
            <person name="Jiang D."/>
            <person name="Cox J.J."/>
            <person name="Waxman S.G."/>
            <person name="Dib-Hajj S.D."/>
            <person name="Gregory Neely G."/>
            <person name="Durek T."/>
            <person name="Vetter I."/>
        </authorList>
    </citation>
    <scope>SUBUNIT</scope>
</reference>
<reference key="26">
    <citation type="journal article" date="2009" name="J. Biol. Chem.">
        <title>Solution NMR structure of the C-terminal EF-hand domain of human cardiac sodium channel NaV1.5.</title>
        <authorList>
            <person name="Chagot B."/>
            <person name="Potet F."/>
            <person name="Balser J.R."/>
            <person name="Chazin W.J."/>
        </authorList>
    </citation>
    <scope>STRUCTURE BY NMR OF 1773-1865</scope>
    <scope>FUNCTION</scope>
    <scope>TRANSPORTER ACTIVITY</scope>
    <scope>ACTIVITY REGULATION</scope>
    <scope>SUBCELLULAR LOCATION</scope>
    <scope>MUTAGENESIS OF 1802-ASP--GLU-1804</scope>
</reference>
<reference key="27">
    <citation type="journal article" date="2011" name="J. Mol. Biol.">
        <title>Solution NMR structure of Apo-calmodulin in complex with the IQ motif of human cardiac sodium channel NaV1.5.</title>
        <authorList>
            <person name="Chagot B."/>
            <person name="Chazin W.J."/>
        </authorList>
    </citation>
    <scope>STRUCTURE BY NMR OF 1901-1927 IN COMPLEX WITH CALM</scope>
    <scope>INTERACTION WITH CALM</scope>
</reference>
<reference key="28">
    <citation type="journal article" date="2012" name="Structure">
        <title>Crystal structure of the ternary complex of a NaV C-terminal domain, a fibroblast growth factor homologous factor, and calmodulin.</title>
        <authorList>
            <person name="Wang C."/>
            <person name="Chung B.C."/>
            <person name="Yan H."/>
            <person name="Lee S.Y."/>
            <person name="Pitt G.S."/>
        </authorList>
    </citation>
    <scope>X-RAY CRYSTALLOGRAPHY (2.2 ANGSTROMS) OF 1773-1940 IN COMPLEX WITH FGF13 AND CALMODULIN</scope>
</reference>
<reference evidence="121" key="29">
    <citation type="journal article" date="2014" name="Nat. Commun.">
        <title>Regulation of the NaV1.5 cytoplasmic domain by calmodulin.</title>
        <authorList>
            <person name="Gabelli S.B."/>
            <person name="Boto A."/>
            <person name="Kuhns V.H."/>
            <person name="Bianchet M.A."/>
            <person name="Farinelli F."/>
            <person name="Aripirala S."/>
            <person name="Yoder J."/>
            <person name="Jakoncic J."/>
            <person name="Tomaselli G.F."/>
            <person name="Amzel L.M."/>
        </authorList>
    </citation>
    <scope>X-RAY CRYSTALLOGRAPHY (2.80 ANGSTROMS) OF 1773-1929</scope>
    <scope>FUNCTION</scope>
    <scope>SUBCELLULAR LOCATION</scope>
    <scope>INTERACTION WITH CALMODULIN</scope>
</reference>
<reference key="30">
    <citation type="journal article" date="1995" name="Cell">
        <title>SCN5A mutations associated with an inherited cardiac arrhythmia, long QT syndrome.</title>
        <authorList>
            <person name="Wang Q."/>
            <person name="Shen J."/>
            <person name="Splawski I."/>
            <person name="Atkinson D."/>
            <person name="Li Z."/>
            <person name="Robinson J.L."/>
            <person name="Moss A.J."/>
            <person name="Towbin J.A."/>
            <person name="Keating M.T."/>
        </authorList>
    </citation>
    <scope>VARIANTS LQT3</scope>
</reference>
<reference key="31">
    <citation type="journal article" date="1995" name="Hum. Mol. Genet.">
        <title>Cardiac sodium channel mutations in patients with long QT syndrome, an inherited cardiac arrhythmia.</title>
        <authorList>
            <person name="Wang Q."/>
            <person name="Shen J."/>
            <person name="Li Z."/>
            <person name="Timothy K.W."/>
            <person name="Vincent G.M."/>
            <person name="Priori S.G."/>
            <person name="Schwartz P.J."/>
            <person name="Keating M.T."/>
        </authorList>
    </citation>
    <scope>VARIANTS LQT3</scope>
</reference>
<reference key="32">
    <citation type="journal article" date="1995" name="Nature">
        <title>Molecular mechanism for an inherited cardiac arrhythmia.</title>
        <authorList>
            <person name="Bennett P.B."/>
            <person name="Yazawa K."/>
            <person name="Makita N."/>
            <person name="George A.L. Jr."/>
        </authorList>
    </citation>
    <scope>VARIANT LQT3 1505-LYS--GLN-1507 DEL</scope>
</reference>
<reference key="33">
    <citation type="journal article" date="1998" name="Circ. Res.">
        <title>Novel LQT-3 mutation affects Na+ channel activity through interactions between alpha- and beta1-subunits.</title>
        <authorList>
            <person name="An R.H."/>
            <person name="Wang X.L."/>
            <person name="Kerem B."/>
            <person name="Benhorin J."/>
            <person name="Medina A."/>
            <person name="Goldmit M."/>
            <person name="Kass R.S."/>
        </authorList>
    </citation>
    <scope>VARIANT LQT3 GLY-1790</scope>
</reference>
<reference key="34">
    <citation type="journal article" date="1998" name="FEBS Lett.">
        <title>A de novo missense mutation of human cardiac Na(+) channel exhibiting novel molecular mechanisms of long QT syndrome.</title>
        <authorList>
            <person name="Makita N."/>
            <person name="Shirai N."/>
            <person name="Nagashima M."/>
            <person name="Matsuoka R."/>
            <person name="Yamada Y."/>
            <person name="Tohse N."/>
            <person name="Kitabatake A."/>
        </authorList>
    </citation>
    <scope>VARIANT LQT3 GLN-1623</scope>
</reference>
<reference key="35">
    <citation type="journal article" date="1998" name="Hum. Mutat.">
        <title>Identification of a new SCN5A mutation, D1840G, associated with the long QT syndrome.</title>
        <authorList>
            <person name="Benhorin J."/>
            <person name="Goldmit M."/>
            <person name="Maccluer J.W."/>
            <person name="Blangero J."/>
            <person name="Goffen R."/>
            <person name="Leibovitch A."/>
            <person name="Rahat A."/>
            <person name="Wang Q."/>
            <person name="Medina A."/>
            <person name="Towbin J.A."/>
            <person name="Kerem B."/>
        </authorList>
    </citation>
    <scope>VARIANT LQT3 GLY-1839</scope>
</reference>
<reference key="36">
    <citation type="journal article" date="1998" name="Hum. Mutat.">
        <title>A De Novo missense mutation (R1623Q) of the SCN5A gene in a Japanese girl with sporadic long QT syndrome.</title>
        <authorList>
            <person name="Yamagishi H."/>
            <person name="Furutani M."/>
            <person name="Kamisago M."/>
            <person name="Morikawa Y."/>
            <person name="Kojima Y."/>
            <person name="Hino Y."/>
            <person name="Furutani Y."/>
            <person name="Kimura M."/>
            <person name="Imamura S."/>
            <person name="Takao A."/>
            <person name="Momma K."/>
            <person name="Matsuoka R."/>
        </authorList>
    </citation>
    <scope>VARIANT LQT3 GLN-1623</scope>
</reference>
<reference key="37">
    <citation type="journal article" date="1998" name="Nature">
        <title>Genetic basis and molecular mechanism for idiopathic ventricular fibrillation.</title>
        <authorList>
            <person name="Chen Q."/>
            <person name="Kirsch G.E."/>
            <person name="Zhang D."/>
            <person name="Brugada R."/>
            <person name="Brugada J."/>
            <person name="Brugada P."/>
            <person name="Potenza D."/>
            <person name="Moya A."/>
            <person name="Borggrefe M."/>
            <person name="Breithardt G."/>
            <person name="Ortiz-Lopez R."/>
            <person name="Wang Z."/>
            <person name="Antzelevitch C."/>
            <person name="O'Brien R.E."/>
            <person name="Schulze-Bahr E."/>
            <person name="Keating M.T."/>
            <person name="Towbin J.A."/>
            <person name="Wang Q."/>
        </authorList>
    </citation>
    <scope>VARIANTS BRGDA1 TRP-1232 AND MET-1620</scope>
</reference>
<reference key="38">
    <citation type="journal article" date="1999" name="Am. J. Med. Genet.">
        <title>Sodium channel abnormalities are infrequent in patients with long QT syndrome: identification of two novel SCN5A mutations.</title>
        <authorList>
            <person name="Wattanasirichaigoon D."/>
            <person name="Vesely M.R."/>
            <person name="Duggal P."/>
            <person name="Levine J.C."/>
            <person name="Blume E.D."/>
            <person name="Wolff G.S."/>
            <person name="Edwards S.B."/>
            <person name="Beggs A.H."/>
        </authorList>
    </citation>
    <scope>VARIANTS LQT3 MET-1304 AND MET-1645</scope>
    <scope>VARIANT ASN-1500</scope>
</reference>
<reference key="39">
    <citation type="journal article" date="1999" name="Cardiovasc. Res.">
        <title>Human SCN5A gene mutations alter cardiac sodium channel kinetics and are associated with the Brugada syndrome.</title>
        <authorList>
            <person name="Rook M.B."/>
            <person name="Bezzina Alshinawi C."/>
            <person name="Groenewegen W.A."/>
            <person name="van Gelder I.C."/>
            <person name="van Ginneken A.C.G."/>
            <person name="Jongsma H.J."/>
            <person name="Mannens M.M.A.M."/>
            <person name="Wilde A.A.M."/>
        </authorList>
    </citation>
    <scope>CHARACTERIZATION OF VARIANTS BRGDA1 TRP-1512 AND THR-1924</scope>
</reference>
<reference key="40">
    <citation type="journal article" date="1999" name="Circulation">
        <title>Congenital long-QT syndrome caused by a novel mutation in a conserved acidic domain of the cardiac Na+ channel.</title>
        <authorList>
            <person name="Wei J."/>
            <person name="Wang D.W."/>
            <person name="Alings M."/>
            <person name="Fish F."/>
            <person name="Wathen M."/>
            <person name="Roden D.M."/>
            <person name="George A.L. Jr."/>
        </authorList>
    </citation>
    <scope>VARIANT LQT3 LYS-1784</scope>
</reference>
<reference key="41">
    <citation type="journal article" date="1999" name="Circ. Res.">
        <title>Ionic mechanisms responsible for the electrocardiographic phenotype of the Brugada syndrome are temperature dependent.</title>
        <authorList>
            <person name="Dumaine R."/>
            <person name="Towbin J.A."/>
            <person name="Brugada P."/>
            <person name="Vatta M."/>
            <person name="Nesterenko D.V."/>
            <person name="Nesterenko V.V."/>
            <person name="Brugada J."/>
            <person name="Brugada R."/>
            <person name="Antzelevitch C."/>
        </authorList>
    </citation>
    <scope>CHARACTERIZATION OF VARIANT BRGDA1 MET-1620</scope>
</reference>
<reference key="42">
    <citation type="journal article" date="1999" name="Circ. Res.">
        <title>A single Na(+) channel mutation causing both long-QT and Brugada syndromes.</title>
        <authorList>
            <person name="Bezzina C.R."/>
            <person name="Veldkamp M.W."/>
            <person name="van Den Berg M.P."/>
            <person name="Postma A.V."/>
            <person name="Rook M.B."/>
            <person name="Viersma J.-W."/>
            <person name="van Langen I.M."/>
            <person name="Tan-Sindhunata G."/>
            <person name="Bink-Boelkens M.T.E."/>
            <person name="van Der Hout A.H."/>
            <person name="Mannens M.M.A.M."/>
            <person name="Wilde A.A.M."/>
        </authorList>
    </citation>
    <scope>CHARACTERIZATION OF VARIANT LQT3/BRGDA1 ASP-1795 INS</scope>
</reference>
<reference key="43">
    <citation type="journal article" date="1999" name="Nat. Genet.">
        <title>Cardiac conduction defects associate with mutations in SCN5A.</title>
        <authorList>
            <person name="Schott J.-J."/>
            <person name="Alshinawi C."/>
            <person name="Kyndt F."/>
            <person name="Probst V."/>
            <person name="Hoorntje T.M."/>
            <person name="Hulsbeek M."/>
            <person name="Wilde A.A.M."/>
            <person name="Escande D."/>
            <person name="Mannens M.M.A.M."/>
            <person name="Le Marec H."/>
        </authorList>
    </citation>
    <scope>DISEASE</scope>
</reference>
<reference key="44">
    <citation type="journal article" date="2000" name="Circulation">
        <title>Cardiac Na(+) channel dysfunction in Brugada syndrome is aggravated by beta(1)-subunit.</title>
        <authorList>
            <person name="Makita N."/>
            <person name="Shirai N."/>
            <person name="Wang D.W."/>
            <person name="Sasaki K."/>
            <person name="George A.L. Jr."/>
            <person name="Kanno M."/>
            <person name="Kitabatake A."/>
        </authorList>
    </citation>
    <scope>CHARACTERIZATION OF VARIANT BRGDA1 MET-1620</scope>
</reference>
<reference key="45">
    <citation type="journal article" date="2000" name="Circulation">
        <title>Spectrum of mutations in long-QT syndrome genes. KVLQT1, HERG, SCN5A, KCNE1, and KCNE2.</title>
        <authorList>
            <person name="Splawski I."/>
            <person name="Shen J."/>
            <person name="Timothy K.W."/>
            <person name="Lehmann M.H."/>
            <person name="Priori S.G."/>
            <person name="Robinson J.L."/>
            <person name="Moss A.J."/>
            <person name="Schwartz P.J."/>
            <person name="Towbin J.A."/>
            <person name="Vincent G.M."/>
            <person name="Keating M.T."/>
        </authorList>
    </citation>
    <scope>VARIANTS LQT3 ASN-1114; VAL-1501; LEU-1623 AND HIS-1644</scope>
    <scope>VARIANT ASN-1787</scope>
</reference>
<reference key="46">
    <citation type="journal article" date="2000" name="FEBS Lett.">
        <title>A novel SCN5A mutation associated with idiopathic ventricular fibrillation without typical ECG findings of Brugada syndrome.</title>
        <authorList>
            <person name="Akai J."/>
            <person name="Makita N."/>
            <person name="Sakurada H."/>
            <person name="Shirai N."/>
            <person name="Ueda K."/>
            <person name="Kitabatake A."/>
            <person name="Nakazawa K."/>
            <person name="Kimura A."/>
            <person name="Hiraoka M."/>
        </authorList>
    </citation>
    <scope>VARIANT VF1 LEU-1710</scope>
</reference>
<reference key="47">
    <citation type="journal article" date="2000" name="N. Engl. J. Med.">
        <title>A molecular link between the sudden infant death syndrome and the long-QT syndrome.</title>
        <authorList>
            <person name="Schwartz P.J."/>
            <person name="Priori S.G."/>
            <person name="Dumaine R."/>
            <person name="Napolitano C."/>
            <person name="Antzelevitch C."/>
            <person name="Stramba-Badiale M."/>
            <person name="Richard T.A."/>
            <person name="Berti M.R."/>
            <person name="Bloise R."/>
        </authorList>
    </citation>
    <scope>VARIANT LQT3 ASN-941</scope>
</reference>
<reference key="48">
    <citation type="journal article" date="2001" name="Circ. Res.">
        <title>Novel arrhythmogenic mechanism revealed by a long-QT syndrome mutation in the cardiac Na(+) channel.</title>
        <authorList>
            <person name="Abriel H."/>
            <person name="Cabo C."/>
            <person name="Wehrens X.H."/>
            <person name="Rivolta I."/>
            <person name="Motoike H.K."/>
            <person name="Memmi M."/>
            <person name="Napolitano C."/>
            <person name="Priori S.G."/>
            <person name="Kass R.S."/>
        </authorList>
    </citation>
    <scope>VARIANT LQT3 LYS-1295</scope>
    <scope>CHARACTERIZATION OF VARIANT LQT3 LYS-1295</scope>
</reference>
<reference key="49">
    <citation type="journal article" date="2001" name="J. Biol. Chem.">
        <title>Inherited Brugada and long QT-3 syndrome mutations of a single residue of the cardiac sodium channel confer distinct channel and clinical phenotypes.</title>
        <authorList>
            <person name="Rivolta I."/>
            <person name="Abriel H."/>
            <person name="Tateyama M."/>
            <person name="Liu H."/>
            <person name="Memmi M."/>
            <person name="Vardas P."/>
            <person name="Napolitano C."/>
            <person name="Priori S.G."/>
            <person name="Kass R.S."/>
        </authorList>
    </citation>
    <scope>CHARACTERIZATION OF VARIANT LQT3 CYS-1795</scope>
    <scope>CHARACTERIZATION OF VARIANT BRGDA1 HIS-1795</scope>
</reference>
<reference key="50">
    <citation type="journal article" date="2001" name="Circulation">
        <title>Novel SCN5A mutation leading either to isolated cardiac conduction defect or Brugada syndrome in a large French family.</title>
        <authorList>
            <person name="Kyndt F."/>
            <person name="Probst V."/>
            <person name="Potet F."/>
            <person name="Demolombe S."/>
            <person name="Chevallier J.-C."/>
            <person name="Baro I."/>
            <person name="Moisan J.-P."/>
            <person name="Boisseau P."/>
            <person name="Schott J.-J."/>
            <person name="Escande D."/>
            <person name="Le Marec H."/>
        </authorList>
    </citation>
    <scope>VARIANT SSS1/BRGDA1 ARG-1408</scope>
</reference>
<reference key="51">
    <citation type="journal article" date="2001" name="JAMA">
        <title>Postmortem molecular analysis of SCN5A defects in sudden infant death syndrome.</title>
        <authorList>
            <person name="Ackerman M.J."/>
            <person name="Siu B.L."/>
            <person name="Sturner W.Q."/>
            <person name="Tester D.J."/>
            <person name="Valdivia C.R."/>
            <person name="Makielski J.C."/>
            <person name="Towbin J.A."/>
        </authorList>
    </citation>
    <scope>CHARACTERIZATION OF VARIANTS LQT3 SER-997 AND HIS-1826</scope>
</reference>
<reference key="52">
    <citation type="journal article" date="2001" name="Nature">
        <title>A sodium-channel mutation causes isolated cardiac conduction disease.</title>
        <authorList>
            <person name="Tan H.L."/>
            <person name="Bink-Boelkens M.T.E."/>
            <person name="Bezzina C.R."/>
            <person name="Viswanathan P.C."/>
            <person name="Beaufort-Krol G.C.M."/>
            <person name="van Tintelen P.J."/>
            <person name="van den Berg M.P."/>
            <person name="Wilde A.A.M."/>
            <person name="Balser J.R."/>
        </authorList>
    </citation>
    <scope>CHARACTERIZATION OF VARIANT PFHB1A CYS-514</scope>
    <scope>FUNCTION</scope>
    <scope>TRANSPORTER ACTIVITY</scope>
</reference>
<reference key="53">
    <citation type="journal article" date="2002" name="J. Am. Coll. Cardiol.">
        <title>Genotype-phenotype relationship in Brugada syndrome: electrocardiographic features differentiate SCN5A-related patients from non-SCN5A-related patients.</title>
        <authorList>
            <person name="Smits J.P.P."/>
            <person name="Eckardt L."/>
            <person name="Probst V."/>
            <person name="Bezzina C.R."/>
            <person name="Schott J.-J."/>
            <person name="Remme C.A."/>
            <person name="Haverkamp W."/>
            <person name="Breithardt G."/>
            <person name="Escande D."/>
            <person name="Schulze-Bahr E."/>
            <person name="LeMarec H."/>
            <person name="Wilde A.A.M."/>
        </authorList>
    </citation>
    <scope>VARIANTS BRGDA1 LYS-161; CYS-367; LYS-369; ARG-752; LYS-1225; VAL-1319; ILE-1382; LEU-1405; ARG-1406; LYS-1479 DEL; SER-1502; TRP-1512; GLU-1743 AND THR-1924</scope>
</reference>
<reference key="54">
    <citation type="journal article" date="2002" name="Circulation">
        <title>Clinical, genetic and biophysical characterisation of SCN5A mutations associated with atrioventricular conduction block.</title>
        <authorList>
            <person name="Wang D.W."/>
            <person name="Viswanathan P.C."/>
            <person name="Balser J.R."/>
            <person name="George A.L. Jr."/>
            <person name="Benson D.W."/>
        </authorList>
    </citation>
    <scope>CHARACTERIZATION OF VARIANTS PFHB1A SER-298 AND ASN-1595</scope>
    <scope>FUNCTION</scope>
    <scope>TRANSPORTER ACTIVITY</scope>
</reference>
<reference key="55">
    <citation type="journal article" date="2002" name="Circulation">
        <title>Na(+) channel mutation that causes both Brugada and long-QT syndrome phenotypes: a simulation study of mechanism.</title>
        <authorList>
            <person name="Clancy C.E."/>
            <person name="Rudy Y."/>
        </authorList>
    </citation>
    <scope>MODELING OF VARIANT LQT3/BRGDA1 ASP-1795 INS</scope>
</reference>
<reference key="56">
    <citation type="journal article" date="2002" name="Circulation">
        <title>Natural history of Brugada syndrome: insights for risk stratification and management.</title>
        <authorList>
            <person name="Priori S.G."/>
            <person name="Napolitano C."/>
            <person name="Gasparini M."/>
            <person name="Pappone C."/>
            <person name="Della Bella P."/>
            <person name="Giordano U."/>
            <person name="Bloise R."/>
            <person name="Giustetto C."/>
            <person name="De Nardis R."/>
            <person name="Grillo M."/>
            <person name="Ronchetti E."/>
            <person name="Faggiano G."/>
            <person name="Nastoli J."/>
        </authorList>
    </citation>
    <scope>VARIANTS BRGDA1 HIS-27; VAL-226; VAL-230; HIS-282; MET-294; SER-319; PHE-393 DEL; GLN-567; PRO-681; GLU-735; LEU-851; ILE-892; SER-896; LEU-910; CYS-965; LYS-1053; ASN-1236; SER-1293; LYS-1500 DEL; ARG-1740; LYS-1784; HIS-1795 AND LEU-1951</scope>
    <scope>VARIANT GLN-1240</scope>
</reference>
<reference key="57">
    <citation type="journal article" date="2002" name="Circulation">
        <title>Allelic variants in long-QT disease genes in patients with drug-associated torsades de pointes.</title>
        <authorList>
            <person name="Yang P."/>
            <person name="Kanki H."/>
            <person name="Drolet B."/>
            <person name="Yang T."/>
            <person name="Wei J."/>
            <person name="Viswanathan P.C."/>
            <person name="Hohnloser S.H."/>
            <person name="Shimizu W."/>
            <person name="Schwartz P.J."/>
            <person name="Stanton M."/>
            <person name="Murray K.T."/>
            <person name="Norris K."/>
            <person name="George A.L. Jr."/>
            <person name="Roden D.M."/>
        </authorList>
    </citation>
    <scope>VARIANTS LQT3 GLU-615; PHE-619 AND LEU-1250</scope>
    <scope>VARIANTS CYS-34 AND ARG-558</scope>
</reference>
<reference key="58">
    <citation type="journal article" date="2002" name="Hum. Mol. Genet.">
        <title>Genetic and biophysical basis of sudden unexplained nocturnal death syndrome (SUNDS), a disease allelic to Brugada syndrome.</title>
        <authorList>
            <person name="Vatta M."/>
            <person name="Dumaine R."/>
            <person name="Varghese G."/>
            <person name="Richard T.A."/>
            <person name="Shimizu W."/>
            <person name="Aihara N."/>
            <person name="Nademanee K."/>
            <person name="Brugada R."/>
            <person name="Brugada J."/>
            <person name="Veerakul G."/>
            <person name="Li H."/>
            <person name="Bowles N.E."/>
            <person name="Brugada P."/>
            <person name="Antzelevitch C."/>
            <person name="Towbin J.A."/>
        </authorList>
    </citation>
    <scope>CHARACTERIZATION OF VARIANTS BRGDA1 HIS-367; VAL-735 AND GLN-1193</scope>
    <scope>TRANSPORTER ACTIVITY</scope>
</reference>
<reference key="59">
    <citation type="journal article" date="2002" name="J. Med. Genet.">
        <title>SNP S1103Y in the cardiac sodium channel gene SCN5A is associated with cardiac arrhythmias and sudden death in a white family.</title>
        <authorList>
            <person name="Chen S."/>
            <person name="Chung M.K."/>
            <person name="Martin D."/>
            <person name="Rozich R."/>
            <person name="Tchou P.J."/>
            <person name="Wang Q."/>
        </authorList>
    </citation>
    <scope>VARIANT TYR-1103</scope>
</reference>
<reference key="60">
    <citation type="journal article" date="2002" name="Mol. Genet. Metab.">
        <title>Novel mutations in domain I of SCN5A cause Brugada syndrome.</title>
        <authorList>
            <person name="Vatta M."/>
            <person name="Dumaine R."/>
            <person name="Antzelevitch C."/>
            <person name="Brugada R."/>
            <person name="Li H."/>
            <person name="Bowles N.E."/>
            <person name="Nademanee K."/>
            <person name="Brugada J."/>
            <person name="Brugada P."/>
            <person name="Towbin J.A."/>
        </authorList>
    </citation>
    <scope>VARIANTS BRGDA1 GLU-126 AND VAL-351</scope>
    <scope>CHARACTERIZATION OF VARIANT BRGDA1 VAL-351</scope>
    <scope>VARIANT ARG-558</scope>
</reference>
<reference key="61">
    <citation type="journal article" date="2002" name="Physiol. Genomics">
        <title>A novel SCN5A mutation associated with long QT-3: altered inactivation kinetics and channel dysfunction.</title>
        <authorList>
            <person name="Rivolta I."/>
            <person name="Clancy C.E."/>
            <person name="Tateyama M."/>
            <person name="Liu H."/>
            <person name="Priori S.G."/>
            <person name="Kass R.S."/>
        </authorList>
    </citation>
    <scope>VARIANT LQT3 VAL-1768</scope>
    <scope>CHARACTERIZATION OF VARIANT LQT3 VAL-1768</scope>
</reference>
<reference key="62">
    <citation type="journal article" date="2002" name="Science">
        <title>Variant of SCN5A sodium channel implicated in risk of cardiac arrhythmia.</title>
        <authorList>
            <person name="Splawski I."/>
            <person name="Timothy K.W."/>
            <person name="Tateyama M."/>
            <person name="Clancy C.E."/>
            <person name="Malhotra A."/>
            <person name="Beggs A.H."/>
            <person name="Cappuccio F.P."/>
            <person name="Sagnella G.A."/>
            <person name="Kass R.S."/>
            <person name="Keating M.T."/>
        </authorList>
    </citation>
    <scope>VARIANT TYR-1103</scope>
</reference>
<reference key="63">
    <citation type="journal article" date="2003" name="Circ. Res.">
        <title>A cardiac sodium channel mutation cosegregates with a rare connexin40 genotype in familial atrial standstill.</title>
        <authorList>
            <person name="Groenewegen W.A."/>
            <person name="Firouzi M."/>
            <person name="Bezzina C.R."/>
            <person name="Vliex S."/>
            <person name="van Langen I.M."/>
            <person name="Sandkuijl L."/>
            <person name="Smits J.P."/>
            <person name="Hulsbeek M."/>
            <person name="Rook M.B."/>
            <person name="Jongsma H.J."/>
            <person name="Wilde A.A.M."/>
        </authorList>
    </citation>
    <scope>VARIANT ATRST1 ASN-1275</scope>
</reference>
<reference key="64">
    <citation type="journal article" date="2003" name="Circ. Res.">
        <title>Compound heterozygosity for mutations (W156X and R225W) in SCN5A associated with severe cardiac conduction disturbances and degenerative changes in the conduction system.</title>
        <authorList>
            <person name="Bezzina C.R."/>
            <person name="Rook M.B."/>
            <person name="Groenewegen W.A."/>
            <person name="Herfst L.J."/>
            <person name="van der Wal A.C."/>
            <person name="Lam J."/>
            <person name="Jongsma H.J."/>
            <person name="Wilde A.A.M."/>
            <person name="Mannens M.M."/>
        </authorList>
    </citation>
    <scope>VARIANT PFHB1A TRP-225</scope>
</reference>
<reference key="65">
    <citation type="journal article" date="2003" name="Hum. Mutat.">
        <title>A novel mutation L619F in the cardiac Na+ channel SCN5A associated with long-QT syndrome (LQT3): a role for the I-II linker in inactivation gating.</title>
        <authorList>
            <person name="Wehrens X.H."/>
            <person name="Rossenbacker T."/>
            <person name="Jongbloed R.J."/>
            <person name="Gewillig M."/>
            <person name="Heidbuchel H."/>
            <person name="Doevendans P.A."/>
            <person name="Vos M.A."/>
            <person name="Wellens H.J."/>
            <person name="Kass R.S."/>
        </authorList>
    </citation>
    <scope>VARIANT LQT3 PHE-619</scope>
</reference>
<reference key="66">
    <citation type="journal article" date="2003" name="J. Clin. Invest.">
        <title>A common SCN5A polymorphism modulates the biophysical effects of an SCN5A mutation.</title>
        <authorList>
            <person name="Viswanathan P.C."/>
            <person name="Benson D.W."/>
            <person name="Balser J.R."/>
        </authorList>
    </citation>
    <scope>VARIANT PFHB1A ILE-512</scope>
    <scope>CHARACTERIZATION OF VARIANT PFHB1A ILE-512</scope>
    <scope>VARIANT ARG-558</scope>
    <scope>CHARACTERIZATION OF VARIANT ARG-558</scope>
    <scope>FUNCTION</scope>
    <scope>TRANSPORTER ACTIVITY</scope>
</reference>
<reference key="67">
    <citation type="journal article" date="2003" name="J. Clin. Invest.">
        <title>Congenital sick sinus syndrome caused by recessive mutations in the cardiac sodium channel gene (SCN5A).</title>
        <authorList>
            <person name="Benson D.W."/>
            <person name="Wang D.W."/>
            <person name="Dyment M."/>
            <person name="Knilans T.K."/>
            <person name="Fish F.A."/>
            <person name="Strieper M.J."/>
            <person name="Rhodes T.H."/>
            <person name="George A.L. Jr."/>
        </authorList>
    </citation>
    <scope>VARIANTS SSS1 ILE-220; LEU-1298 AND ARG-1408</scope>
</reference>
<reference key="68">
    <citation type="journal article" date="2004" name="Cardiovasc. Res.">
        <title>A trafficking defective, Brugada syndrome-causing SCN5A mutation rescued by drugs.</title>
        <authorList>
            <person name="Valdivia C.R."/>
            <person name="Tester D.J."/>
            <person name="Rok B.A."/>
            <person name="Porter C.B."/>
            <person name="Munger T.M."/>
            <person name="Jahangir A."/>
            <person name="Makielski J.C."/>
            <person name="Ackerman M.J."/>
        </authorList>
    </citation>
    <scope>VARIANT BRGDA1 ARG-1743</scope>
    <scope>CHARACTERIZATION OF VARIANT BRGDA1 ARG-1743</scope>
</reference>
<reference key="69">
    <citation type="journal article" date="2004" name="Circulation">
        <title>SCN5A mutation associated with dilated cardiomyopathy, conduction disorder, and arrhythmia.</title>
        <authorList>
            <consortium name="The familial cardiomyopathy registry research group"/>
            <person name="McNair W.P."/>
            <person name="Ku L."/>
            <person name="Taylor M.R.G."/>
            <person name="Fain P.R."/>
            <person name="Dao D."/>
            <person name="Wolfel E."/>
            <person name="Mestroni L."/>
        </authorList>
    </citation>
    <scope>VARIANT CMD1E ASN-1275</scope>
</reference>
<reference key="70">
    <citation type="journal article" date="2004" name="J. Hum. Genet.">
        <title>Genetic analysis of the cardiac sodium channel gene SCN5A in Koreans with Brugada syndrome.</title>
        <authorList>
            <person name="Shin D.-J."/>
            <person name="Jang Y."/>
            <person name="Park H.-Y."/>
            <person name="Lee J.E."/>
            <person name="Yang K."/>
            <person name="Kim E."/>
            <person name="Bae Y."/>
            <person name="Kim J."/>
            <person name="Kim J."/>
            <person name="Kim S.S."/>
            <person name="Lee M.H."/>
            <person name="Chahine M."/>
            <person name="Yoon S.K."/>
        </authorList>
    </citation>
    <scope>VARIANT BRGDA1 SER-1262</scope>
</reference>
<reference key="71">
    <citation type="journal article" date="2004" name="Proc. Natl. Acad. Sci. U.S.A.">
        <title>Nav1.5 E1053K mutation causing Brugada syndrome blocks binding to ankyrin-G and expression of Nav1.5 on the surface of cardiomyocytes.</title>
        <authorList>
            <person name="Mohler P.J."/>
            <person name="Rivolta I."/>
            <person name="Napolitano C."/>
            <person name="LeMaillet G."/>
            <person name="Lambert S."/>
            <person name="Priori S.G."/>
            <person name="Bennett V."/>
        </authorList>
    </citation>
    <scope>VARIANT BRGDA1 LYS-1053</scope>
    <scope>CHARACTERIZATION OF VARIANT BRGDA1 LYS-1053</scope>
    <scope>INTERACTION WITH ANK3</scope>
</reference>
<reference key="72">
    <citation type="journal article" date="2005" name="Acta Physiol. Scand.">
        <title>Novel Brugada syndrome-causing mutation in ion-conducting pore of cardiac Na+ channel does not affect ion selectivity properties.</title>
        <authorList>
            <person name="Amin A.S."/>
            <person name="Verkerk A.O."/>
            <person name="Bhuiyan Z.A."/>
            <person name="Wilde A.A.M."/>
            <person name="Tan H.L."/>
        </authorList>
    </citation>
    <scope>VARIANT BRGDA1 GLY-1714</scope>
    <scope>CHARACTERIZATION OF VARIANT BRGDA1 GLY-1714</scope>
</reference>
<reference key="73">
    <citation type="journal article" date="2005" name="Heart Rhythm">
        <title>Double SCN5A mutation underlying asymptomatic Brugada syndrome.</title>
        <authorList>
            <person name="Yokoi H."/>
            <person name="Makita N."/>
            <person name="Sasaki K."/>
            <person name="Takagi Y."/>
            <person name="Okumura Y."/>
            <person name="Nishino T."/>
            <person name="Makiyama T."/>
            <person name="Kitabatake A."/>
            <person name="Horie M."/>
            <person name="Watanabe I."/>
            <person name="Tsutsui H."/>
        </authorList>
    </citation>
    <scope>VARIANTS BRGDA1 ARG-1527 AND PRO-1569</scope>
</reference>
<reference key="74">
    <citation type="journal article" date="2005" name="JAMA">
        <title>Genetic testing in the long QT syndrome: development and validation of an efficient approach to genotyping in clinical practice.</title>
        <authorList>
            <person name="Napolitano C."/>
            <person name="Priori S.G."/>
            <person name="Schwartz P.J."/>
            <person name="Bloise R."/>
            <person name="Ronchetti E."/>
            <person name="Nastoli J."/>
            <person name="Bottelli G."/>
            <person name="Cerrone M."/>
            <person name="Leonardi S."/>
        </authorList>
    </citation>
    <scope>VARIANTS LQT3 GLU-413; THR-413; GLU-573; ARG-579; HIS-689; PRO-1626; CYS-1644; VAL-1660; CYS-1767; GLY-1790 AND HIS-1913</scope>
    <scope>VARIANTS THR-1498 AND ASN-1787</scope>
</reference>
<reference key="75">
    <citation type="journal article" date="2005" name="Heart Rhythm">
        <title>Compendium of cardiac channel mutations in 541 consecutive unrelated patients referred for long QT syndrome genetic testing.</title>
        <authorList>
            <person name="Tester D.J."/>
            <person name="Will M.L."/>
            <person name="Haglund C.M."/>
            <person name="Ackerman M.J."/>
        </authorList>
    </citation>
    <scope>VARIANTS LQT3 LEU-125; LYS-245; GLN-404; LYS-406; MET-411; LYS-462; ASP-572; GLU-615; LEU-637; LEU-648; CYS-971; MET-1069; LYS-1225; LYS-1231; SER-1325; TYR-1458; GLU-1481; 1505-LYS--GLN-1507 DEL; LEU-1623; HIS-1644; ILE-1667; MET-1763; LEU-1766; MET-1777; MET-1779; LYS-1784; CYS-1795; ARG-1909 AND SER-1949</scope>
    <scope>VARIANTS TRP-18; PHE-618 AND GLN-1958</scope>
</reference>
<reference key="76">
    <citation type="journal article" date="2005" name="J. Am. Coll. Cardiol.">
        <title>High risk for bradyarrhythmic complications in patients with Brugada syndrome caused by SCN5A gene mutations.</title>
        <authorList>
            <person name="Makiyama T."/>
            <person name="Akao M."/>
            <person name="Tsuji K."/>
            <person name="Doi T."/>
            <person name="Ohno S."/>
            <person name="Takenaka K."/>
            <person name="Kobori A."/>
            <person name="Ninomiya T."/>
            <person name="Yoshida H."/>
            <person name="Takano M."/>
            <person name="Makita N."/>
            <person name="Yanagisawa F."/>
            <person name="Higashi Y."/>
            <person name="Takeyama Y."/>
            <person name="Kita T."/>
            <person name="Horie M."/>
        </authorList>
    </citation>
    <scope>VARIANTS BRGDA1 ILE-187 AND ASN-356</scope>
    <scope>CHARACTERIZATION OF VARIANTS BRGDA1 ILE-187 AND ASN-356</scope>
</reference>
<reference key="77">
    <citation type="journal article" date="2006" name="Cardiovasc. Res.">
        <title>A novel SCN5A mutation, F1344S, identified in a patient with Brugada syndrome and fever-induced ventricular fibrillation.</title>
        <authorList>
            <person name="Keller D.I."/>
            <person name="Huang H."/>
            <person name="Zhao J."/>
            <person name="Frank R."/>
            <person name="Suarez V."/>
            <person name="Delacretaz E."/>
            <person name="Brink M."/>
            <person name="Osswald S."/>
            <person name="Schwick N."/>
            <person name="Chahine M."/>
        </authorList>
    </citation>
    <scope>VARIANT BRGDA1 SER-1344</scope>
    <scope>VARIANTS ARG-552 AND GLN-1027</scope>
</reference>
<reference key="78">
    <citation type="journal article" date="2006" name="Circulation">
        <title>Compound heterozygous mutations P336L and I1660V in the human cardiac sodium channel associated with the Brugada syndrome.</title>
        <authorList>
            <person name="Cordeiro J.M."/>
            <person name="Barajas-Martinez H."/>
            <person name="Hong K."/>
            <person name="Burashnikov E."/>
            <person name="Pfeiffer R."/>
            <person name="Orsino A.M."/>
            <person name="Wu Y.S."/>
            <person name="Hu D."/>
            <person name="Brugada J."/>
            <person name="Brugada P."/>
            <person name="Antzelevitch C."/>
            <person name="Dumaine R."/>
            <person name="Brugada R."/>
        </authorList>
    </citation>
    <scope>VARIANTS BRGDA1 LEU-336 AND VAL-1660</scope>
    <scope>CHARACTERIZATION OF VARIANTS BRGDA1 LEU-336 AND VAL-1660</scope>
</reference>
<reference key="79">
    <citation type="journal article" date="2006" name="Clin. Genet.">
        <title>Spectrum of pathogenic mutations and associated polymorphisms in a cohort of 44 unrelated patients with long QT syndrome.</title>
        <authorList>
            <person name="Millat G."/>
            <person name="Chevalier P."/>
            <person name="Restier-Miron L."/>
            <person name="Da Costa A."/>
            <person name="Bouvagnet P."/>
            <person name="Kugener B."/>
            <person name="Fayol L."/>
            <person name="Gonzalez Armengod C."/>
            <person name="Oddou B."/>
            <person name="Chanavat V."/>
            <person name="Froidefond E."/>
            <person name="Perraudin R."/>
            <person name="Rousson R."/>
            <person name="Rodriguez-Lafrasse C."/>
        </authorList>
    </citation>
    <scope>VARIANTS LQT3 VAL-9; GLN-225; ARG-639; TYR-1333; TRP-1609 AND ASN-1819</scope>
</reference>
<reference key="80">
    <citation type="journal article" date="2006" name="Zhonghua Xin Xue Guan Bing Za Zhi">
        <title>Novel SCN5A gene mutations associated with Brugada syndrome: V95I, A1649V and delF1617.</title>
        <authorList>
            <person name="Liang P."/>
            <person name="Liu W.L."/>
            <person name="Hu D.Y."/>
            <person name="Li C.L."/>
            <person name="Tao W.H."/>
            <person name="Li L."/>
        </authorList>
    </citation>
    <scope>VARIANTS BRGDA1 ILE-95; PHE-1617 DEL AND VAL-1649</scope>
</reference>
<reference key="81">
    <citation type="journal article" date="2007" name="Channels">
        <title>A novel LQT-3 mutation disrupts an inactivation gate complex with distinct rate-dependent phenotypic consequences.</title>
        <authorList>
            <person name="Bankston J.R."/>
            <person name="Sampson K.J."/>
            <person name="Kateriya S."/>
            <person name="Glaaser I.W."/>
            <person name="Malito D.L."/>
            <person name="Chung W.K."/>
            <person name="Kass R.S."/>
        </authorList>
    </citation>
    <scope>VARIANT LQT3 LEU-1904</scope>
    <scope>CHARACTERIZATION OF VARIANT LQT3 LEU-1904</scope>
</reference>
<reference key="82">
    <citation type="journal article" date="2007" name="Heart Rhythm">
        <title>A sodium channel pore mutation causing Brugada syndrome.</title>
        <authorList>
            <person name="Pfahnl A.E."/>
            <person name="Viswanathan P.C."/>
            <person name="Weiss R."/>
            <person name="Shang L.L."/>
            <person name="Sanyal S."/>
            <person name="Shusterman V."/>
            <person name="Kornblit C."/>
            <person name="London B."/>
            <person name="Dudley S.C. Jr."/>
        </authorList>
    </citation>
    <scope>VARIANT BRGDA1 ILE-353</scope>
</reference>
<reference key="83">
    <citation type="journal article" date="2007" name="PLoS ONE">
        <title>A novel and lethal de novo LQT-3 mutation in a newborn with distinct molecular pharmacology and therapeutic response.</title>
        <authorList>
            <person name="Bankston J.R."/>
            <person name="Yue M."/>
            <person name="Chung W."/>
            <person name="Spyres M."/>
            <person name="Pass R.H."/>
            <person name="Silver E."/>
            <person name="Sampson K.J."/>
            <person name="Kass R.S."/>
        </authorList>
    </citation>
    <scope>VARIANT LQT3 CYS-1473</scope>
</reference>
<reference key="84">
    <citation type="journal article" date="2007" name="Zhonghua Xin Xue Guan Bing Za Zhi">
        <title>Gene (SCN5A) mutation analysis of a Chinese family with Brugada syndrome.</title>
        <authorList>
            <person name="Tian L."/>
            <person name="Zhu J.F."/>
            <person name="Yang J.G."/>
        </authorList>
    </citation>
    <scope>VARIANT BRGDA1 ASN-1494</scope>
</reference>
<reference key="85">
    <citation type="journal article" date="2008" name="Acta Physiol.">
        <title>Correlations between clinical and physiological consequences of the novel mutation R878C in a highly conserved pore residue in the cardiac Na+ channel.</title>
        <authorList>
            <person name="Zhang Y."/>
            <person name="Wang T."/>
            <person name="Ma A."/>
            <person name="Zhou X."/>
            <person name="Gui J."/>
            <person name="Wan H."/>
            <person name="Shi R."/>
            <person name="Huang C."/>
            <person name="Grace A.A."/>
            <person name="Huang C.L."/>
            <person name="Trump D."/>
            <person name="Zhang H."/>
            <person name="Zimmer T."/>
            <person name="Lei M."/>
        </authorList>
    </citation>
    <scope>VARIANT BRGDA1 CYS-878</scope>
</reference>
<reference key="86">
    <citation type="journal article" date="2008" name="Am. J. Physiol.">
        <title>Subepicardial phase 0 block and discontinuous transmural conduction underlie right precordial ST-segment elevation by a SCN5A loss-of-function mutation.</title>
        <authorList>
            <person name="Bebarova M."/>
            <person name="O'Hara T."/>
            <person name="Geelen J.L.M.C."/>
            <person name="Jongbloed R.J."/>
            <person name="Timmermans C."/>
            <person name="Arens Y.H."/>
            <person name="Rodriguez L.-M."/>
            <person name="Rudy Y."/>
            <person name="Volders P.G.A."/>
        </authorList>
    </citation>
    <scope>VARIANT BRGDA1 LEU-2004</scope>
    <scope>CHARACTERIZATION OF VARIANT BRGDA1 LEU-2004</scope>
</reference>
<reference key="87">
    <citation type="journal article" date="2008" name="Cardiovasc. Res.">
        <title>Analyses of a novel SCN5A mutation (C1850S): conduction vs. repolarization disorder hypotheses in the Brugada syndrome.</title>
        <authorList>
            <person name="Petitprez S."/>
            <person name="Jespersen T."/>
            <person name="Pruvot E."/>
            <person name="Keller D.I."/>
            <person name="Corbaz C."/>
            <person name="Schlapfer J."/>
            <person name="Abriel H."/>
            <person name="Kucera J.P."/>
        </authorList>
    </citation>
    <scope>VARIANT BRGDA1 SER-1850</scope>
    <scope>CHARACTERIZATION OF VARIANT BRGDA1 SER-1850</scope>
</reference>
<reference key="88">
    <citation type="journal article" date="2008" name="Circ. Res.">
        <title>Lidocaine-induced Brugada syndrome phenotype linked to a novel double mutation in the cardiac sodium channel.</title>
        <authorList>
            <person name="Barajas-Martinez H.M."/>
            <person name="Hu D."/>
            <person name="Cordeiro J.M."/>
            <person name="Wu Y."/>
            <person name="Kovacs R.J."/>
            <person name="Meltser H."/>
            <person name="Kui H."/>
            <person name="Elena B."/>
            <person name="Brugada R."/>
            <person name="Antzelevitch C."/>
            <person name="Dumaine R."/>
        </authorList>
    </citation>
    <scope>VARIANTS ILE-232 AND PHE-1308</scope>
</reference>
<reference key="89">
    <citation type="journal article" date="2008" name="Circulation">
        <title>Cardiac sodium channel (SCN5A) variants associated with atrial fibrillation.</title>
        <authorList>
            <person name="Darbar D."/>
            <person name="Kannankeril P.J."/>
            <person name="Donahue B.S."/>
            <person name="Kucera G."/>
            <person name="Stubblefield T."/>
            <person name="Haines J.L."/>
            <person name="George A.L. Jr."/>
            <person name="Roden D.M."/>
        </authorList>
    </citation>
    <scope>VARIANTS ATFB10 ILE-138; LEU-216; HIS-376; LYS-428; ASP-445; LYS-470; ASP-572; LYS-655; LYS-1053; ILE-1131; CYS-1826 AND MET-1951</scope>
    <scope>VARIANTS CYS-34; VAL-461; TRP-481; TYR-524; ARG-558; PHE-618; SER-997 AND TYR-1103</scope>
    <scope>VARIANTS LQT3 GLN-1193; LEU-1951 AND LEU-2004</scope>
</reference>
<reference key="90">
    <citation type="journal article" date="2008" name="Heart Rhythm">
        <title>Cardiac sodium channel mutation in atrial fibrillation.</title>
        <authorList>
            <person name="Ellinor P.T."/>
            <person name="Nam E.G."/>
            <person name="Shea M.A."/>
            <person name="Milan D.J."/>
            <person name="Ruskin J.N."/>
            <person name="MacRae C.A."/>
        </authorList>
    </citation>
    <scope>VARIANT ATFB10 LYS-1987</scope>
</reference>
<reference key="91">
    <citation type="journal article" date="2008" name="Heart Rhythm">
        <title>A mutation in the sodium channel is responsible for the association of long QT syndrome and familial atrial fibrillation.</title>
        <authorList>
            <person name="Benito B."/>
            <person name="Brugada R."/>
            <person name="Perich R.M."/>
            <person name="Lizotte E."/>
            <person name="Cinca J."/>
            <person name="Mont L."/>
            <person name="Berruezo A."/>
            <person name="Tolosana J.M."/>
            <person name="Freixa X."/>
            <person name="Brugada P."/>
            <person name="Brugada J."/>
        </authorList>
    </citation>
    <scope>VARIANT LQT3 CYS-1795</scope>
</reference>
<reference key="92">
    <citation type="journal article" date="2008" name="Heart Rhythm">
        <title>In utero onset of long QT syndrome with atrioventricular block and spontaneous or lidocaine-induced ventricular tachycardia: compound effects of hERG pore region mutation and SCN5A N-terminus variant.</title>
        <authorList>
            <person name="Lin M.-T."/>
            <person name="Wu M.-H."/>
            <person name="Chang C.-C."/>
            <person name="Chiu S.-N."/>
            <person name="Theriault O."/>
            <person name="Huang H."/>
            <person name="Christe G."/>
            <person name="Ficker E."/>
            <person name="Chahine M."/>
        </authorList>
    </citation>
    <scope>VARIANT LQT3 GLN-43</scope>
    <scope>CHARACTERIZATION OF VARIANT LQT3 GLN-43</scope>
</reference>
<reference key="93">
    <citation type="journal article" date="2008" name="J. Am. Coll. Cardiol.">
        <title>A novel SCN5A gain-of-function mutation M1875T associated with familial atrial fibrillation.</title>
        <authorList>
            <person name="Makiyama T."/>
            <person name="Akao M."/>
            <person name="Shizuta S."/>
            <person name="Doi T."/>
            <person name="Nishiyama K."/>
            <person name="Oka Y."/>
            <person name="Ohno S."/>
            <person name="Nishio Y."/>
            <person name="Tsuji K."/>
            <person name="Itoh H."/>
            <person name="Kimura T."/>
            <person name="Kita T."/>
            <person name="Horie M."/>
        </authorList>
    </citation>
    <scope>VARIANT ATRIAL FIBRILLATION THR-1875</scope>
    <scope>CHARACTERIZATION OF VARIANT ATRIAL FIBRILLATION THR-1875</scope>
</reference>
<reference key="94">
    <citation type="journal article" date="2008" name="J. Clin. Invest.">
        <title>The E1784K mutation in SCN5A is associated with mixed clinical phenotype of type 3 long QT syndrome.</title>
        <authorList>
            <person name="Makita N."/>
            <person name="Behr E."/>
            <person name="Shimizu W."/>
            <person name="Horie M."/>
            <person name="Sunami A."/>
            <person name="Crotti L."/>
            <person name="Schulze-Bahr E."/>
            <person name="Fukuhara S."/>
            <person name="Mochizuki N."/>
            <person name="Makiyama T."/>
            <person name="Itoh H."/>
            <person name="Christiansen M."/>
            <person name="McKeown P."/>
            <person name="Miyamoto K."/>
            <person name="Kamakura S."/>
            <person name="Tsutsui H."/>
            <person name="Schwartz P.J."/>
            <person name="George A.L. Jr."/>
            <person name="Roden D.M."/>
        </authorList>
    </citation>
    <scope>VARIANT LQT3/BRGDA1/SSS1 LYS-1784</scope>
</reference>
<reference key="95">
    <citation type="journal article" date="2008" name="Mol. Genet. Metab.">
        <title>SCN5A variants in Japanese patients with left ventricular noncompaction and arrhythmia.</title>
        <authorList>
            <person name="Shan L."/>
            <person name="Makita N."/>
            <person name="Xing Y."/>
            <person name="Watanabe S."/>
            <person name="Futatani T."/>
            <person name="Ye F."/>
            <person name="Saito K."/>
            <person name="Ibuki K."/>
            <person name="Watanabe K."/>
            <person name="Hirono K."/>
            <person name="Uese K."/>
            <person name="Ichida F."/>
            <person name="Miyawaki T."/>
            <person name="Origasa H."/>
            <person name="Bowles N.E."/>
            <person name="Towbin J.A."/>
        </authorList>
    </citation>
    <scope>VARIANTS ARG-558 AND LEU-1090</scope>
</reference>
<reference key="96">
    <citation type="journal article" date="2008" name="Pediatr. Res.">
        <title>Cardiac ion channel gene mutations in sudden infant death syndrome.</title>
        <authorList>
            <person name="Otagiri T."/>
            <person name="Kijima K."/>
            <person name="Osawa M."/>
            <person name="Ishii K."/>
            <person name="Makita N."/>
            <person name="Matoba R."/>
            <person name="Umetsu K."/>
            <person name="Hayasaka K."/>
        </authorList>
    </citation>
    <scope>VARIANTS SIDS CYS-532; SER-1084 AND SER-1705</scope>
    <scope>CHARACTERIZATION OF VARIANT SIDS SER-1705</scope>
</reference>
<reference key="97">
    <citation type="journal article" date="2009" name="Am. J. Physiol.">
        <title>Sodium channel mutation in irritable bowel syndrome: evidence for an ion channelopathy.</title>
        <authorList>
            <person name="Saito Y.A."/>
            <person name="Strege P.R."/>
            <person name="Tester D.J."/>
            <person name="Locke G.R. III"/>
            <person name="Talley N.J."/>
            <person name="Bernard C.E."/>
            <person name="Rae J.L."/>
            <person name="Makielski J.C."/>
            <person name="Ackerman M.J."/>
            <person name="Farrugia G."/>
        </authorList>
    </citation>
    <scope>VARIANT IRRITABLE BOWEL SYNDROME SER-298</scope>
    <scope>CHARACTERIZATION OF VARIANT IRRITABLE BOWEL SYNDROME SER-298</scope>
</reference>
<reference key="98">
    <citation type="journal article" date="2009" name="FEBS Lett.">
        <title>Biophysical characterization of a new SCN5A mutation S1333Y in a SIDS infant linked to long QT syndrome.</title>
        <authorList>
            <person name="Huang H."/>
            <person name="Millat G."/>
            <person name="Rodriguez-Lafrasse C."/>
            <person name="Rousson R."/>
            <person name="Kugener B."/>
            <person name="Chevalier P."/>
            <person name="Chahine M."/>
        </authorList>
    </citation>
    <scope>VARIANT SIDS TYR-1333</scope>
</reference>
<reference key="99">
    <citation type="journal article" date="2009" name="Heart Rhythm">
        <title>Type of SCN5A mutation determines clinical severity and degree of conduction slowing in loss-of-function sodium channelopathies.</title>
        <authorList>
            <person name="Meregalli P.G."/>
            <person name="Tan H.L."/>
            <person name="Probst V."/>
            <person name="Koopmann T.T."/>
            <person name="Tanck M.W."/>
            <person name="Bhuiyan Z.A."/>
            <person name="Sacher F."/>
            <person name="Kyndt F."/>
            <person name="Schott J.-J."/>
            <person name="Albuisson J."/>
            <person name="Mabo P."/>
            <person name="Bezzina C.R."/>
            <person name="Le Marec H."/>
            <person name="Wilde A.A.M."/>
        </authorList>
    </citation>
    <scope>VARIANTS BRGDA1 LYS-161; CYS-367; HIS-367; CYS-514; ARG-752; TRP-1232; ASN-1275; VAL-1319; ARG-1408; TRP-1512; GLY-1714; ARG-1740; GLU-1743 AND THR-1924</scope>
    <scope>VARIANTS PFHB1A LYS-161; CYS-367; HIS-367; CYS-514; ARG-752; TRP-1232; ASN-1275; VAL-1319; ARG-1408; TRP-1512; GLY-1714; ARG-1740; GLU-1743 AND THR-1924</scope>
</reference>
<reference key="100">
    <citation type="journal article" date="2009" name="Heart Rhythm">
        <title>Spectrum and prevalence of mutations from the first 2,500 consecutive unrelated patients referred for the FAMILION long QT syndrome genetic test.</title>
        <authorList>
            <person name="Kapplinger J.D."/>
            <person name="Tester D.J."/>
            <person name="Salisbury B.A."/>
            <person name="Carr J.L."/>
            <person name="Harris-Kerr C."/>
            <person name="Pollevick G.D."/>
            <person name="Wilde A.A."/>
            <person name="Ackerman M.J."/>
        </authorList>
    </citation>
    <scope>VARIANTS LQT3 GLN-18; HIS-27; GLY-30; GLN-43; LYS-48; SER-52; GLN-53; GLY-104; GLY-115; LEU-125; PRO-212; GLN-222; TRP-225; MET-240; LEU-247; LYS-275; SER-289; TRP-340; CYS-367; MET-370; THR-397; LYS-406; VAL-409; MET-411; GLU-429 DEL; ALA-462; VAL-530; GLN-535; TRP-569; ILE-571; SER-572; VAL-572; 586-ALA-LEU-587 DEL; GLU-615; ARG-639; LYS-654; PRO-673; CYS-689; LEU-701; ILE-731; ARG-750; ASN-772; TYR-816; PHE-848; LYS-960; LEU-965; PHE-981; SER-997; ARG-1004; LYS-1053; MET-1069; VAL-1100; ASN-1114; ASN-1166; SER-1199; ILE-1212 DEL; MET-1283; MET-1304; SER-1325; SER-1326; VAL-1334; VAL-1338; SER-1432; SER-1472; CYS-1473; GLU-1481; LEU-1487; ARG-1488; ASP-1489; ARG-1493; SER-1495; VAL-1498; VAL-1501; ASN-1505; ILE-1532; PHE-1560; MET-1593; SER-1594; ILE-1596; PHE-1617 DEL; GLN-1623; LEU-1623; HIS-1626; CYS-1644; PHE-1650; THR-1652; ASN-1723; TRP-1739; HIS-1761; PHE-1761; MET-1763; MET-1777; MET-1779; LYS-1784; CYS-1795; HIS-1826; GLY-1839; TRP-1897; GLN-1901; ASN-1977; VAL-2004 AND CYS-2012</scope>
</reference>
<reference key="101">
    <citation type="journal article" date="2009" name="J. Biomed. Sci.">
        <title>Distinct functional defect of three novel Brugada syndrome related cardiac sodium channel mutations.</title>
        <authorList>
            <person name="Hsueh C.H."/>
            <person name="Chen W.P."/>
            <person name="Lin J.L."/>
            <person name="Tsai C.T."/>
            <person name="Liu Y.B."/>
            <person name="Juang J.M."/>
            <person name="Tsao H.M."/>
            <person name="Su M.J."/>
            <person name="Lai L.P."/>
        </authorList>
    </citation>
    <scope>VARIANT BRGDA1 CYS-965</scope>
    <scope>CHARACTERIZATION OF VARIANT BRGDA1 CYS-965</scope>
</reference>
<reference key="102">
    <citation type="journal article" date="2010" name="Heart Rhythm">
        <title>An international compendium of mutations in the SCN5A-encoded cardiac sodium channel in patients referred for Brugada syndrome genetic testing.</title>
        <authorList>
            <person name="Kapplinger J.D."/>
            <person name="Tester D.J."/>
            <person name="Alders M."/>
            <person name="Benito B."/>
            <person name="Berthet M."/>
            <person name="Brugada J."/>
            <person name="Brugada P."/>
            <person name="Fressart V."/>
            <person name="Guerchicoff A."/>
            <person name="Harris-Kerr C."/>
            <person name="Kamakura S."/>
            <person name="Kyndt F."/>
            <person name="Koopmann T.T."/>
            <person name="Miyamoto Y."/>
            <person name="Pfeiffer R."/>
            <person name="Pollevick G.D."/>
            <person name="Probst V."/>
            <person name="Zumhagen S."/>
            <person name="Vatta M."/>
            <person name="Towbin J.A."/>
            <person name="Shimizu W."/>
            <person name="Schulze-Bahr E."/>
            <person name="Antzelevitch C."/>
            <person name="Salisbury B.A."/>
            <person name="Guicheney P."/>
            <person name="Wilde A.A."/>
            <person name="Brugada R."/>
            <person name="Schott J.J."/>
            <person name="Ackerman M.J."/>
        </authorList>
    </citation>
    <scope>VARIANTS TRP-18; CYS-34; HIS-34; SER-286; SER-291; MET-299; CYS-376; GLY-447; ALA-449; VAL-461; SER-475; TRP-481; TYR-524; ARG-558; HIS-568; ARG-579; LYS-592; GLY-596; ALA-601; PHE-618; ASP-638; LEU-656; THR-672; HIS-689; LYS-692; PHE-705; ILE-924; GLN-986; MET-1016; ARG-1040; ALA-1082; LEU-1090; LEU-1098; TYR-1103; LYS-1107; TRP-1116; GLN-1193; MET-1251; SER-1293; PHE-1308; TRP-1512; ASN-1787; THR-1836; LYS-1901; CYS-1919; LEU-1951; GLN-1958; LEU-1962; MET-1968; GLN-1991; LEU-2004 AND ALA-2006</scope>
    <scope>VARIANTS BRGDA1 GLN-18; LYS-70; ASN-84; SER-93; SER-94; GLN-104; TRP-104; LYS-109; GLN-121; TRP-121; GLU-126; PRO-136; MET-146; GLN-161; LYS-161; ASN-175; GLY-178; ARG-182; VAL-185; VAL-204; GLN-212; LEU-216; ILE-220; GLN-222; LEU-223; TRP-225; VAL-226; ILE-232; MET-240; LYS-270; GLN-276; ASP-278; CYS-282; ILE-300; PRO-315; ASN-320; ARG-325; LEU-336; ASP-351; VAL-351; ASN-356; CYS-367; HIS-367; LEU-367; LYS-369; GLY-374; HIS-376; ARG-386; GLU-386; ALA-396; LEU-396; LYS-439; GLY-501; HIS-526; CYS-532; LEU-543; ARG-552; GLU-615; PHE-619; CYS-620; MET-632; ALA-640; ASP-647; LEU-648; TRP-661; GLY-683; LEU-701; LEU-717; VAL-735; LYS-746; ARG-752; GLU-758; ARG-764; ASN-772; SER-773; ILE-789; PRO-808; PRO-839; LEU-851; GLN-867; CYS-878; HIS-878; PRO-886; CYS-893; HIS-893; LYS-901; LEU-910; ARG-915; ARG-917; SER-927; PRO-928; PRO-935; CYS-965; HIS-965; THR-997; LYS-1053; GLY-1055; TYR-1079; VAL-1113; THR-1140; ASN-1219; LYS-1225; HIS-1228; GLN-1232; TRP-1232; PRO-1239; ASN-1243; ASP-1249; GLY-1253; SER-1262; CYS-1271; ASN-1275; GLY-1288; PRO-1311; VAL-1319; GLY-1323; LEU-1332; LEU-1344; ILE-1346; PRO-1346; ARG-1351; MET-1353; TRP-1358; ASN-1359; CYS-1360; TYR-1363; ILE-1382; LEU-1405; MET-1405; ARG-1406; GLU-1406; ARG-1408; CYS-1409; PHE-1412; GLU-1419; ARG-1420; SER-1427; VAL-1428; GLY-1432; SER-1432; VAL-1433; LEU-1438; GLN-1441; LEU-1448; THR-1448; CYS-1449; ASP-1451; TYR-1463; PHE-1468; VAL-1501; LYS-1521; MET-1525; LYS-1548; CYS-1571; LYS-1574; PRO-1582; CYS-1583; HIS-1583; MET-1604; LEU-1613; MET-1620; GLN-1623; GLN-1629; GLU-1642; VAL-1660; ARG-1661; ILE-1667; TYR-1672; THR-1680; THR-1698; ARG-1709; MET-1709; SER-1712; GLY-1714; ASP-1722; ARG-1728; TRP-1728; ARG-1740; ARG-1743; GLU-1743; PHE-1764; MET-1779; LYS-1784; GLU-1832; ILE-1861; ASN-1872; LEU-1903; THR-1924; SER-1935; LYS-1938 AND VAL-2004</scope>
</reference>
<reference key="103">
    <citation type="journal article" date="2011" name="Heart Rhythm">
        <title>A common SCN5A polymorphism modulates the biophysical defects of SCN5A mutations.</title>
        <authorList>
            <person name="Shinlapawittayatorn K."/>
            <person name="Du X.X."/>
            <person name="Liu H."/>
            <person name="Ficker E."/>
            <person name="Kaufman E.S."/>
            <person name="Deschenes I."/>
        </authorList>
    </citation>
    <scope>CHARACTERIZATION OF VARIANTS ARG-558 AND ALA-2006</scope>
</reference>
<reference key="104">
    <citation type="journal article" date="2012" name="Arch. Pediatr.">
        <title>Cardiac sinus node dysfunction due to a new mutation of the SCN5A gene.</title>
        <authorList>
            <person name="Selly J.B."/>
            <person name="Boumahni B."/>
            <person name="Edmar A."/>
            <person name="Jamal Bey K."/>
            <person name="Randrianaivo H."/>
            <person name="Clerici G."/>
            <person name="Millat G."/>
            <person name="Caillet D."/>
        </authorList>
    </citation>
    <scope>VARIANTS SSS1 VAL-735 AND ASN-1792</scope>
</reference>
<reference key="105">
    <citation type="journal article" date="2013" name="Heart Rhythm">
        <title>p.D1690N Nav1.5 rescues p.G1748D mutation gating defects in a compound heterozygous Brugada syndrome patient.</title>
        <authorList>
            <person name="Nunez L."/>
            <person name="Barana A."/>
            <person name="Amoros I."/>
            <person name="de la Fuente M.G."/>
            <person name="Dolz-Gaiton P."/>
            <person name="Gomez R."/>
            <person name="Rodriguez-Garcia I."/>
            <person name="Mosquera I."/>
            <person name="Monserrat L."/>
            <person name="Delpon E."/>
            <person name="Caballero R."/>
            <person name="Castro-Beiras A."/>
            <person name="Tamargo J."/>
        </authorList>
    </citation>
    <scope>VARIANT ARG-558</scope>
    <scope>VARIANTS BRGDA1 ASN-1690 AND ASP-1748</scope>
    <scope>CHARACTERIZATION OF VARIANTS BRGDA1 ASN-1690 AND ASP-1748</scope>
    <scope>FUNCTION</scope>
    <scope>SUBCELLULAR LOCATION</scope>
</reference>
<reference key="106">
    <citation type="journal article" date="2013" name="PLoS ONE">
        <title>Electrophysiological characteristics of a SCN5A voltage sensors mutation R1629Q associated with Brugada syndrome.</title>
        <authorList>
            <person name="Zeng Z."/>
            <person name="Zhou J."/>
            <person name="Hou Y."/>
            <person name="Liang X."/>
            <person name="Zhang Z."/>
            <person name="Xu X."/>
            <person name="Xie Q."/>
            <person name="Li W."/>
            <person name="Huang Z."/>
        </authorList>
    </citation>
    <scope>VARIANT BRGDA1 GLN-1629</scope>
    <scope>CHARACTERIZATION OF VARIANT BRGDA1 GLN-1629</scope>
    <scope>FUNCTION</scope>
</reference>
<reference key="107">
    <citation type="journal article" date="2015" name="Cell. Physiol. Biochem.">
        <title>De novo mutation in the SCN5A gene associated with brugada syndrome.</title>
        <authorList>
            <person name="Wang L."/>
            <person name="Meng X."/>
            <person name="Yuchi Z."/>
            <person name="Zhao Z."/>
            <person name="Xu D."/>
            <person name="Fedida D."/>
            <person name="Wang Z."/>
            <person name="Huang C."/>
        </authorList>
    </citation>
    <scope>VARIANT BRGDA1 GLN-812</scope>
    <scope>CHARACTERIZATION OF VARIANT BRGDA1 GLN-812</scope>
    <scope>FUNCTION</scope>
    <scope>SUBCELLULAR LOCATION</scope>
</reference>
<reference key="108">
    <citation type="journal article" date="2015" name="Proc. Natl. Acad. Sci. U.S.A.">
        <title>SCN5A variant that blocks fibroblast growth factor homologous factor regulation causes human arrhythmia.</title>
        <authorList>
            <person name="Musa H."/>
            <person name="Kline C.F."/>
            <person name="Sturm A.C."/>
            <person name="Murphy N."/>
            <person name="Adelman S."/>
            <person name="Wang C."/>
            <person name="Yan H."/>
            <person name="Johnson B.L."/>
            <person name="Csepe T.A."/>
            <person name="Kilic A."/>
            <person name="Higgins R.S."/>
            <person name="Janssen P.M."/>
            <person name="Fedorov V.V."/>
            <person name="Weiss R."/>
            <person name="Salazar C."/>
            <person name="Hund T.J."/>
            <person name="Pitt G.S."/>
            <person name="Mohler P.J."/>
        </authorList>
    </citation>
    <scope>VARIANT LQT3 ARG-1849</scope>
    <scope>CHARACTERIZATION OF VARIANT LQT3 ARG-1849</scope>
    <scope>FUNCTION</scope>
    <scope>INTERACTION WITH FGF12; FGF13 AND FGF14</scope>
</reference>
<reference key="109">
    <citation type="journal article" date="2016" name="Heart Rhythm">
        <title>SCN5A(K817E), a novel Brugada syndrome-associated mutation that alters the activation gating of NaV1.5 channel.</title>
        <authorList>
            <person name="Kinoshita K."/>
            <person name="Takahashi H."/>
            <person name="Hata Y."/>
            <person name="Nishide K."/>
            <person name="Kato M."/>
            <person name="Fujita H."/>
            <person name="Yoshida S."/>
            <person name="Murai K."/>
            <person name="Mizumaki K."/>
            <person name="Nishida K."/>
            <person name="Yamaguchi Y."/>
            <person name="Kano M."/>
            <person name="Tabata T."/>
            <person name="Nishida N."/>
        </authorList>
    </citation>
    <scope>VARIANT BRGDA1 GLU-817</scope>
    <scope>CHARACTERIZATION OF VARIANT BRGDA1 GLU-817</scope>
    <scope>FUNCTION</scope>
</reference>
<reference key="110">
    <citation type="journal article" date="2020" name="Front. Cardiovasc. Med.">
        <title>Compound heterozygous SCN5A mutations in severe sodium channelopathy with Brugada syndrome: a case report.</title>
        <authorList>
            <person name="Nijak A."/>
            <person name="Labro A.J."/>
            <person name="De Wilde H."/>
            <person name="Dewals W."/>
            <person name="Peigneur S."/>
            <person name="Tytgat J."/>
            <person name="Snyders D."/>
            <person name="Sieliwonczyk E."/>
            <person name="Simons E."/>
            <person name="Van Craenenbroeck E."/>
            <person name="Schepers D."/>
            <person name="Van Laer L."/>
            <person name="Saenen J."/>
            <person name="Loeys B."/>
            <person name="Alaerts M."/>
        </authorList>
    </citation>
    <scope>VARIANT BRGDA1 LEU-1571</scope>
    <scope>CHARACTERIZATION OF VARIANT BRGDA1 LEU-1571</scope>
</reference>
<keyword id="KW-0002">3D-structure</keyword>
<keyword id="KW-0025">Alternative splicing</keyword>
<keyword id="KW-1020">Atrial fibrillation</keyword>
<keyword id="KW-0992">Brugada syndrome</keyword>
<keyword id="KW-0112">Calmodulin-binding</keyword>
<keyword id="KW-0122">Cardiomyopathy</keyword>
<keyword id="KW-0965">Cell junction</keyword>
<keyword id="KW-1003">Cell membrane</keyword>
<keyword id="KW-0963">Cytoplasm</keyword>
<keyword id="KW-0225">Disease variant</keyword>
<keyword id="KW-1015">Disulfide bond</keyword>
<keyword id="KW-0325">Glycoprotein</keyword>
<keyword id="KW-0407">Ion channel</keyword>
<keyword id="KW-0406">Ion transport</keyword>
<keyword id="KW-0454">Long QT syndrome</keyword>
<keyword id="KW-0472">Membrane</keyword>
<keyword id="KW-0488">Methylation</keyword>
<keyword id="KW-0597">Phosphoprotein</keyword>
<keyword id="KW-1267">Proteomics identification</keyword>
<keyword id="KW-1185">Reference proteome</keyword>
<keyword id="KW-0677">Repeat</keyword>
<keyword id="KW-0915">Sodium</keyword>
<keyword id="KW-0894">Sodium channel</keyword>
<keyword id="KW-0739">Sodium transport</keyword>
<keyword id="KW-0812">Transmembrane</keyword>
<keyword id="KW-1133">Transmembrane helix</keyword>
<keyword id="KW-0813">Transport</keyword>
<keyword id="KW-0832">Ubl conjugation</keyword>
<keyword id="KW-0851">Voltage-gated channel</keyword>
<organism>
    <name type="scientific">Homo sapiens</name>
    <name type="common">Human</name>
    <dbReference type="NCBI Taxonomy" id="9606"/>
    <lineage>
        <taxon>Eukaryota</taxon>
        <taxon>Metazoa</taxon>
        <taxon>Chordata</taxon>
        <taxon>Craniata</taxon>
        <taxon>Vertebrata</taxon>
        <taxon>Euteleostomi</taxon>
        <taxon>Mammalia</taxon>
        <taxon>Eutheria</taxon>
        <taxon>Euarchontoglires</taxon>
        <taxon>Primates</taxon>
        <taxon>Haplorrhini</taxon>
        <taxon>Catarrhini</taxon>
        <taxon>Hominidae</taxon>
        <taxon>Homo</taxon>
    </lineage>
</organism>
<accession>Q14524</accession>
<accession>A5H1P8</accession>
<accession>A6N922</accession>
<accession>A6N923</accession>
<accession>B2RTU0</accession>
<accession>E7ET19</accession>
<accession>E9PEF3</accession>
<accession>E9PEK2</accession>
<accession>E9PFW7</accession>
<accession>Q59H93</accession>
<accession>Q75RX9</accession>
<accession>Q75RY0</accession>
<accession>Q86UR3</accession>
<accession>Q8IZC9</accession>
<accession>Q96J69</accession>
<dbReference type="EMBL" id="M77235">
    <property type="protein sequence ID" value="AAA58644.1"/>
    <property type="molecule type" value="mRNA"/>
</dbReference>
<dbReference type="EMBL" id="AY038064">
    <property type="protein sequence ID" value="AAK74065.1"/>
    <property type="molecule type" value="mRNA"/>
</dbReference>
<dbReference type="EMBL" id="AY148488">
    <property type="protein sequence ID" value="AAN61120.1"/>
    <property type="molecule type" value="mRNA"/>
</dbReference>
<dbReference type="EMBL" id="AF482988">
    <property type="protein sequence ID" value="AAO91669.1"/>
    <property type="molecule type" value="mRNA"/>
</dbReference>
<dbReference type="EMBL" id="AB158469">
    <property type="protein sequence ID" value="BAD12084.1"/>
    <property type="molecule type" value="mRNA"/>
</dbReference>
<dbReference type="EMBL" id="AB158470">
    <property type="protein sequence ID" value="BAD12085.1"/>
    <property type="molecule type" value="mRNA"/>
</dbReference>
<dbReference type="EMBL" id="EF629346">
    <property type="protein sequence ID" value="ABR15763.1"/>
    <property type="molecule type" value="mRNA"/>
</dbReference>
<dbReference type="EMBL" id="EF629347">
    <property type="protein sequence ID" value="ABR15764.1"/>
    <property type="molecule type" value="mRNA"/>
</dbReference>
<dbReference type="EMBL" id="DQ784809">
    <property type="protein sequence ID" value="ABQ01244.1"/>
    <property type="molecule type" value="Genomic_DNA"/>
</dbReference>
<dbReference type="EMBL" id="EF179185">
    <property type="protein sequence ID" value="ABN05288.1"/>
    <property type="molecule type" value="Genomic_DNA"/>
</dbReference>
<dbReference type="EMBL" id="AP006241">
    <property type="status" value="NOT_ANNOTATED_CDS"/>
    <property type="molecule type" value="Genomic_DNA"/>
</dbReference>
<dbReference type="EMBL" id="BC140813">
    <property type="protein sequence ID" value="AAI40814.1"/>
    <property type="molecule type" value="mRNA"/>
</dbReference>
<dbReference type="EMBL" id="BC144621">
    <property type="protein sequence ID" value="AAI44622.1"/>
    <property type="molecule type" value="mRNA"/>
</dbReference>
<dbReference type="EMBL" id="AB208866">
    <property type="protein sequence ID" value="BAD92103.1"/>
    <property type="molecule type" value="mRNA"/>
</dbReference>
<dbReference type="CCDS" id="CCDS46796.1">
    <molecule id="Q14524-1"/>
</dbReference>
<dbReference type="CCDS" id="CCDS46797.1">
    <molecule id="Q14524-2"/>
</dbReference>
<dbReference type="CCDS" id="CCDS46798.1">
    <molecule id="Q14524-6"/>
</dbReference>
<dbReference type="CCDS" id="CCDS46799.1">
    <molecule id="Q14524-4"/>
</dbReference>
<dbReference type="CCDS" id="CCDS54569.1">
    <molecule id="Q14524-5"/>
</dbReference>
<dbReference type="CCDS" id="CCDS54570.1">
    <molecule id="Q14524-3"/>
</dbReference>
<dbReference type="PIR" id="A38195">
    <property type="entry name" value="A38195"/>
</dbReference>
<dbReference type="RefSeq" id="NP_000326.2">
    <molecule id="Q14524-2"/>
    <property type="nucleotide sequence ID" value="NM_000335.4"/>
</dbReference>
<dbReference type="RefSeq" id="NP_001092874.1">
    <property type="nucleotide sequence ID" value="NM_001099404.1"/>
</dbReference>
<dbReference type="RefSeq" id="NP_001092875.1">
    <property type="nucleotide sequence ID" value="NM_001099405.1"/>
</dbReference>
<dbReference type="RefSeq" id="NP_001153632.1">
    <property type="nucleotide sequence ID" value="NM_001160160.1"/>
</dbReference>
<dbReference type="RefSeq" id="NP_001153633.1">
    <property type="nucleotide sequence ID" value="NM_001160161.1"/>
</dbReference>
<dbReference type="RefSeq" id="NP_932173.1">
    <molecule id="Q14524-1"/>
    <property type="nucleotide sequence ID" value="NM_198056.3"/>
</dbReference>
<dbReference type="PDB" id="2KBI">
    <property type="method" value="NMR"/>
    <property type="chains" value="A=1773-1865"/>
</dbReference>
<dbReference type="PDB" id="2L53">
    <property type="method" value="NMR"/>
    <property type="chains" value="B=1901-1927"/>
</dbReference>
<dbReference type="PDB" id="4DCK">
    <property type="method" value="X-ray"/>
    <property type="resolution" value="2.20 A"/>
    <property type="chains" value="A=1773-1940"/>
</dbReference>
<dbReference type="PDB" id="4DJC">
    <property type="method" value="X-ray"/>
    <property type="resolution" value="1.35 A"/>
    <property type="chains" value="B=1491-1522"/>
</dbReference>
<dbReference type="PDB" id="4JQ0">
    <property type="method" value="X-ray"/>
    <property type="resolution" value="3.84 A"/>
    <property type="chains" value="D=1773-1940"/>
</dbReference>
<dbReference type="PDB" id="4OVN">
    <property type="method" value="X-ray"/>
    <property type="resolution" value="2.80 A"/>
    <property type="chains" value="F/G/H/I/J=1773-1929"/>
</dbReference>
<dbReference type="PDB" id="5DBR">
    <property type="method" value="X-ray"/>
    <property type="resolution" value="2.25 A"/>
    <property type="chains" value="C=1483-1529"/>
</dbReference>
<dbReference type="PDB" id="6LQA">
    <property type="method" value="EM"/>
    <property type="resolution" value="3.30 A"/>
    <property type="chains" value="B=1-2016"/>
</dbReference>
<dbReference type="PDB" id="6MUD">
    <property type="method" value="X-ray"/>
    <property type="resolution" value="2.69 A"/>
    <property type="chains" value="B=1786-1922"/>
</dbReference>
<dbReference type="PDB" id="7DTC">
    <property type="method" value="EM"/>
    <property type="resolution" value="3.30 A"/>
    <property type="chains" value="A=1-2016"/>
</dbReference>
<dbReference type="PDB" id="7L83">
    <property type="method" value="NMR"/>
    <property type="chains" value="A=1597-1633"/>
</dbReference>
<dbReference type="PDB" id="8VYJ">
    <property type="method" value="EM"/>
    <property type="resolution" value="3.60 A"/>
    <property type="chains" value="A=1-2016"/>
</dbReference>
<dbReference type="PDB" id="8VYK">
    <property type="method" value="EM"/>
    <property type="resolution" value="3.90 A"/>
    <property type="chains" value="A=1-2016"/>
</dbReference>
<dbReference type="PDBsum" id="2KBI"/>
<dbReference type="PDBsum" id="2L53"/>
<dbReference type="PDBsum" id="4DCK"/>
<dbReference type="PDBsum" id="4DJC"/>
<dbReference type="PDBsum" id="4JQ0"/>
<dbReference type="PDBsum" id="4OVN"/>
<dbReference type="PDBsum" id="5DBR"/>
<dbReference type="PDBsum" id="6LQA"/>
<dbReference type="PDBsum" id="6MUD"/>
<dbReference type="PDBsum" id="7DTC"/>
<dbReference type="PDBsum" id="7L83"/>
<dbReference type="PDBsum" id="8VYJ"/>
<dbReference type="PDBsum" id="8VYK"/>
<dbReference type="BMRB" id="Q14524"/>
<dbReference type="EMDB" id="EMD-0942"/>
<dbReference type="EMDB" id="EMD-30850"/>
<dbReference type="EMDB" id="EMD-43662"/>
<dbReference type="EMDB" id="EMD-43663"/>
<dbReference type="SMR" id="Q14524"/>
<dbReference type="BioGRID" id="112236">
    <property type="interactions" value="27"/>
</dbReference>
<dbReference type="ComplexPortal" id="CPX-8669">
    <property type="entry name" value="Nav1.5 voltage-gated sodium channel complex, SCN1B-SCN2B variant"/>
</dbReference>
<dbReference type="ComplexPortal" id="CPX-8670">
    <property type="entry name" value="Nav1.5 voltage-gated sodium channel complex, SCN1B-SCN4B variant"/>
</dbReference>
<dbReference type="ComplexPortal" id="CPX-8671">
    <property type="entry name" value="Nav1.5 voltage-gated sodium channel complex, SCN2B-SCN3B variant"/>
</dbReference>
<dbReference type="ComplexPortal" id="CPX-8672">
    <property type="entry name" value="Nav1.5 voltage-gated sodium channel complex, SCN3B-SCN4B variant"/>
</dbReference>
<dbReference type="CORUM" id="Q14524"/>
<dbReference type="DIP" id="DIP-38416N"/>
<dbReference type="DIP" id="DIP-46144N"/>
<dbReference type="FunCoup" id="Q14524">
    <property type="interactions" value="465"/>
</dbReference>
<dbReference type="IntAct" id="Q14524">
    <property type="interactions" value="26"/>
</dbReference>
<dbReference type="MINT" id="Q14524"/>
<dbReference type="STRING" id="9606.ENSP00000328968"/>
<dbReference type="BindingDB" id="Q14524"/>
<dbReference type="ChEMBL" id="CHEMBL1980"/>
<dbReference type="DrugBank" id="DB17602">
    <property type="generic name" value="Acecainide"/>
</dbReference>
<dbReference type="DrugBank" id="DB01426">
    <property type="generic name" value="Ajmaline"/>
</dbReference>
<dbReference type="DrugBank" id="DB09088">
    <property type="generic name" value="Amylocaine"/>
</dbReference>
<dbReference type="DrugBank" id="DB01429">
    <property type="generic name" value="Aprindine"/>
</dbReference>
<dbReference type="DrugBank" id="DB09009">
    <property type="generic name" value="Articaine"/>
</dbReference>
<dbReference type="DrugBank" id="DB00868">
    <property type="generic name" value="Benzonatate"/>
</dbReference>
<dbReference type="DrugBank" id="DB13746">
    <property type="generic name" value="Bioallethrin"/>
</dbReference>
<dbReference type="DrugBank" id="DB05541">
    <property type="generic name" value="Brivaracetam"/>
</dbReference>
<dbReference type="DrugBank" id="DB00564">
    <property type="generic name" value="Carbamazepine"/>
</dbReference>
<dbReference type="DrugBank" id="DB06119">
    <property type="generic name" value="Cenobamate"/>
</dbReference>
<dbReference type="DrugBank" id="DB01161">
    <property type="generic name" value="Chloroprocaine"/>
</dbReference>
<dbReference type="DrugBank" id="DB00527">
    <property type="generic name" value="Cinchocaine"/>
</dbReference>
<dbReference type="DrugBank" id="DB00907">
    <property type="generic name" value="Cocaine"/>
</dbReference>
<dbReference type="DrugBank" id="DB13269">
    <property type="generic name" value="Dichlorobenzyl alcohol"/>
</dbReference>
<dbReference type="DrugBank" id="DB00280">
    <property type="generic name" value="Disopyramide"/>
</dbReference>
<dbReference type="DrugBank" id="DB04855">
    <property type="generic name" value="Dronedarone"/>
</dbReference>
<dbReference type="DrugBank" id="DB00645">
    <property type="generic name" value="Dyclonine"/>
</dbReference>
<dbReference type="DrugBank" id="DB01228">
    <property type="generic name" value="Encainide"/>
</dbReference>
<dbReference type="DrugBank" id="DB00754">
    <property type="generic name" value="Ethotoin"/>
</dbReference>
<dbReference type="DrugBank" id="DB13961">
    <property type="generic name" value="Fish oil"/>
</dbReference>
<dbReference type="DrugBank" id="DB01195">
    <property type="generic name" value="Flecainide"/>
</dbReference>
<dbReference type="DrugBank" id="DB01320">
    <property type="generic name" value="Fosphenytoin"/>
</dbReference>
<dbReference type="DrugBank" id="DB00473">
    <property type="generic name" value="Hexylcaine"/>
</dbReference>
<dbReference type="DrugBank" id="DB00192">
    <property type="generic name" value="Indecainide"/>
</dbReference>
<dbReference type="DrugBank" id="DB11633">
    <property type="generic name" value="Isavuconazole"/>
</dbReference>
<dbReference type="DrugBank" id="DB00555">
    <property type="generic name" value="Lamotrigine"/>
</dbReference>
<dbReference type="DrugBank" id="DB00281">
    <property type="generic name" value="Lidocaine"/>
</dbReference>
<dbReference type="DrugBank" id="DB14065">
    <property type="generic name" value="Lomerizine"/>
</dbReference>
<dbReference type="DrugBank" id="DB00532">
    <property type="generic name" value="Mephenytoin"/>
</dbReference>
<dbReference type="DrugBank" id="DB00379">
    <property type="generic name" value="Mexiletine"/>
</dbReference>
<dbReference type="DrugBank" id="DB00680">
    <property type="generic name" value="Moricizine"/>
</dbReference>
<dbReference type="DrugBank" id="DB00776">
    <property type="generic name" value="Oxcarbazepine"/>
</dbReference>
<dbReference type="DrugBank" id="DB11186">
    <property type="generic name" value="Pentoxyverine"/>
</dbReference>
<dbReference type="DrugBank" id="DB00252">
    <property type="generic name" value="Phenytoin"/>
</dbReference>
<dbReference type="DrugBank" id="DB09345">
    <property type="generic name" value="Pramocaine"/>
</dbReference>
<dbReference type="DrugBank" id="DB00750">
    <property type="generic name" value="Prilocaine"/>
</dbReference>
<dbReference type="DrugBank" id="DB01035">
    <property type="generic name" value="Procainamide"/>
</dbReference>
<dbReference type="DrugBank" id="DB01069">
    <property type="generic name" value="Promethazine"/>
</dbReference>
<dbReference type="DrugBank" id="DB01182">
    <property type="generic name" value="Propafenone"/>
</dbReference>
<dbReference type="DrugBank" id="DB09342">
    <property type="generic name" value="Propoxycaine"/>
</dbReference>
<dbReference type="DrugBank" id="DB00908">
    <property type="generic name" value="Quinidine"/>
</dbReference>
<dbReference type="DrugBank" id="DB01346">
    <property type="generic name" value="Quinidine barbiturate"/>
</dbReference>
<dbReference type="DrugBank" id="DB00243">
    <property type="generic name" value="Ranolazine"/>
</dbReference>
<dbReference type="DrugBank" id="DB00740">
    <property type="generic name" value="Riluzole"/>
</dbReference>
<dbReference type="DrugBank" id="DB09085">
    <property type="generic name" value="Tetracaine"/>
</dbReference>
<dbReference type="DrugBank" id="DB05232">
    <property type="generic name" value="Tetrodotoxin"/>
</dbReference>
<dbReference type="DrugBank" id="DB01056">
    <property type="generic name" value="Tocainide"/>
</dbReference>
<dbReference type="DrugBank" id="DB00273">
    <property type="generic name" value="Topiramate"/>
</dbReference>
<dbReference type="DrugBank" id="DB00313">
    <property type="generic name" value="Valproic acid"/>
</dbReference>
<dbReference type="DrugBank" id="DB06217">
    <property type="generic name" value="Vernakalant"/>
</dbReference>
<dbReference type="DrugBank" id="DB00909">
    <property type="generic name" value="Zonisamide"/>
</dbReference>
<dbReference type="DrugCentral" id="Q14524"/>
<dbReference type="GuidetoPHARMACOLOGY" id="582"/>
<dbReference type="TCDB" id="1.A.1.10.3">
    <property type="family name" value="the voltage-gated ion channel (vic) superfamily"/>
</dbReference>
<dbReference type="GlyCosmos" id="Q14524">
    <property type="glycosylation" value="15 sites, 1 glycan"/>
</dbReference>
<dbReference type="GlyGen" id="Q14524">
    <property type="glycosylation" value="18 sites, 2 N-linked glycans (2 sites), 1 O-linked glycan (2 sites)"/>
</dbReference>
<dbReference type="iPTMnet" id="Q14524"/>
<dbReference type="PhosphoSitePlus" id="Q14524"/>
<dbReference type="SwissPalm" id="Q14524"/>
<dbReference type="BioMuta" id="SCN5A"/>
<dbReference type="DMDM" id="215273881"/>
<dbReference type="MassIVE" id="Q14524"/>
<dbReference type="PaxDb" id="9606-ENSP00000410257"/>
<dbReference type="PeptideAtlas" id="Q14524"/>
<dbReference type="ProteomicsDB" id="18105"/>
<dbReference type="ProteomicsDB" id="60021">
    <molecule id="Q14524-1"/>
</dbReference>
<dbReference type="ProteomicsDB" id="60022">
    <molecule id="Q14524-2"/>
</dbReference>
<dbReference type="ProteomicsDB" id="60023">
    <molecule id="Q14524-3"/>
</dbReference>
<dbReference type="ProteomicsDB" id="60024">
    <molecule id="Q14524-4"/>
</dbReference>
<dbReference type="ProteomicsDB" id="60025">
    <molecule id="Q14524-5"/>
</dbReference>
<dbReference type="ProteomicsDB" id="60026">
    <molecule id="Q14524-6"/>
</dbReference>
<dbReference type="ABCD" id="Q14524">
    <property type="antibodies" value="4 sequenced antibodies"/>
</dbReference>
<dbReference type="Antibodypedia" id="6411">
    <property type="antibodies" value="321 antibodies from 33 providers"/>
</dbReference>
<dbReference type="DNASU" id="6331"/>
<dbReference type="Ensembl" id="ENST00000327956.7">
    <molecule id="Q14524-2"/>
    <property type="protein sequence ID" value="ENSP00000333674.7"/>
    <property type="gene ID" value="ENSG00000183873.20"/>
</dbReference>
<dbReference type="Ensembl" id="ENST00000333535.9">
    <molecule id="Q14524-1"/>
    <property type="protein sequence ID" value="ENSP00000328968.4"/>
    <property type="gene ID" value="ENSG00000183873.20"/>
</dbReference>
<dbReference type="Ensembl" id="ENST00000423572.7">
    <molecule id="Q14524-2"/>
    <property type="protein sequence ID" value="ENSP00000398266.2"/>
    <property type="gene ID" value="ENSG00000183873.20"/>
</dbReference>
<dbReference type="GeneID" id="6331"/>
<dbReference type="KEGG" id="hsa:6331"/>
<dbReference type="MANE-Select" id="ENST00000423572.7">
    <molecule id="Q14524-2"/>
    <property type="protein sequence ID" value="ENSP00000398266.2"/>
    <property type="RefSeq nucleotide sequence ID" value="NM_000335.5"/>
    <property type="RefSeq protein sequence ID" value="NP_000326.2"/>
</dbReference>
<dbReference type="UCSC" id="uc062ihe.1">
    <molecule id="Q14524-1"/>
    <property type="organism name" value="human"/>
</dbReference>
<dbReference type="AGR" id="HGNC:10593"/>
<dbReference type="CTD" id="6331"/>
<dbReference type="DisGeNET" id="6331"/>
<dbReference type="GeneCards" id="SCN5A"/>
<dbReference type="GeneReviews" id="SCN5A"/>
<dbReference type="HGNC" id="HGNC:10593">
    <property type="gene designation" value="SCN5A"/>
</dbReference>
<dbReference type="HPA" id="ENSG00000183873">
    <property type="expression patterns" value="Tissue enriched (heart)"/>
</dbReference>
<dbReference type="MalaCards" id="SCN5A"/>
<dbReference type="MIM" id="108770">
    <property type="type" value="phenotype"/>
</dbReference>
<dbReference type="MIM" id="113900">
    <property type="type" value="phenotype"/>
</dbReference>
<dbReference type="MIM" id="272120">
    <property type="type" value="phenotype"/>
</dbReference>
<dbReference type="MIM" id="600163">
    <property type="type" value="gene"/>
</dbReference>
<dbReference type="MIM" id="601144">
    <property type="type" value="phenotype"/>
</dbReference>
<dbReference type="MIM" id="601154">
    <property type="type" value="phenotype"/>
</dbReference>
<dbReference type="MIM" id="603829">
    <property type="type" value="phenotype"/>
</dbReference>
<dbReference type="MIM" id="603830">
    <property type="type" value="phenotype"/>
</dbReference>
<dbReference type="MIM" id="608567">
    <property type="type" value="phenotype"/>
</dbReference>
<dbReference type="MIM" id="614022">
    <property type="type" value="phenotype"/>
</dbReference>
<dbReference type="neXtProt" id="NX_Q14524"/>
<dbReference type="OpenTargets" id="ENSG00000183873"/>
<dbReference type="Orphanet" id="1344">
    <property type="disease" value="Atrial standstill"/>
</dbReference>
<dbReference type="Orphanet" id="130">
    <property type="disease" value="Brugada syndrome"/>
</dbReference>
<dbReference type="Orphanet" id="334">
    <property type="disease" value="Familial atrial fibrillation"/>
</dbReference>
<dbReference type="Orphanet" id="154">
    <property type="disease" value="Familial isolated dilated cardiomyopathy"/>
</dbReference>
<dbReference type="Orphanet" id="871">
    <property type="disease" value="Familial progressive cardiac conduction defect"/>
</dbReference>
<dbReference type="Orphanet" id="166282">
    <property type="disease" value="Familial sick sinus syndrome"/>
</dbReference>
<dbReference type="Orphanet" id="228140">
    <property type="disease" value="Idiopathic ventricular fibrillation, non Brugada type"/>
</dbReference>
<dbReference type="Orphanet" id="101016">
    <property type="disease" value="Romano-Ward syndrome"/>
</dbReference>
<dbReference type="PharmGKB" id="PA304"/>
<dbReference type="VEuPathDB" id="HostDB:ENSG00000183873"/>
<dbReference type="eggNOG" id="KOG2301">
    <property type="taxonomic scope" value="Eukaryota"/>
</dbReference>
<dbReference type="GeneTree" id="ENSGT00940000161691"/>
<dbReference type="InParanoid" id="Q14524"/>
<dbReference type="OrthoDB" id="2984333at2759"/>
<dbReference type="PAN-GO" id="Q14524">
    <property type="GO annotations" value="8 GO annotations based on evolutionary models"/>
</dbReference>
<dbReference type="PhylomeDB" id="Q14524"/>
<dbReference type="PathwayCommons" id="Q14524"/>
<dbReference type="Reactome" id="R-HSA-445095">
    <property type="pathway name" value="Interaction between L1 and Ankyrins"/>
</dbReference>
<dbReference type="Reactome" id="R-HSA-5576892">
    <property type="pathway name" value="Phase 0 - rapid depolarisation"/>
</dbReference>
<dbReference type="SignaLink" id="Q14524"/>
<dbReference type="SIGNOR" id="Q14524"/>
<dbReference type="BioGRID-ORCS" id="6331">
    <property type="hits" value="16 hits in 1157 CRISPR screens"/>
</dbReference>
<dbReference type="ChiTaRS" id="SCN5A">
    <property type="organism name" value="human"/>
</dbReference>
<dbReference type="EvolutionaryTrace" id="Q14524"/>
<dbReference type="GeneWiki" id="Nav1.5"/>
<dbReference type="GenomeRNAi" id="6331"/>
<dbReference type="Pharos" id="Q14524">
    <property type="development level" value="Tclin"/>
</dbReference>
<dbReference type="PRO" id="PR:Q14524"/>
<dbReference type="Proteomes" id="UP000005640">
    <property type="component" value="Chromosome 3"/>
</dbReference>
<dbReference type="RNAct" id="Q14524">
    <property type="molecule type" value="protein"/>
</dbReference>
<dbReference type="Bgee" id="ENSG00000183873">
    <property type="expression patterns" value="Expressed in apex of heart and 112 other cell types or tissues"/>
</dbReference>
<dbReference type="ExpressionAtlas" id="Q14524">
    <property type="expression patterns" value="baseline and differential"/>
</dbReference>
<dbReference type="GO" id="GO:0005901">
    <property type="term" value="C:caveola"/>
    <property type="evidence" value="ECO:0000314"/>
    <property type="project" value="BHF-UCL"/>
</dbReference>
<dbReference type="GO" id="GO:0009986">
    <property type="term" value="C:cell surface"/>
    <property type="evidence" value="ECO:0000314"/>
    <property type="project" value="UniProtKB"/>
</dbReference>
<dbReference type="GO" id="GO:0005783">
    <property type="term" value="C:endoplasmic reticulum"/>
    <property type="evidence" value="ECO:0000314"/>
    <property type="project" value="BHF-UCL"/>
</dbReference>
<dbReference type="GO" id="GO:0014704">
    <property type="term" value="C:intercalated disc"/>
    <property type="evidence" value="ECO:0000314"/>
    <property type="project" value="BHF-UCL"/>
</dbReference>
<dbReference type="GO" id="GO:0016328">
    <property type="term" value="C:lateral plasma membrane"/>
    <property type="evidence" value="ECO:0000304"/>
    <property type="project" value="BHF-UCL"/>
</dbReference>
<dbReference type="GO" id="GO:0016020">
    <property type="term" value="C:membrane"/>
    <property type="evidence" value="ECO:0000314"/>
    <property type="project" value="UniProtKB"/>
</dbReference>
<dbReference type="GO" id="GO:0005730">
    <property type="term" value="C:nucleolus"/>
    <property type="evidence" value="ECO:0000314"/>
    <property type="project" value="HPA"/>
</dbReference>
<dbReference type="GO" id="GO:0005654">
    <property type="term" value="C:nucleoplasm"/>
    <property type="evidence" value="ECO:0000314"/>
    <property type="project" value="HPA"/>
</dbReference>
<dbReference type="GO" id="GO:0048471">
    <property type="term" value="C:perinuclear region of cytoplasm"/>
    <property type="evidence" value="ECO:0007669"/>
    <property type="project" value="UniProtKB-SubCell"/>
</dbReference>
<dbReference type="GO" id="GO:0005886">
    <property type="term" value="C:plasma membrane"/>
    <property type="evidence" value="ECO:0000314"/>
    <property type="project" value="BHF-UCL"/>
</dbReference>
<dbReference type="GO" id="GO:0042383">
    <property type="term" value="C:sarcolemma"/>
    <property type="evidence" value="ECO:0000314"/>
    <property type="project" value="BHF-UCL"/>
</dbReference>
<dbReference type="GO" id="GO:0030315">
    <property type="term" value="C:T-tubule"/>
    <property type="evidence" value="ECO:0000314"/>
    <property type="project" value="BHF-UCL"/>
</dbReference>
<dbReference type="GO" id="GO:0001518">
    <property type="term" value="C:voltage-gated sodium channel complex"/>
    <property type="evidence" value="ECO:0000314"/>
    <property type="project" value="UniProtKB"/>
</dbReference>
<dbReference type="GO" id="GO:0030018">
    <property type="term" value="C:Z disc"/>
    <property type="evidence" value="ECO:0000314"/>
    <property type="project" value="UniProtKB"/>
</dbReference>
<dbReference type="GO" id="GO:0030506">
    <property type="term" value="F:ankyrin binding"/>
    <property type="evidence" value="ECO:0000353"/>
    <property type="project" value="BHF-UCL"/>
</dbReference>
<dbReference type="GO" id="GO:0005516">
    <property type="term" value="F:calmodulin binding"/>
    <property type="evidence" value="ECO:0000353"/>
    <property type="project" value="BHF-UCL"/>
</dbReference>
<dbReference type="GO" id="GO:0019899">
    <property type="term" value="F:enzyme binding"/>
    <property type="evidence" value="ECO:0000353"/>
    <property type="project" value="BHF-UCL"/>
</dbReference>
<dbReference type="GO" id="GO:0017134">
    <property type="term" value="F:fibroblast growth factor binding"/>
    <property type="evidence" value="ECO:0000353"/>
    <property type="project" value="BHF-UCL"/>
</dbReference>
<dbReference type="GO" id="GO:0050998">
    <property type="term" value="F:nitric-oxide synthase binding"/>
    <property type="evidence" value="ECO:0000353"/>
    <property type="project" value="BHF-UCL"/>
</dbReference>
<dbReference type="GO" id="GO:0019904">
    <property type="term" value="F:protein domain specific binding"/>
    <property type="evidence" value="ECO:0000353"/>
    <property type="project" value="UniProtKB"/>
</dbReference>
<dbReference type="GO" id="GO:0019901">
    <property type="term" value="F:protein kinase binding"/>
    <property type="evidence" value="ECO:0000353"/>
    <property type="project" value="BHF-UCL"/>
</dbReference>
<dbReference type="GO" id="GO:0097110">
    <property type="term" value="F:scaffold protein binding"/>
    <property type="evidence" value="ECO:0000353"/>
    <property type="project" value="BHF-UCL"/>
</dbReference>
<dbReference type="GO" id="GO:0044325">
    <property type="term" value="F:transmembrane transporter binding"/>
    <property type="evidence" value="ECO:0000353"/>
    <property type="project" value="BHF-UCL"/>
</dbReference>
<dbReference type="GO" id="GO:0031625">
    <property type="term" value="F:ubiquitin protein ligase binding"/>
    <property type="evidence" value="ECO:0000353"/>
    <property type="project" value="BHF-UCL"/>
</dbReference>
<dbReference type="GO" id="GO:0005248">
    <property type="term" value="F:voltage-gated sodium channel activity"/>
    <property type="evidence" value="ECO:0000314"/>
    <property type="project" value="UniProtKB"/>
</dbReference>
<dbReference type="GO" id="GO:0086060">
    <property type="term" value="F:voltage-gated sodium channel activity involved in AV node cell action potential"/>
    <property type="evidence" value="ECO:0000315"/>
    <property type="project" value="BHF-UCL"/>
</dbReference>
<dbReference type="GO" id="GO:0086061">
    <property type="term" value="F:voltage-gated sodium channel activity involved in bundle of His cell action potential"/>
    <property type="evidence" value="ECO:0000315"/>
    <property type="project" value="BHF-UCL"/>
</dbReference>
<dbReference type="GO" id="GO:0086006">
    <property type="term" value="F:voltage-gated sodium channel activity involved in cardiac muscle cell action potential"/>
    <property type="evidence" value="ECO:0000314"/>
    <property type="project" value="BHF-UCL"/>
</dbReference>
<dbReference type="GO" id="GO:0086062">
    <property type="term" value="F:voltage-gated sodium channel activity involved in Purkinje myocyte action potential"/>
    <property type="evidence" value="ECO:0000315"/>
    <property type="project" value="BHF-UCL"/>
</dbReference>
<dbReference type="GO" id="GO:0086063">
    <property type="term" value="F:voltage-gated sodium channel activity involved in SA node cell action potential"/>
    <property type="evidence" value="ECO:0000315"/>
    <property type="project" value="BHF-UCL"/>
</dbReference>
<dbReference type="GO" id="GO:0086014">
    <property type="term" value="P:atrial cardiac muscle cell action potential"/>
    <property type="evidence" value="ECO:0000315"/>
    <property type="project" value="BHF-UCL"/>
</dbReference>
<dbReference type="GO" id="GO:0086016">
    <property type="term" value="P:AV node cell action potential"/>
    <property type="evidence" value="ECO:0000315"/>
    <property type="project" value="BHF-UCL"/>
</dbReference>
<dbReference type="GO" id="GO:0086067">
    <property type="term" value="P:AV node cell to bundle of His cell communication"/>
    <property type="evidence" value="ECO:0000315"/>
    <property type="project" value="BHF-UCL"/>
</dbReference>
<dbReference type="GO" id="GO:0003360">
    <property type="term" value="P:brainstem development"/>
    <property type="evidence" value="ECO:0000250"/>
    <property type="project" value="BHF-UCL"/>
</dbReference>
<dbReference type="GO" id="GO:0086043">
    <property type="term" value="P:bundle of His cell action potential"/>
    <property type="evidence" value="ECO:0000315"/>
    <property type="project" value="BHF-UCL"/>
</dbReference>
<dbReference type="GO" id="GO:0003161">
    <property type="term" value="P:cardiac conduction system development"/>
    <property type="evidence" value="ECO:0000303"/>
    <property type="project" value="BHF-UCL"/>
</dbReference>
<dbReference type="GO" id="GO:0086002">
    <property type="term" value="P:cardiac muscle cell action potential involved in contraction"/>
    <property type="evidence" value="ECO:0000315"/>
    <property type="project" value="BHF-UCL"/>
</dbReference>
<dbReference type="GO" id="GO:0060048">
    <property type="term" value="P:cardiac muscle contraction"/>
    <property type="evidence" value="ECO:0000315"/>
    <property type="project" value="BHF-UCL"/>
</dbReference>
<dbReference type="GO" id="GO:0003231">
    <property type="term" value="P:cardiac ventricle development"/>
    <property type="evidence" value="ECO:0000250"/>
    <property type="project" value="BHF-UCL"/>
</dbReference>
<dbReference type="GO" id="GO:0071277">
    <property type="term" value="P:cellular response to calcium ion"/>
    <property type="evidence" value="ECO:0000314"/>
    <property type="project" value="UniProtKB"/>
</dbReference>
<dbReference type="GO" id="GO:0021549">
    <property type="term" value="P:cerebellum development"/>
    <property type="evidence" value="ECO:0000250"/>
    <property type="project" value="BHF-UCL"/>
</dbReference>
<dbReference type="GO" id="GO:0051899">
    <property type="term" value="P:membrane depolarization"/>
    <property type="evidence" value="ECO:0000314"/>
    <property type="project" value="BHF-UCL"/>
</dbReference>
<dbReference type="GO" id="GO:0086010">
    <property type="term" value="P:membrane depolarization during action potential"/>
    <property type="evidence" value="ECO:0000314"/>
    <property type="project" value="BHF-UCL"/>
</dbReference>
<dbReference type="GO" id="GO:0098912">
    <property type="term" value="P:membrane depolarization during atrial cardiac muscle cell action potential"/>
    <property type="evidence" value="ECO:0000315"/>
    <property type="project" value="BHF-UCL"/>
</dbReference>
<dbReference type="GO" id="GO:0086045">
    <property type="term" value="P:membrane depolarization during AV node cell action potential"/>
    <property type="evidence" value="ECO:0000315"/>
    <property type="project" value="BHF-UCL"/>
</dbReference>
<dbReference type="GO" id="GO:0086048">
    <property type="term" value="P:membrane depolarization during bundle of His cell action potential"/>
    <property type="evidence" value="ECO:0000315"/>
    <property type="project" value="BHF-UCL"/>
</dbReference>
<dbReference type="GO" id="GO:0086012">
    <property type="term" value="P:membrane depolarization during cardiac muscle cell action potential"/>
    <property type="evidence" value="ECO:0000315"/>
    <property type="project" value="BHF-UCL"/>
</dbReference>
<dbReference type="GO" id="GO:0086047">
    <property type="term" value="P:membrane depolarization during Purkinje myocyte cell action potential"/>
    <property type="evidence" value="ECO:0000315"/>
    <property type="project" value="BHF-UCL"/>
</dbReference>
<dbReference type="GO" id="GO:0086046">
    <property type="term" value="P:membrane depolarization during SA node cell action potential"/>
    <property type="evidence" value="ECO:0000315"/>
    <property type="project" value="BHF-UCL"/>
</dbReference>
<dbReference type="GO" id="GO:0042475">
    <property type="term" value="P:odontogenesis of dentin-containing tooth"/>
    <property type="evidence" value="ECO:0000250"/>
    <property type="project" value="BHF-UCL"/>
</dbReference>
<dbReference type="GO" id="GO:0045760">
    <property type="term" value="P:positive regulation of action potential"/>
    <property type="evidence" value="ECO:0000250"/>
    <property type="project" value="BHF-UCL"/>
</dbReference>
<dbReference type="GO" id="GO:0050679">
    <property type="term" value="P:positive regulation of epithelial cell proliferation"/>
    <property type="evidence" value="ECO:0000250"/>
    <property type="project" value="BHF-UCL"/>
</dbReference>
<dbReference type="GO" id="GO:0010765">
    <property type="term" value="P:positive regulation of sodium ion transport"/>
    <property type="evidence" value="ECO:0000314"/>
    <property type="project" value="BHF-UCL"/>
</dbReference>
<dbReference type="GO" id="GO:0060371">
    <property type="term" value="P:regulation of atrial cardiac muscle cell membrane depolarization"/>
    <property type="evidence" value="ECO:0000315"/>
    <property type="project" value="BHF-UCL"/>
</dbReference>
<dbReference type="GO" id="GO:0060372">
    <property type="term" value="P:regulation of atrial cardiac muscle cell membrane repolarization"/>
    <property type="evidence" value="ECO:0000315"/>
    <property type="project" value="BHF-UCL"/>
</dbReference>
<dbReference type="GO" id="GO:0086004">
    <property type="term" value="P:regulation of cardiac muscle cell contraction"/>
    <property type="evidence" value="ECO:0000315"/>
    <property type="project" value="BHF-UCL"/>
</dbReference>
<dbReference type="GO" id="GO:0002027">
    <property type="term" value="P:regulation of heart rate"/>
    <property type="evidence" value="ECO:0000315"/>
    <property type="project" value="UniProtKB"/>
</dbReference>
<dbReference type="GO" id="GO:0086091">
    <property type="term" value="P:regulation of heart rate by cardiac conduction"/>
    <property type="evidence" value="ECO:0000315"/>
    <property type="project" value="BHF-UCL"/>
</dbReference>
<dbReference type="GO" id="GO:1902305">
    <property type="term" value="P:regulation of sodium ion transmembrane transport"/>
    <property type="evidence" value="ECO:0000314"/>
    <property type="project" value="BHF-UCL"/>
</dbReference>
<dbReference type="GO" id="GO:0060373">
    <property type="term" value="P:regulation of ventricular cardiac muscle cell membrane depolarization"/>
    <property type="evidence" value="ECO:0000315"/>
    <property type="project" value="BHF-UCL"/>
</dbReference>
<dbReference type="GO" id="GO:0060307">
    <property type="term" value="P:regulation of ventricular cardiac muscle cell membrane repolarization"/>
    <property type="evidence" value="ECO:0000315"/>
    <property type="project" value="BHF-UCL"/>
</dbReference>
<dbReference type="GO" id="GO:0014894">
    <property type="term" value="P:response to denervation involved in regulation of muscle adaptation"/>
    <property type="evidence" value="ECO:0000250"/>
    <property type="project" value="BHF-UCL"/>
</dbReference>
<dbReference type="GO" id="GO:0086015">
    <property type="term" value="P:SA node cell action potential"/>
    <property type="evidence" value="ECO:0000315"/>
    <property type="project" value="BHF-UCL"/>
</dbReference>
<dbReference type="GO" id="GO:0035725">
    <property type="term" value="P:sodium ion transmembrane transport"/>
    <property type="evidence" value="ECO:0000314"/>
    <property type="project" value="UniProtKB"/>
</dbReference>
<dbReference type="GO" id="GO:0006814">
    <property type="term" value="P:sodium ion transport"/>
    <property type="evidence" value="ECO:0000314"/>
    <property type="project" value="UniProtKB"/>
</dbReference>
<dbReference type="GO" id="GO:0021537">
    <property type="term" value="P:telencephalon development"/>
    <property type="evidence" value="ECO:0000250"/>
    <property type="project" value="BHF-UCL"/>
</dbReference>
<dbReference type="GO" id="GO:0086005">
    <property type="term" value="P:ventricular cardiac muscle cell action potential"/>
    <property type="evidence" value="ECO:0000315"/>
    <property type="project" value="BHF-UCL"/>
</dbReference>
<dbReference type="CDD" id="cd13433">
    <property type="entry name" value="Na_channel_gate"/>
    <property type="match status" value="1"/>
</dbReference>
<dbReference type="FunFam" id="1.10.238.10:FF:000002">
    <property type="entry name" value="Sodium channel protein"/>
    <property type="match status" value="1"/>
</dbReference>
<dbReference type="FunFam" id="1.10.287.70:FF:000001">
    <property type="entry name" value="Sodium channel protein"/>
    <property type="match status" value="1"/>
</dbReference>
<dbReference type="FunFam" id="1.20.120.350:FF:000002">
    <property type="entry name" value="Sodium channel protein"/>
    <property type="match status" value="1"/>
</dbReference>
<dbReference type="FunFam" id="1.20.120.350:FF:000004">
    <property type="entry name" value="Sodium channel protein"/>
    <property type="match status" value="1"/>
</dbReference>
<dbReference type="FunFam" id="1.20.120.350:FF:000005">
    <property type="entry name" value="Sodium channel protein"/>
    <property type="match status" value="1"/>
</dbReference>
<dbReference type="FunFam" id="1.20.5.1190:FF:000001">
    <property type="entry name" value="Sodium channel protein"/>
    <property type="match status" value="1"/>
</dbReference>
<dbReference type="FunFam" id="1.10.287.70:FF:000562">
    <property type="entry name" value="Uncharacterized protein"/>
    <property type="match status" value="1"/>
</dbReference>
<dbReference type="FunFam" id="1.20.120.350:FF:000003">
    <property type="entry name" value="Voltage-dependent sodium channel"/>
    <property type="match status" value="1"/>
</dbReference>
<dbReference type="FunFam" id="1.10.287.70:FF:000049">
    <property type="entry name" value="Voltage-dependent sodium channel 2"/>
    <property type="match status" value="1"/>
</dbReference>
<dbReference type="Gene3D" id="1.10.287.70">
    <property type="match status" value="4"/>
</dbReference>
<dbReference type="Gene3D" id="1.10.238.10">
    <property type="entry name" value="EF-hand"/>
    <property type="match status" value="1"/>
</dbReference>
<dbReference type="Gene3D" id="1.20.5.1190">
    <property type="entry name" value="iswi atpase"/>
    <property type="match status" value="1"/>
</dbReference>
<dbReference type="Gene3D" id="1.20.120.350">
    <property type="entry name" value="Voltage-gated potassium channels. Chain C"/>
    <property type="match status" value="4"/>
</dbReference>
<dbReference type="InterPro" id="IPR005821">
    <property type="entry name" value="Ion_trans_dom"/>
</dbReference>
<dbReference type="InterPro" id="IPR008053">
    <property type="entry name" value="Na_channel_a5su"/>
</dbReference>
<dbReference type="InterPro" id="IPR001696">
    <property type="entry name" value="Na_channel_asu"/>
</dbReference>
<dbReference type="InterPro" id="IPR044564">
    <property type="entry name" value="Na_chnl_inactivation_gate"/>
</dbReference>
<dbReference type="InterPro" id="IPR010526">
    <property type="entry name" value="Na_trans_assoc_dom"/>
</dbReference>
<dbReference type="InterPro" id="IPR024583">
    <property type="entry name" value="Na_trans_cytopl"/>
</dbReference>
<dbReference type="InterPro" id="IPR043203">
    <property type="entry name" value="VGCC_Ca_Na"/>
</dbReference>
<dbReference type="InterPro" id="IPR027359">
    <property type="entry name" value="Volt_channel_dom_sf"/>
</dbReference>
<dbReference type="PANTHER" id="PTHR10037:SF206">
    <property type="entry name" value="SODIUM CHANNEL PROTEIN TYPE 5 SUBUNIT ALPHA"/>
    <property type="match status" value="1"/>
</dbReference>
<dbReference type="PANTHER" id="PTHR10037">
    <property type="entry name" value="VOLTAGE-GATED CATION CHANNEL CALCIUM AND SODIUM"/>
    <property type="match status" value="1"/>
</dbReference>
<dbReference type="Pfam" id="PF00520">
    <property type="entry name" value="Ion_trans"/>
    <property type="match status" value="4"/>
</dbReference>
<dbReference type="Pfam" id="PF24609">
    <property type="entry name" value="IQ_SCN5A_C"/>
    <property type="match status" value="1"/>
</dbReference>
<dbReference type="Pfam" id="PF06512">
    <property type="entry name" value="Na_trans_assoc"/>
    <property type="match status" value="1"/>
</dbReference>
<dbReference type="Pfam" id="PF11933">
    <property type="entry name" value="Na_trans_cytopl"/>
    <property type="match status" value="1"/>
</dbReference>
<dbReference type="PRINTS" id="PR00170">
    <property type="entry name" value="NACHANNEL"/>
</dbReference>
<dbReference type="PRINTS" id="PR01666">
    <property type="entry name" value="NACHANNEL5"/>
</dbReference>
<dbReference type="SUPFAM" id="SSF81324">
    <property type="entry name" value="Voltage-gated potassium channels"/>
    <property type="match status" value="4"/>
</dbReference>